<accession>P12931</accession>
<accession>E1P5V4</accession>
<accession>Q76P87</accession>
<accession>Q86VB9</accession>
<accession>Q9H5A8</accession>
<comment type="function">
    <text evidence="2 3 13 16 18 24 26 33 36 37 40 41 44 45 48 53 54 60 61 65 68 69 76 77 78">Non-receptor protein tyrosine kinase which is activated following engagement of many different classes of cellular receptors including immune response receptors, integrins and other adhesion receptors, receptor protein tyrosine kinases, G protein-coupled receptors as well as cytokine receptors (PubMed:34234773). Participates in signaling pathways that control a diverse spectrum of biological activities including gene transcription, immune response, cell adhesion, cell cycle progression, apoptosis, migration, and transformation. Due to functional redundancy between members of the SRC kinase family, identification of the specific role of each SRC kinase is very difficult. SRC appears to be one of the primary kinases activated following engagement of receptors and plays a role in the activation of other protein tyrosine kinase (PTK) families. Receptor clustering or dimerization leads to recruitment of SRC to the receptor complexes where it phosphorylates the tyrosine residues within the receptor cytoplasmic domains. Plays an important role in the regulation of cytoskeletal organization through phosphorylation of specific substrates such as AFAP1. Phosphorylation of AFAP1 allows the SRC SH2 domain to bind AFAP1 and to localize to actin filaments. Cytoskeletal reorganization is also controlled through the phosphorylation of cortactin (CTTN) (Probable). When cells adhere via focal adhesions to the extracellular matrix, signals are transmitted by integrins into the cell resulting in tyrosine phosphorylation of a number of focal adhesion proteins, including PTK2/FAK1 and paxillin (PXN) (PubMed:21411625). In addition to phosphorylating focal adhesion proteins, SRC is also active at the sites of cell-cell contact adherens junctions and phosphorylates substrates such as beta-catenin (CTNNB1), delta-catenin (CTNND1), and plakoglobin (JUP). Another type of cell-cell junction, the gap junction, is also a target for SRC, which phosphorylates connexin-43 (GJA1). SRC is implicated in regulation of pre-mRNA-processing and phosphorylates RNA-binding proteins such as KHDRBS1 (Probable). Phosphorylates PKP3 at 'Tyr-195' in response to reactive oxygen species, which may cause the release of PKP3 from desmosome cell junctions into the cytoplasm (PubMed:25501895). Also plays a role in PDGF-mediated tyrosine phosphorylation of both STAT1 and STAT3, leading to increased DNA binding activity of these transcription factors (By similarity). Involved in the RAS pathway through phosphorylation of RASA1 and RASGRF1 (PubMed:11389730). Plays a role in EGF-mediated calcium-activated chloride channel activation (PubMed:18586953). Required for epidermal growth factor receptor (EGFR) internalization through phosphorylation of clathrin heavy chain (CLTC and CLTCL1) at 'Tyr-1477'. Involved in beta-arrestin (ARRB1 and ARRB2) desensitization through phosphorylation and activation of GRK2, leading to beta-arrestin phosphorylation and internalization. Has a critical role in the stimulation of the CDK20/MAPK3 mitogen-activated protein kinase cascade by epidermal growth factor (Probable). Might be involved not only in mediating the transduction of mitogenic signals at the level of the plasma membrane but also in controlling progression through the cell cycle via interaction with regulatory proteins in the nucleus (PubMed:7853507). Plays an important role in osteoclastic bone resorption in conjunction with PTK2B/PYK2. Both the formation of a SRC-PTK2B/PYK2 complex and SRC kinase activity are necessary for this function. Recruited to activated integrins by PTK2B/PYK2, thereby phosphorylating CBL, which in turn induces the activation and recruitment of phosphatidylinositol 3-kinase to the cell membrane in a signaling pathway that is critical for osteoclast function (PubMed:14585963, PubMed:8755529). Promotes energy production in osteoclasts by activating mitochondrial cytochrome C oxidase (PubMed:12615910). Phosphorylates DDR2 on tyrosine residues, thereby promoting its subsequent autophosphorylation (PubMed:16186108). Phosphorylates RUNX3 and COX2 on tyrosine residues, TNK2 on 'Tyr-284' and CBL on 'Tyr-731' (PubMed:20100835, PubMed:21309750). Enhances RIGI-elicited antiviral signaling (PubMed:19419966). Phosphorylates PDPK1 at 'Tyr-9', 'Tyr-373' and 'Tyr-376' (PubMed:14585963). Phosphorylates BCAR1 at 'Tyr-128' (PubMed:22710723). Phosphorylates CBLC at multiple tyrosine residues, phosphorylation at 'Tyr-341' activates CBLC E3 activity (PubMed:20525694). Phosphorylates synaptic vesicle protein synaptophysin (SYP) (By similarity). Involved in anchorage-independent cell growth (PubMed:19307596). Required for podosome formation (By similarity). Mediates IL6 signaling by activating YAP1-NOTCH pathway to induce inflammation-induced epithelial regeneration (PubMed:25731159). Phosphorylates OTUB1, promoting deubiquitination of RPTOR (PubMed:35927303). Phosphorylates caspase CASP8 at 'Tyr-380' which negatively regulates CASP8 processing and activation, down-regulating CASP8 proapoptotic function (PubMed:16619028).</text>
</comment>
<comment type="function">
    <molecule>Isoform 1</molecule>
    <text evidence="3">Non-receptor protein tyrosine kinase which phosphorylates synaptophysin with high affinity.</text>
</comment>
<comment type="function">
    <molecule>Isoform 2</molecule>
    <text evidence="3">Non-receptor protein tyrosine kinase which shows higher basal kinase activity than isoform 1, possibly due to weakened intramolecular interactions which enhance autophosphorylation of Tyr-419 and subsequent activation (By similarity). The SH3 domain shows reduced affinity with the linker sequence between the SH2 and kinase domains which may account for the increased basal activity (By similarity). Displays altered substrate specificity compared to isoform 1, showing weak affinity for synaptophysin and for peptide substrates containing class I or class II SH3 domain-binding motifs (By similarity). Plays a role in L1CAM-mediated neurite elongation, possibly by acting downstream of L1CAM to drive cytoskeletal rearrangements involved in neurite outgrowth (By similarity).</text>
</comment>
<comment type="function">
    <molecule>Isoform 3</molecule>
    <text evidence="3">Non-receptor protein tyrosine kinase which shows higher basal kinase activity than isoform 1, possibly due to weakened intramolecular interactions which enhance autophosphorylation of Tyr-419 and subsequent activation (By similarity). The SH3 domain shows reduced affinity with the linker sequence between the SH2 and kinase domains which may account for the increased basal activity (By similarity). Displays altered substrate specificity compared to isoform 1, showing weak affinity for synaptophysin and for peptide substrates containing class I or class II SH3 domain-binding motifs (By similarity). Plays a role in neurite elongation (By similarity).</text>
</comment>
<comment type="catalytic activity">
    <reaction evidence="7 19 36 43 53 60 61 66 69 70">
        <text>L-tyrosyl-[protein] + ATP = O-phospho-L-tyrosyl-[protein] + ADP + H(+)</text>
        <dbReference type="Rhea" id="RHEA:10596"/>
        <dbReference type="Rhea" id="RHEA-COMP:10136"/>
        <dbReference type="Rhea" id="RHEA-COMP:20101"/>
        <dbReference type="ChEBI" id="CHEBI:15378"/>
        <dbReference type="ChEBI" id="CHEBI:30616"/>
        <dbReference type="ChEBI" id="CHEBI:46858"/>
        <dbReference type="ChEBI" id="CHEBI:61978"/>
        <dbReference type="ChEBI" id="CHEBI:456216"/>
        <dbReference type="EC" id="2.7.10.2"/>
    </reaction>
</comment>
<comment type="catalytic activity">
    <molecule>Isoform 1</molecule>
    <reaction evidence="3">
        <text>L-tyrosyl-[protein] + ATP = O-phospho-L-tyrosyl-[protein] + ADP + H(+)</text>
        <dbReference type="Rhea" id="RHEA:10596"/>
        <dbReference type="Rhea" id="RHEA-COMP:10136"/>
        <dbReference type="Rhea" id="RHEA-COMP:20101"/>
        <dbReference type="ChEBI" id="CHEBI:15378"/>
        <dbReference type="ChEBI" id="CHEBI:30616"/>
        <dbReference type="ChEBI" id="CHEBI:46858"/>
        <dbReference type="ChEBI" id="CHEBI:61978"/>
        <dbReference type="ChEBI" id="CHEBI:456216"/>
        <dbReference type="EC" id="2.7.10.2"/>
    </reaction>
</comment>
<comment type="catalytic activity">
    <molecule>Isoform 2</molecule>
    <reaction evidence="3">
        <text>L-tyrosyl-[protein] + ATP = O-phospho-L-tyrosyl-[protein] + ADP + H(+)</text>
        <dbReference type="Rhea" id="RHEA:10596"/>
        <dbReference type="Rhea" id="RHEA-COMP:10136"/>
        <dbReference type="Rhea" id="RHEA-COMP:20101"/>
        <dbReference type="ChEBI" id="CHEBI:15378"/>
        <dbReference type="ChEBI" id="CHEBI:30616"/>
        <dbReference type="ChEBI" id="CHEBI:46858"/>
        <dbReference type="ChEBI" id="CHEBI:61978"/>
        <dbReference type="ChEBI" id="CHEBI:456216"/>
        <dbReference type="EC" id="2.7.10.2"/>
    </reaction>
</comment>
<comment type="catalytic activity">
    <molecule>Isoform 3</molecule>
    <reaction evidence="3">
        <text>L-tyrosyl-[protein] + ATP = O-phospho-L-tyrosyl-[protein] + ADP + H(+)</text>
        <dbReference type="Rhea" id="RHEA:10596"/>
        <dbReference type="Rhea" id="RHEA-COMP:10136"/>
        <dbReference type="Rhea" id="RHEA-COMP:20101"/>
        <dbReference type="ChEBI" id="CHEBI:15378"/>
        <dbReference type="ChEBI" id="CHEBI:30616"/>
        <dbReference type="ChEBI" id="CHEBI:46858"/>
        <dbReference type="ChEBI" id="CHEBI:61978"/>
        <dbReference type="ChEBI" id="CHEBI:456216"/>
        <dbReference type="EC" id="2.7.10.2"/>
    </reaction>
</comment>
<comment type="activity regulation">
    <text evidence="19 43 66 69 70">Phosphorylation by CSK at Tyr-530 inhibits kinase activity. Inhibitory phosphorylation at Tyr-530 is enhanced by heme. Further phosphorylation by CDK1 partially reactivates CSK-inactivated SRC and facilitates complete reactivation by protein tyrosine phosphatase PTPRC. Integrin engagement stimulates kinase activity. Phosphorylation by PTK2/FAK1 enhances kinase activity. Butein and pseudosubstrate-based peptide inhibitors like CIYKYYF act as inhibitors. Phosphorylation at Tyr-419 increases kinase activity.</text>
</comment>
<comment type="subunit">
    <text evidence="2 3 9 10 11 12 15 17 18 20 21 22 23 25 28 29 31 32 34 36 37 38 39 40 42 44 45 49 50 51 54 56 59 63 69 71 72">Part of a complex comprised of PTPRA, BCAR1, BCAR3 (via SH2 domain) and SRC; the formation of the complex is dependent on integrin mediated-tyrosine phosphorylation of PTPRA (PubMed:22801373). Interacts with DDEF1/ASAP1; via the SH3 domain (By similarity). Interacts with CCPG1 (By similarity). Identified in a complex containing FGFR4, NCAM1, CDH2, PLCG1, FRS2, SRC, SHC1, GAP43 and CTTN (By similarity). Interacts with ERBB2, STAT1 and PNN (By similarity). Interacts with DDR1, DDR2 and DAB2 (By similarity). Interacts with CDCP1, TGFB1I1 and TOM1L2 (PubMed:15851033, PubMed:16479011, PubMed:17202804). Interacts with the cytoplasmic domain of MUC1, phosphorylates it and increases binding of MUC1 with beta-catenin (PubMed:11152665). Interacts with RALGPS1; via the SH3 domain (PubMed:10747847). Interacts with CAV2 (tyrosine phosphorylated form) (PubMed:12091389, PubMed:15504032). Interacts (via the SH3 domain and the protein kinase domain) with ARRB1; the interaction is independent of the phosphorylation state of SRC C-terminus (By similarity). Interacts with ARRB1 and ARRB2 (PubMed:10753943, PubMed:9924018). Interacts with SRCIN1 (PubMed:17525734). Interacts with NDFIP2 and more weakly with NDFIP1 (PubMed:20534535). Interacts with PIK3CA and/or PIK3C2B, PTK2/FAK1 and ESR1 (dimethylated on arginine) (PubMed:18657504, PubMed:21411625). Interacts with FASLG (PubMed:19807924). Interacts (via SH2 domain) with the 'Tyr-402' phosphorylated form of PTK2B/PYK2 (PubMed:14585963). Interacts (via SH2 domain) with FLT3 (tyrosine phosphorylated) (By similarity). Interacts with PDGFRA (tyrosine phosphorylated) (By similarity). Interacts with CSF1R (By similarity). Interacts (via SH2 and SH3 domain) with TNK2 (PubMed:21309750). Interacts (via protein kinase domain) with the tyrosine phosphorylated form of RUNX3 (via runt domain) (PubMed:20100835). Interacts with TRAF3 (via RING-type zinc finger domain) (PubMed:19419966). Interacts with RIGI, MAVS and TBK1 (PubMed:19419966). Interacts (via SH2 domain) with RACK1; the interaction is enhanced by tyrosine phosphorylation of RACK1 and inhibits SRC activity (PubMed:11279199, PubMed:9584165). Interacts with EPHB1; activates the MAPK/ERK cascade to regulate cell migration (PubMed:12925710). Interacts with FCAMR (PubMed:8759729). Interacts (via SH2 domain) with the 'Tyr-9' phosphorylated form of PDPK1 (PubMed:18024423). Interacts with AMOTL2; this interaction regulates the translocation of phosphorylated SRC to peripheral cell-matrix adhesion sites (PubMed:17293535). Interacts with TRAP1 (PubMed:23564345). Interacts with CBLC; the interaction is enhanced when SRC is phosphorylated at Tyr-419 (PubMed:14661060, PubMed:22888118). Interacts with ARHGEF5 (By similarity). Interacts (via cytoplasmic domain) with CEACAM1 (via SH2 domain); this interaction is regulated by trans-homophilic cell adhesion (PubMed:7478590). Interacts with MPP2 (PubMed:19665017). Interacts with PRR7 (PubMed:21460222). Interacts (via kinase domain and to a lesser extent the SH2 domain) directly with PDLIM4; this interaction results in PTPN13-mediated dephosphorylation of this protein leading to its inactivation (PubMed:19307596). Interacts with P85 (PIK3R1 or PIK3R2) (PubMed:28903391). Interacts with HNRNPA2B1 (PubMed:31320558). Interacts with IL6ST/gp130 (PubMed:25731159). Interacts (via SH3 domain) with PELP1 in the presence of 17-beta-estradiol. Interacts with AMBRA1 (By similarity).</text>
</comment>
<comment type="subunit">
    <text evidence="14">(Microbial infection) Interacts with HEV ORF3 protein; via the SH3 domain.</text>
</comment>
<comment type="subunit">
    <text evidence="57">(Microbial infection) Interacts (via SH2 domain) with HCV non-structural protein 5A (via N-terminus).</text>
</comment>
<comment type="interaction">
    <interactant intactId="EBI-621482">
        <id>P12931</id>
    </interactant>
    <interactant intactId="EBI-375543">
        <id>P00519</id>
        <label>ABL1</label>
    </interactant>
    <organismsDiffer>false</organismsDiffer>
    <experiments>2</experiments>
</comment>
<comment type="interaction">
    <interactant intactId="EBI-621482">
        <id>P12931</id>
    </interactant>
    <interactant intactId="EBI-1102694">
        <id>P42684</id>
        <label>ABL2</label>
    </interactant>
    <organismsDiffer>false</organismsDiffer>
    <experiments>2</experiments>
</comment>
<comment type="interaction">
    <interactant intactId="EBI-621482">
        <id>P12931</id>
    </interactant>
    <interactant intactId="EBI-351710">
        <id>P12814</id>
        <label>ACTN1</label>
    </interactant>
    <organismsDiffer>false</organismsDiffer>
    <experiments>2</experiments>
</comment>
<comment type="interaction">
    <interactant intactId="EBI-621482">
        <id>P12931</id>
    </interactant>
    <interactant intactId="EBI-1536151">
        <id>O14672</id>
        <label>ADAM10</label>
    </interactant>
    <organismsDiffer>false</organismsDiffer>
    <experiments>3</experiments>
</comment>
<comment type="interaction">
    <interactant intactId="EBI-621482">
        <id>P12931</id>
    </interactant>
    <interactant intactId="EBI-2625825">
        <id>O43184</id>
        <label>ADAM12</label>
    </interactant>
    <organismsDiffer>false</organismsDiffer>
    <experiments>2</experiments>
</comment>
<comment type="interaction">
    <interactant intactId="EBI-621482">
        <id>P12931</id>
    </interactant>
    <interactant intactId="EBI-77818">
        <id>Q13444</id>
        <label>ADAM15</label>
    </interactant>
    <organismsDiffer>false</organismsDiffer>
    <experiments>4</experiments>
</comment>
<comment type="interaction">
    <interactant intactId="EBI-621482">
        <id>P12931</id>
    </interactant>
    <interactant intactId="EBI-491169">
        <id>P07550</id>
        <label>ADRB2</label>
    </interactant>
    <organismsDiffer>false</organismsDiffer>
    <experiments>3</experiments>
</comment>
<comment type="interaction">
    <interactant intactId="EBI-621482">
        <id>P12931</id>
    </interactant>
    <interactant intactId="EBI-365875">
        <id>P55196</id>
        <label>AFDN</label>
    </interactant>
    <organismsDiffer>false</organismsDiffer>
    <experiments>7</experiments>
</comment>
<comment type="interaction">
    <interactant intactId="EBI-621482">
        <id>P12931</id>
    </interactant>
    <interactant intactId="EBI-608057">
        <id>P10275</id>
        <label>AR</label>
    </interactant>
    <organismsDiffer>false</organismsDiffer>
    <experiments>7</experiments>
</comment>
<comment type="interaction">
    <interactant intactId="EBI-621482">
        <id>P12931</id>
    </interactant>
    <interactant intactId="EBI-743313">
        <id>P49407</id>
        <label>ARRB1</label>
    </interactant>
    <organismsDiffer>false</organismsDiffer>
    <experiments>3</experiments>
</comment>
<comment type="interaction">
    <interactant intactId="EBI-621482">
        <id>P12931</id>
    </interactant>
    <interactant intactId="EBI-714559">
        <id>P32121</id>
        <label>ARRB2</label>
    </interactant>
    <organismsDiffer>false</organismsDiffer>
    <experiments>2</experiments>
</comment>
<comment type="interaction">
    <interactant intactId="EBI-621482">
        <id>P12931</id>
    </interactant>
    <interactant intactId="EBI-346622">
        <id>Q9ULH1</id>
        <label>ASAP1</label>
    </interactant>
    <organismsDiffer>false</organismsDiffer>
    <experiments>3</experiments>
</comment>
<comment type="interaction">
    <interactant intactId="EBI-621482">
        <id>P12931</id>
    </interactant>
    <interactant intactId="EBI-10254793">
        <id>Q6XD76</id>
        <label>ASCL4</label>
    </interactant>
    <organismsDiffer>false</organismsDiffer>
    <experiments>3</experiments>
</comment>
<comment type="interaction">
    <interactant intactId="EBI-621482">
        <id>P12931</id>
    </interactant>
    <interactant intactId="EBI-702093">
        <id>P56945</id>
        <label>BCAR1</label>
    </interactant>
    <organismsDiffer>false</organismsDiffer>
    <experiments>3</experiments>
</comment>
<comment type="interaction">
    <interactant intactId="EBI-621482">
        <id>P12931</id>
    </interactant>
    <interactant intactId="EBI-949378">
        <id>Q14457</id>
        <label>BECN1</label>
    </interactant>
    <organismsDiffer>false</organismsDiffer>
    <experiments>3</experiments>
</comment>
<comment type="interaction">
    <interactant intactId="EBI-621482">
        <id>P12931</id>
    </interactant>
    <interactant intactId="EBI-518228">
        <id>P22681</id>
        <label>CBL</label>
    </interactant>
    <organismsDiffer>false</organismsDiffer>
    <experiments>8</experiments>
</comment>
<comment type="interaction">
    <interactant intactId="EBI-621482">
        <id>P12931</id>
    </interactant>
    <interactant intactId="EBI-295634">
        <id>Q16543</id>
        <label>CDC37</label>
    </interactant>
    <organismsDiffer>false</organismsDiffer>
    <experiments>6</experiments>
</comment>
<comment type="interaction">
    <interactant intactId="EBI-621482">
        <id>P12931</id>
    </interactant>
    <interactant intactId="EBI-1019736">
        <id>Q9H5V8</id>
        <label>CDCP1</label>
    </interactant>
    <organismsDiffer>false</organismsDiffer>
    <experiments>3</experiments>
</comment>
<comment type="interaction">
    <interactant intactId="EBI-621482">
        <id>P12931</id>
    </interactant>
    <interactant intactId="EBI-727477">
        <id>P12830</id>
        <label>CDH1</label>
    </interactant>
    <organismsDiffer>false</organismsDiffer>
    <experiments>2</experiments>
</comment>
<comment type="interaction">
    <interactant intactId="EBI-621482">
        <id>P12931</id>
    </interactant>
    <interactant intactId="EBI-347804">
        <id>P68400</id>
        <label>CSNK2A1</label>
    </interactant>
    <organismsDiffer>false</organismsDiffer>
    <experiments>2</experiments>
</comment>
<comment type="interaction">
    <interactant intactId="EBI-621482">
        <id>P12931</id>
    </interactant>
    <interactant intactId="EBI-491549">
        <id>P35222</id>
        <label>CTNNB1</label>
    </interactant>
    <organismsDiffer>false</organismsDiffer>
    <experiments>2</experiments>
</comment>
<comment type="interaction">
    <interactant intactId="EBI-621482">
        <id>P12931</id>
    </interactant>
    <interactant intactId="EBI-297353">
        <id>P00533</id>
        <label>EGFR</label>
    </interactant>
    <organismsDiffer>false</organismsDiffer>
    <experiments>9</experiments>
</comment>
<comment type="interaction">
    <interactant intactId="EBI-621482">
        <id>P12931</id>
    </interactant>
    <interactant intactId="EBI-641062">
        <id>P04626</id>
        <label>ERBB2</label>
    </interactant>
    <organismsDiffer>false</organismsDiffer>
    <experiments>11</experiments>
</comment>
<comment type="interaction">
    <interactant intactId="EBI-621482">
        <id>P12931</id>
    </interactant>
    <interactant intactId="EBI-720706">
        <id>P21860</id>
        <label>ERBB3</label>
    </interactant>
    <organismsDiffer>false</organismsDiffer>
    <experiments>2</experiments>
</comment>
<comment type="interaction">
    <interactant intactId="EBI-621482">
        <id>P12931</id>
    </interactant>
    <interactant intactId="EBI-78473">
        <id>P03372</id>
        <label>ESR1</label>
    </interactant>
    <organismsDiffer>false</organismsDiffer>
    <experiments>12</experiments>
</comment>
<comment type="interaction">
    <interactant intactId="EBI-621482">
        <id>P12931</id>
    </interactant>
    <interactant intactId="EBI-4309277">
        <id>P03372-4</id>
        <label>ESR1</label>
    </interactant>
    <organismsDiffer>false</organismsDiffer>
    <experiments>2</experiments>
</comment>
<comment type="interaction">
    <interactant intactId="EBI-621482">
        <id>P12931</id>
    </interactant>
    <interactant intactId="EBI-913224">
        <id>P14921-1</id>
        <label>ETS1</label>
    </interactant>
    <organismsDiffer>false</organismsDiffer>
    <experiments>2</experiments>
</comment>
<comment type="interaction">
    <interactant intactId="EBI-621482">
        <id>P12931</id>
    </interactant>
    <interactant intactId="EBI-494743">
        <id>P25445</id>
        <label>FAS</label>
    </interactant>
    <organismsDiffer>false</organismsDiffer>
    <experiments>2</experiments>
</comment>
<comment type="interaction">
    <interactant intactId="EBI-621482">
        <id>P12931</id>
    </interactant>
    <interactant intactId="EBI-724767">
        <id>Q8NFZ0</id>
        <label>FBH1</label>
    </interactant>
    <organismsDiffer>false</organismsDiffer>
    <experiments>4</experiments>
</comment>
<comment type="interaction">
    <interactant intactId="EBI-621482">
        <id>P12931</id>
    </interactant>
    <interactant intactId="EBI-515315">
        <id>P06241</id>
        <label>FYN</label>
    </interactant>
    <organismsDiffer>false</organismsDiffer>
    <experiments>5</experiments>
</comment>
<comment type="interaction">
    <interactant intactId="EBI-621482">
        <id>P12931</id>
    </interactant>
    <interactant intactId="EBI-517684">
        <id>Q13480</id>
        <label>GAB1</label>
    </interactant>
    <organismsDiffer>false</organismsDiffer>
    <experiments>12</experiments>
</comment>
<comment type="interaction">
    <interactant intactId="EBI-621482">
        <id>P12931</id>
    </interactant>
    <interactant intactId="EBI-12353035">
        <id>Q13322-4</id>
        <label>GRB10</label>
    </interactant>
    <organismsDiffer>false</organismsDiffer>
    <experiments>3</experiments>
</comment>
<comment type="interaction">
    <interactant intactId="EBI-621482">
        <id>P12931</id>
    </interactant>
    <interactant intactId="EBI-713162">
        <id>P19367</id>
        <label>HK1</label>
    </interactant>
    <organismsDiffer>false</organismsDiffer>
    <experiments>2</experiments>
</comment>
<comment type="interaction">
    <interactant intactId="EBI-621482">
        <id>P12931</id>
    </interactant>
    <interactant intactId="EBI-304185">
        <id>P61978</id>
        <label>HNRNPK</label>
    </interactant>
    <organismsDiffer>false</organismsDiffer>
    <experiments>6</experiments>
</comment>
<comment type="interaction">
    <interactant intactId="EBI-621482">
        <id>P12931</id>
    </interactant>
    <interactant intactId="EBI-296047">
        <id>P07900</id>
        <label>HSP90AA1</label>
    </interactant>
    <organismsDiffer>false</organismsDiffer>
    <experiments>3</experiments>
</comment>
<comment type="interaction">
    <interactant intactId="EBI-621482">
        <id>P12931</id>
    </interactant>
    <interactant intactId="EBI-81279">
        <id>Q9Y6K9</id>
        <label>IKBKG</label>
    </interactant>
    <organismsDiffer>false</organismsDiffer>
    <experiments>3</experiments>
</comment>
<comment type="interaction">
    <interactant intactId="EBI-621482">
        <id>P12931</id>
    </interactant>
    <interactant intactId="EBI-1005487">
        <id>P35968</id>
        <label>KDR</label>
    </interactant>
    <organismsDiffer>false</organismsDiffer>
    <experiments>6</experiments>
</comment>
<comment type="interaction">
    <interactant intactId="EBI-621482">
        <id>P12931</id>
    </interactant>
    <interactant intactId="EBI-1364">
        <id>Q07666</id>
        <label>KHDRBS1</label>
    </interactant>
    <organismsDiffer>false</organismsDiffer>
    <experiments>3</experiments>
</comment>
<comment type="interaction">
    <interactant intactId="EBI-621482">
        <id>P12931</id>
    </interactant>
    <interactant intactId="EBI-1379503">
        <id>P10721</id>
        <label>KIT</label>
    </interactant>
    <organismsDiffer>false</organismsDiffer>
    <experiments>5</experiments>
</comment>
<comment type="interaction">
    <interactant intactId="EBI-621482">
        <id>P12931</id>
    </interactant>
    <interactant intactId="EBI-2796400">
        <id>Q9UIH9</id>
        <label>KLF15</label>
    </interactant>
    <organismsDiffer>false</organismsDiffer>
    <experiments>3</experiments>
</comment>
<comment type="interaction">
    <interactant intactId="EBI-621482">
        <id>P12931</id>
    </interactant>
    <interactant intactId="EBI-739832">
        <id>Q8TBB1</id>
        <label>LNX1</label>
    </interactant>
    <organismsDiffer>false</organismsDiffer>
    <experiments>6</experiments>
</comment>
<comment type="interaction">
    <interactant intactId="EBI-621482">
        <id>P12931</id>
    </interactant>
    <interactant intactId="EBI-5278370">
        <id>Q14693</id>
        <label>LPIN1</label>
    </interactant>
    <organismsDiffer>false</organismsDiffer>
    <experiments>3</experiments>
</comment>
<comment type="interaction">
    <interactant intactId="EBI-621482">
        <id>P12931</id>
    </interactant>
    <interactant intactId="EBI-79452">
        <id>P07948</id>
        <label>LYN</label>
    </interactant>
    <organismsDiffer>false</organismsDiffer>
    <experiments>4</experiments>
</comment>
<comment type="interaction">
    <interactant intactId="EBI-621482">
        <id>P12931</id>
    </interactant>
    <interactant intactId="EBI-514199">
        <id>Q9H204</id>
        <label>MED28</label>
    </interactant>
    <organismsDiffer>false</organismsDiffer>
    <experiments>3</experiments>
</comment>
<comment type="interaction">
    <interactant intactId="EBI-621482">
        <id>P12931</id>
    </interactant>
    <interactant intactId="EBI-1039152">
        <id>P08581</id>
        <label>MET</label>
    </interactant>
    <organismsDiffer>false</organismsDiffer>
    <experiments>7</experiments>
</comment>
<comment type="interaction">
    <interactant intactId="EBI-621482">
        <id>P12931</id>
    </interactant>
    <interactant intactId="EBI-1045887">
        <id>Q13177</id>
        <label>PAK2</label>
    </interactant>
    <organismsDiffer>false</organismsDiffer>
    <experiments>2</experiments>
</comment>
<comment type="interaction">
    <interactant intactId="EBI-621482">
        <id>P12931</id>
    </interactant>
    <interactant intactId="EBI-716404">
        <id>P16284</id>
        <label>PECAM1</label>
    </interactant>
    <organismsDiffer>false</organismsDiffer>
    <experiments>3</experiments>
</comment>
<comment type="interaction">
    <interactant intactId="EBI-621482">
        <id>P12931</id>
    </interactant>
    <interactant intactId="EBI-79464">
        <id>P27986</id>
        <label>PIK3R1</label>
    </interactant>
    <organismsDiffer>false</organismsDiffer>
    <experiments>7</experiments>
</comment>
<comment type="interaction">
    <interactant intactId="EBI-621482">
        <id>P12931</id>
    </interactant>
    <interactant intactId="EBI-9090282">
        <id>P27986-2</id>
        <label>PIK3R1</label>
    </interactant>
    <organismsDiffer>false</organismsDiffer>
    <experiments>3</experiments>
</comment>
<comment type="interaction">
    <interactant intactId="EBI-621482">
        <id>P12931</id>
    </interactant>
    <interactant intactId="EBI-79893">
        <id>Q92569</id>
        <label>PIK3R3</label>
    </interactant>
    <organismsDiffer>false</organismsDiffer>
    <experiments>3</experiments>
</comment>
<comment type="interaction">
    <interactant intactId="EBI-621482">
        <id>P12931</id>
    </interactant>
    <interactant intactId="EBI-702142">
        <id>Q05397</id>
        <label>PTK2</label>
    </interactant>
    <organismsDiffer>false</organismsDiffer>
    <experiments>9</experiments>
</comment>
<comment type="interaction">
    <interactant intactId="EBI-621482">
        <id>P12931</id>
    </interactant>
    <interactant intactId="EBI-298640">
        <id>Q14289</id>
        <label>PTK2B</label>
    </interactant>
    <organismsDiffer>false</organismsDiffer>
    <experiments>3</experiments>
</comment>
<comment type="interaction">
    <interactant intactId="EBI-621482">
        <id>P12931</id>
    </interactant>
    <interactant intactId="EBI-968788">
        <id>P18031</id>
        <label>PTPN1</label>
    </interactant>
    <organismsDiffer>false</organismsDiffer>
    <experiments>14</experiments>
</comment>
<comment type="interaction">
    <interactant intactId="EBI-621482">
        <id>P12931</id>
    </interactant>
    <interactant intactId="EBI-2860264">
        <id>Q16825</id>
        <label>PTPN21</label>
    </interactant>
    <organismsDiffer>false</organismsDiffer>
    <experiments>2</experiments>
</comment>
<comment type="interaction">
    <interactant intactId="EBI-621482">
        <id>P12931</id>
    </interactant>
    <interactant intactId="EBI-2609645">
        <id>P18433</id>
        <label>PTPRA</label>
    </interactant>
    <organismsDiffer>false</organismsDiffer>
    <experiments>5</experiments>
</comment>
<comment type="interaction">
    <interactant intactId="EBI-621482">
        <id>P12931</id>
    </interactant>
    <interactant intactId="EBI-722234">
        <id>Q15907</id>
        <label>RAB11B</label>
    </interactant>
    <organismsDiffer>false</organismsDiffer>
    <experiments>3</experiments>
</comment>
<comment type="interaction">
    <interactant intactId="EBI-621482">
        <id>P12931</id>
    </interactant>
    <interactant intactId="EBI-976876">
        <id>Q13905</id>
        <label>RAPGEF1</label>
    </interactant>
    <organismsDiffer>false</organismsDiffer>
    <experiments>2</experiments>
</comment>
<comment type="interaction">
    <interactant intactId="EBI-621482">
        <id>P12931</id>
    </interactant>
    <interactant intactId="EBI-6082337">
        <id>Q01973</id>
        <label>ROR1</label>
    </interactant>
    <organismsDiffer>false</organismsDiffer>
    <experiments>9</experiments>
</comment>
<comment type="interaction">
    <interactant intactId="EBI-621482">
        <id>P12931</id>
    </interactant>
    <interactant intactId="EBI-352398">
        <id>P27635</id>
        <label>RPL10</label>
    </interactant>
    <organismsDiffer>false</organismsDiffer>
    <experiments>6</experiments>
</comment>
<comment type="interaction">
    <interactant intactId="EBI-621482">
        <id>P12931</id>
    </interactant>
    <interactant intactId="EBI-727004">
        <id>O00560</id>
        <label>SDCBP</label>
    </interactant>
    <organismsDiffer>false</organismsDiffer>
    <experiments>2</experiments>
</comment>
<comment type="interaction">
    <interactant intactId="EBI-621482">
        <id>P12931</id>
    </interactant>
    <interactant intactId="EBI-6983382">
        <id>O60880</id>
        <label>SH2D1A</label>
    </interactant>
    <organismsDiffer>false</organismsDiffer>
    <experiments>3</experiments>
</comment>
<comment type="interaction">
    <interactant intactId="EBI-621482">
        <id>P12931</id>
    </interactant>
    <interactant intactId="EBI-3923013">
        <id>O14796</id>
        <label>SH2D1B</label>
    </interactant>
    <organismsDiffer>false</organismsDiffer>
    <experiments>3</experiments>
</comment>
<comment type="interaction">
    <interactant intactId="EBI-621482">
        <id>P12931</id>
    </interactant>
    <interactant intactId="EBI-1047940">
        <id>P35326</id>
        <label>SPRR2A</label>
    </interactant>
    <organismsDiffer>false</organismsDiffer>
    <experiments>3</experiments>
</comment>
<comment type="interaction">
    <interactant intactId="EBI-621482">
        <id>P12931</id>
    </interactant>
    <interactant intactId="EBI-1393949">
        <id>Q9C0H9</id>
        <label>SRCIN1</label>
    </interactant>
    <organismsDiffer>false</organismsDiffer>
    <experiments>3</experiments>
</comment>
<comment type="interaction">
    <interactant intactId="EBI-621482">
        <id>P12931</id>
    </interactant>
    <interactant intactId="EBI-2505861">
        <id>Q13829</id>
        <label>TNFAIP1</label>
    </interactant>
    <organismsDiffer>false</organismsDiffer>
    <experiments>3</experiments>
</comment>
<comment type="interaction">
    <interactant intactId="EBI-621482">
        <id>P12931</id>
    </interactant>
    <interactant intactId="EBI-1220488">
        <id>Q68CZ2</id>
        <label>TNS3</label>
    </interactant>
    <organismsDiffer>false</organismsDiffer>
    <experiments>13</experiments>
</comment>
<comment type="interaction">
    <interactant intactId="EBI-621482">
        <id>P12931</id>
    </interactant>
    <interactant intactId="EBI-749023">
        <id>Q9UNY5</id>
        <label>ZNF232</label>
    </interactant>
    <organismsDiffer>false</organismsDiffer>
    <experiments>3</experiments>
</comment>
<comment type="interaction">
    <interactant intactId="EBI-621482">
        <id>P12931</id>
    </interactant>
    <interactant intactId="EBI-621463">
        <id>Q8R5G7</id>
        <label>Arap3</label>
    </interactant>
    <organismsDiffer>true</organismsDiffer>
    <experiments>3</experiments>
</comment>
<comment type="interaction">
    <interactant intactId="EBI-621482">
        <id>P12931</id>
    </interactant>
    <interactant intactId="EBI-1032676">
        <id>P52800</id>
        <label>Efnb2</label>
    </interactant>
    <organismsDiffer>true</organismsDiffer>
    <experiments>2</experiments>
</comment>
<comment type="interaction">
    <interactant intactId="EBI-621482">
        <id>P12931</id>
    </interactant>
    <interactant intactId="EBI-7149283">
        <id>P97288</id>
        <label>Htr4</label>
    </interactant>
    <organismsDiffer>true</organismsDiffer>
    <experiments>2</experiments>
</comment>
<comment type="interaction">
    <interactant intactId="EBI-621482">
        <id>P12931</id>
    </interactant>
    <interactant intactId="EBI-77070">
        <id>P34152</id>
        <label>Ptk2</label>
    </interactant>
    <organismsDiffer>true</organismsDiffer>
    <experiments>2</experiments>
</comment>
<comment type="interaction">
    <interactant intactId="EBI-621482">
        <id>P12931</id>
    </interactant>
    <interactant intactId="EBI-6597520">
        <id>P18052</id>
        <label>Ptpra</label>
    </interactant>
    <organismsDiffer>true</organismsDiffer>
    <experiments>3</experiments>
</comment>
<comment type="interaction">
    <interactant intactId="EBI-621482">
        <id>P12931</id>
    </interactant>
    <interactant intactId="EBI-7459400">
        <id>Q62884</id>
        <label>Ptprj</label>
    </interactant>
    <organismsDiffer>true</organismsDiffer>
    <experiments>3</experiments>
</comment>
<comment type="subcellular location">
    <subcellularLocation>
        <location evidence="64">Cell membrane</location>
        <topology evidence="49">Lipid-anchor</topology>
    </subcellularLocation>
    <subcellularLocation>
        <location evidence="16">Mitochondrion inner membrane</location>
    </subcellularLocation>
    <subcellularLocation>
        <location evidence="65">Nucleus</location>
    </subcellularLocation>
    <subcellularLocation>
        <location evidence="64">Cytoplasm</location>
        <location evidence="64">Cytoskeleton</location>
    </subcellularLocation>
    <subcellularLocation>
        <location evidence="36">Cytoplasm</location>
        <location evidence="36">Perinuclear region</location>
    </subcellularLocation>
    <subcellularLocation>
        <location evidence="49">Cell junction</location>
        <location evidence="49">Focal adhesion</location>
    </subcellularLocation>
    <subcellularLocation>
        <location evidence="47">Cell junction</location>
    </subcellularLocation>
    <text evidence="36 49 64">Localizes to focal adhesion sites following integrin engagement (PubMed:22801373). Localization to focal adhesion sites requires myristoylation and the SH3 domain (PubMed:7525268). Colocalizes with PDLIM4 at the perinuclear region, but not at focal adhesions (PubMed:19307596).</text>
</comment>
<comment type="alternative products">
    <event type="alternative splicing"/>
    <isoform>
        <id>P12931-1</id>
        <name>1</name>
        <name evidence="74">c-src</name>
        <sequence type="displayed"/>
    </isoform>
    <isoform>
        <id>P12931-2</id>
        <name>2</name>
        <name evidence="74">c-srcN1</name>
        <name evidence="3">N1-Src</name>
        <sequence type="described" ref="VSP_012134"/>
    </isoform>
    <isoform>
        <id>P12931-3</id>
        <name>3</name>
        <name evidence="74">c-srcN2</name>
        <name evidence="3">N2-Src</name>
        <sequence type="described" ref="VSP_061494"/>
    </isoform>
</comment>
<comment type="tissue specificity">
    <text evidence="47">Expressed ubiquitously. Expressed in the skin (at protein level) (PubMed:22294297). Platelets, neurons and osteoclasts express 5-fold to 200-fold higher levels than most other tissues.</text>
</comment>
<comment type="tissue specificity">
    <molecule>Isoform 1</molecule>
    <text evidence="67">Expressed in spleen and liver.</text>
</comment>
<comment type="tissue specificity">
    <molecule>Isoform 2</molecule>
    <text evidence="67">Expressed in brain.</text>
</comment>
<comment type="tissue specificity">
    <molecule>Isoform 3</molecule>
    <text evidence="67">Expressed in brain.</text>
</comment>
<comment type="developmental stage">
    <molecule>Isoform 1</molecule>
    <text evidence="27">Expressed at higher levels in fetal liver than in adult liver.</text>
</comment>
<comment type="developmental stage">
    <molecule>Isoform 2</molecule>
    <text evidence="27">Expressed at higher levels in fetal brain than in adult brain.</text>
</comment>
<comment type="developmental stage">
    <molecule>Isoform 3</molecule>
    <text evidence="27">Expressed at similar levels in adult and fetal brain.</text>
</comment>
<comment type="domain">
    <text>The SH2 and SH3 domains are important for the intramolecular and intermolecular interactions that regulate catalytic activity, localization, and substrate recruitment.</text>
</comment>
<comment type="PTM">
    <text evidence="64">Myristoylated at Gly-2, and this is essential for targeting to membranes.</text>
</comment>
<comment type="PTM">
    <text evidence="1 20 35 46 50 54 62 64">Dephosphorylated at Tyr-530 by PTPRJ (By similarity). Phosphorylated on Tyr-530 by c-Src kinase (CSK). The phosphorylated form is termed pp60c-src. Dephosphorylated by PTPRJ at Tyr-419. Normally maintained in an inactive conformation with the SH2 domain engaged with Tyr-530, the SH3 domain engaged with the SH2-kinase linker, and Tyr-419 dephosphorylated. Dephosphorylation of Tyr-530 as a result of protein tyrosine phosphatase (PTP) action disrupts the intramolecular interaction between the SH2 domain and Tyr-530, Tyr-419 can then become autophosphorylated, resulting in SRC activation. Phosphorylation of Tyr-530 by CSK allows this interaction to reform, resulting in SRC inactivation. CDK5-mediated phosphorylation at Ser-75 targets SRC to ubiquitin-dependent degradation and thus leads to cytoskeletal reorganization. Phosphorylated by PTK2/FAK1; this enhances kinase activity. Phosphorylated by PTK2B/PYK2; this enhances kinase activity. Upon activation of IL6ST by IL6, Tyr-419 is phosphorylated and Tyr-530 dephosphorylated (PubMed:25731159).</text>
</comment>
<comment type="PTM">
    <molecule>Isoform 1</molecule>
    <text evidence="3">Displays reduced levels of autophosphorylation at Tyr-419 compared to isoforms 2 and 3.</text>
</comment>
<comment type="PTM">
    <molecule>Isoform 2</molecule>
    <text evidence="3">Displays enhanced levels of autophosphorylation at Tyr-419 compared to isoform 1.</text>
</comment>
<comment type="PTM">
    <molecule>Isoform 3</molecule>
    <text evidence="3">Displays enhanced levels of autophosphorylation at Tyr-419 compared to isoform 1 (By similarity). Shows reduced phosphorylation at Tyr-527 compared to isoforms 1 and 2 (By similarity).</text>
</comment>
<comment type="PTM">
    <text evidence="1">S-nitrosylation is important for activation of its kinase activity.</text>
</comment>
<comment type="PTM">
    <text evidence="20 35 50 62">Ubiquitinated in response to CDK5-mediated phosphorylation. Ubiquitination mediated by CBLC requires SRC autophosphorylation at Tyr-419 and may lead to lysosomal degradation.</text>
</comment>
<comment type="disease">
    <text evidence="52 58">SRC kinase activity has been shown to be increased in several tumor tissues and tumor cell lines such as colon carcinoma cells.</text>
</comment>
<comment type="disease" evidence="55">
    <disease id="DI-04719">
        <name>Thrombocytopenia 6</name>
        <acronym>THC6</acronym>
        <description>A form of thrombocytopenia, a hematologic disorder defined by a decrease in the number of platelets in circulating blood, resulting in the potential for increased bleeding and decreased ability for clotting. THC6 is an autosomal dominant form. Affected individuals may also have bone abnormalities and an increased risk for myelofibrosis.</description>
        <dbReference type="MIM" id="616937"/>
    </disease>
    <text>The disease is caused by variants affecting the gene represented in this entry.</text>
</comment>
<comment type="miscellaneous">
    <text evidence="47">May be involved in blister formation in Pemphigus vulgaris, phosphorylated-SRC is abundant at blister sites but not in normally adherent tissue, which corresponds with loss and disruption of CDH1 in cells adjacent to blisters (PubMed:22294297). Phosphorylated SRC is increasingly abundant at pre-lesional sites of blister formation and occurs prior to changes in abundance of CDH1 and DSG3 (PubMed:22294297).</text>
</comment>
<comment type="similarity">
    <text evidence="4">Belongs to the protein kinase superfamily. Tyr protein kinase family. SRC subfamily.</text>
</comment>
<comment type="online information" name="Atlas of Genetics and Cytogenetics in Oncology and Haematology">
    <link uri="https://atlasgeneticsoncology.org/gene/448/SRC"/>
</comment>
<keyword id="KW-0002">3D-structure</keyword>
<keyword id="KW-0025">Alternative splicing</keyword>
<keyword id="KW-0067">ATP-binding</keyword>
<keyword id="KW-0130">Cell adhesion</keyword>
<keyword id="KW-0131">Cell cycle</keyword>
<keyword id="KW-0965">Cell junction</keyword>
<keyword id="KW-1003">Cell membrane</keyword>
<keyword id="KW-0963">Cytoplasm</keyword>
<keyword id="KW-0206">Cytoskeleton</keyword>
<keyword id="KW-0225">Disease variant</keyword>
<keyword id="KW-0945">Host-virus interaction</keyword>
<keyword id="KW-0391">Immunity</keyword>
<keyword id="KW-0418">Kinase</keyword>
<keyword id="KW-0449">Lipoprotein</keyword>
<keyword id="KW-0472">Membrane</keyword>
<keyword id="KW-0496">Mitochondrion</keyword>
<keyword id="KW-0999">Mitochondrion inner membrane</keyword>
<keyword id="KW-0519">Myristate</keyword>
<keyword id="KW-0547">Nucleotide-binding</keyword>
<keyword id="KW-0539">Nucleus</keyword>
<keyword id="KW-0597">Phosphoprotein</keyword>
<keyword id="KW-1267">Proteomics identification</keyword>
<keyword id="KW-0656">Proto-oncogene</keyword>
<keyword id="KW-1185">Reference proteome</keyword>
<keyword id="KW-0727">SH2 domain</keyword>
<keyword id="KW-0728">SH3 domain</keyword>
<keyword id="KW-0808">Transferase</keyword>
<keyword id="KW-0829">Tyrosine-protein kinase</keyword>
<keyword id="KW-0832">Ubl conjugation</keyword>
<feature type="initiator methionine" description="Removed">
    <location>
        <position position="1"/>
    </location>
</feature>
<feature type="chain" id="PRO_0000088141" description="Proto-oncogene tyrosine-protein kinase Src">
    <location>
        <begin position="2"/>
        <end position="536"/>
    </location>
</feature>
<feature type="domain" description="SH3" evidence="6">
    <location>
        <begin position="84"/>
        <end position="145"/>
    </location>
</feature>
<feature type="domain" description="SH2" evidence="5">
    <location>
        <begin position="151"/>
        <end position="248"/>
    </location>
</feature>
<feature type="domain" description="Protein kinase" evidence="4">
    <location>
        <begin position="270"/>
        <end position="523"/>
    </location>
</feature>
<feature type="region of interest" description="Disordered" evidence="8">
    <location>
        <begin position="1"/>
        <end position="53"/>
    </location>
</feature>
<feature type="compositionally biased region" description="Basic and acidic residues" evidence="8">
    <location>
        <begin position="7"/>
        <end position="19"/>
    </location>
</feature>
<feature type="active site" description="Proton acceptor" evidence="4">
    <location>
        <position position="389"/>
    </location>
</feature>
<feature type="binding site">
    <location>
        <begin position="276"/>
        <end position="284"/>
    </location>
    <ligand>
        <name>ATP</name>
        <dbReference type="ChEBI" id="CHEBI:30616"/>
    </ligand>
</feature>
<feature type="binding site">
    <location>
        <position position="298"/>
    </location>
    <ligand>
        <name>ATP</name>
        <dbReference type="ChEBI" id="CHEBI:30616"/>
    </ligand>
</feature>
<feature type="modified residue" description="Phosphoserine" evidence="80 81 82 83">
    <location>
        <position position="17"/>
    </location>
</feature>
<feature type="modified residue" description="Phosphoserine; by CDK5" evidence="46 82">
    <location>
        <position position="75"/>
    </location>
</feature>
<feature type="modified residue" description="Phosphotyrosine" evidence="2">
    <location>
        <position position="187"/>
    </location>
</feature>
<feature type="modified residue" description="Phosphotyrosine; by autocatalysis" evidence="20 35 36 54 55 62">
    <location>
        <position position="419"/>
    </location>
</feature>
<feature type="modified residue" description="Phosphotyrosine; by FAK2" evidence="1">
    <location>
        <position position="419"/>
    </location>
</feature>
<feature type="modified residue" description="Phosphotyrosine; by CSK" evidence="36 55 64 66 81">
    <location>
        <position position="530"/>
    </location>
</feature>
<feature type="lipid moiety-binding region" description="N-myristoyl glycine" evidence="64">
    <location>
        <position position="2"/>
    </location>
</feature>
<feature type="splice variant" id="VSP_012134" description="In isoform 2." evidence="73">
    <original>T</original>
    <variation>TRKVDVR</variation>
    <location>
        <position position="117"/>
    </location>
</feature>
<feature type="splice variant" id="VSP_061494" description="In isoform 3.">
    <original>T</original>
    <variation>TRKVDVSQTWFTFRWLQR</variation>
    <location>
        <position position="117"/>
    </location>
</feature>
<feature type="sequence variant" id="VAR_051699" description="In dbSNP:rs6018260.">
    <original>L</original>
    <variation>F</variation>
    <location>
        <position position="176"/>
    </location>
</feature>
<feature type="sequence variant" id="VAR_041830" description="In dbSNP:rs34881773." evidence="30">
    <original>A</original>
    <variation>T</variation>
    <location>
        <position position="237"/>
    </location>
</feature>
<feature type="sequence variant" id="VAR_076919" description="In THC6; increased protein tyrosine kinase activity; increased autophosphorylation at Y-419; causes defective megakaryopoiesis associated with increased overall tyrosine phosphorylation in megakaryocytes; dbSNP:rs879255268." evidence="55">
    <original>E</original>
    <variation>K</variation>
    <location>
        <position position="527"/>
    </location>
</feature>
<feature type="mutagenesis site" description="Kinase inactive. Abolishes ubiquitination promoted by CBLC." evidence="20">
    <original>K</original>
    <variation>M</variation>
    <location>
        <position position="298"/>
    </location>
</feature>
<feature type="mutagenesis site" description="Kinase active. Interacts with PDLIM4; when associated with E-307 and F-419." evidence="36">
    <original>P</original>
    <variation>E</variation>
    <location>
        <position position="302"/>
    </location>
</feature>
<feature type="mutagenesis site" description="Kinase active. Interacts with PDLIM4; when associated with E-302 and F-419." evidence="36">
    <original>P</original>
    <variation>E</variation>
    <location>
        <position position="307"/>
    </location>
</feature>
<feature type="mutagenesis site" description="Loss of kinase activity. Loss of interaction with PDLIM4." evidence="36">
    <original>Y</original>
    <variation>F</variation>
    <location>
        <position position="419"/>
    </location>
</feature>
<feature type="strand" evidence="84">
    <location>
        <begin position="87"/>
        <end position="93"/>
    </location>
</feature>
<feature type="strand" evidence="84">
    <location>
        <begin position="99"/>
        <end position="102"/>
    </location>
</feature>
<feature type="strand" evidence="84">
    <location>
        <begin position="110"/>
        <end position="114"/>
    </location>
</feature>
<feature type="strand" evidence="84">
    <location>
        <begin position="118"/>
        <end position="126"/>
    </location>
</feature>
<feature type="turn" evidence="84">
    <location>
        <begin position="127"/>
        <end position="129"/>
    </location>
</feature>
<feature type="strand" evidence="84">
    <location>
        <begin position="132"/>
        <end position="136"/>
    </location>
</feature>
<feature type="helix" evidence="84">
    <location>
        <begin position="137"/>
        <end position="139"/>
    </location>
</feature>
<feature type="strand" evidence="84">
    <location>
        <begin position="140"/>
        <end position="142"/>
    </location>
</feature>
<feature type="helix" evidence="84">
    <location>
        <begin position="146"/>
        <end position="148"/>
    </location>
</feature>
<feature type="strand" evidence="84">
    <location>
        <begin position="152"/>
        <end position="154"/>
    </location>
</feature>
<feature type="helix" evidence="84">
    <location>
        <begin position="158"/>
        <end position="165"/>
    </location>
</feature>
<feature type="strand" evidence="85">
    <location>
        <begin position="167"/>
        <end position="170"/>
    </location>
</feature>
<feature type="strand" evidence="84">
    <location>
        <begin position="174"/>
        <end position="179"/>
    </location>
</feature>
<feature type="strand" evidence="84">
    <location>
        <begin position="181"/>
        <end position="183"/>
    </location>
</feature>
<feature type="strand" evidence="84">
    <location>
        <begin position="187"/>
        <end position="195"/>
    </location>
</feature>
<feature type="turn" evidence="84">
    <location>
        <begin position="196"/>
        <end position="198"/>
    </location>
</feature>
<feature type="strand" evidence="84">
    <location>
        <begin position="199"/>
        <end position="209"/>
    </location>
</feature>
<feature type="strand" evidence="88">
    <location>
        <begin position="211"/>
        <end position="213"/>
    </location>
</feature>
<feature type="strand" evidence="84">
    <location>
        <begin position="215"/>
        <end position="218"/>
    </location>
</feature>
<feature type="strand" evidence="84">
    <location>
        <begin position="221"/>
        <end position="225"/>
    </location>
</feature>
<feature type="helix" evidence="84">
    <location>
        <begin position="226"/>
        <end position="233"/>
    </location>
</feature>
<feature type="strand" evidence="84">
    <location>
        <begin position="240"/>
        <end position="242"/>
    </location>
</feature>
<feature type="strand" evidence="84">
    <location>
        <begin position="256"/>
        <end position="259"/>
    </location>
</feature>
<feature type="helix" evidence="84">
    <location>
        <begin position="267"/>
        <end position="269"/>
    </location>
</feature>
<feature type="strand" evidence="84">
    <location>
        <begin position="270"/>
        <end position="278"/>
    </location>
</feature>
<feature type="strand" evidence="89">
    <location>
        <begin position="280"/>
        <end position="282"/>
    </location>
</feature>
<feature type="strand" evidence="84">
    <location>
        <begin position="283"/>
        <end position="289"/>
    </location>
</feature>
<feature type="turn" evidence="84">
    <location>
        <begin position="290"/>
        <end position="292"/>
    </location>
</feature>
<feature type="strand" evidence="84">
    <location>
        <begin position="293"/>
        <end position="299"/>
    </location>
</feature>
<feature type="turn" evidence="87">
    <location>
        <begin position="302"/>
        <end position="304"/>
    </location>
</feature>
<feature type="helix" evidence="84">
    <location>
        <begin position="307"/>
        <end position="319"/>
    </location>
</feature>
<feature type="strand" evidence="84">
    <location>
        <begin position="328"/>
        <end position="332"/>
    </location>
</feature>
<feature type="strand" evidence="84">
    <location>
        <begin position="334"/>
        <end position="336"/>
    </location>
</feature>
<feature type="strand" evidence="84">
    <location>
        <begin position="338"/>
        <end position="341"/>
    </location>
</feature>
<feature type="strand" evidence="89">
    <location>
        <begin position="345"/>
        <end position="348"/>
    </location>
</feature>
<feature type="helix" evidence="84">
    <location>
        <begin position="349"/>
        <end position="353"/>
    </location>
</feature>
<feature type="helix" evidence="84">
    <location>
        <begin position="355"/>
        <end position="358"/>
    </location>
</feature>
<feature type="helix" evidence="84">
    <location>
        <begin position="363"/>
        <end position="382"/>
    </location>
</feature>
<feature type="helix" evidence="84">
    <location>
        <begin position="392"/>
        <end position="394"/>
    </location>
</feature>
<feature type="strand" evidence="84">
    <location>
        <begin position="395"/>
        <end position="397"/>
    </location>
</feature>
<feature type="helix" evidence="84">
    <location>
        <begin position="399"/>
        <end position="401"/>
    </location>
</feature>
<feature type="strand" evidence="84">
    <location>
        <begin position="403"/>
        <end position="405"/>
    </location>
</feature>
<feature type="helix" evidence="88">
    <location>
        <begin position="410"/>
        <end position="413"/>
    </location>
</feature>
<feature type="helix" evidence="88">
    <location>
        <begin position="417"/>
        <end position="420"/>
    </location>
</feature>
<feature type="turn" evidence="86">
    <location>
        <begin position="423"/>
        <end position="426"/>
    </location>
</feature>
<feature type="helix" evidence="84">
    <location>
        <begin position="429"/>
        <end position="431"/>
    </location>
</feature>
<feature type="helix" evidence="84">
    <location>
        <begin position="434"/>
        <end position="439"/>
    </location>
</feature>
<feature type="helix" evidence="84">
    <location>
        <begin position="444"/>
        <end position="459"/>
    </location>
</feature>
<feature type="turn" evidence="84">
    <location>
        <begin position="460"/>
        <end position="462"/>
    </location>
</feature>
<feature type="helix" evidence="84">
    <location>
        <begin position="471"/>
        <end position="479"/>
    </location>
</feature>
<feature type="helix" evidence="84">
    <location>
        <begin position="492"/>
        <end position="501"/>
    </location>
</feature>
<feature type="helix" evidence="84">
    <location>
        <begin position="506"/>
        <end position="508"/>
    </location>
</feature>
<feature type="helix" evidence="84">
    <location>
        <begin position="512"/>
        <end position="520"/>
    </location>
</feature>
<feature type="turn" evidence="84">
    <location>
        <begin position="521"/>
        <end position="523"/>
    </location>
</feature>
<dbReference type="EC" id="2.7.10.2" evidence="19 36 43 53 66 69 70"/>
<dbReference type="EMBL" id="AL133293">
    <property type="status" value="NOT_ANNOTATED_CDS"/>
    <property type="molecule type" value="Genomic_DNA"/>
</dbReference>
<dbReference type="EMBL" id="CH471077">
    <property type="protein sequence ID" value="EAW76065.1"/>
    <property type="molecule type" value="Genomic_DNA"/>
</dbReference>
<dbReference type="EMBL" id="CH471077">
    <property type="protein sequence ID" value="EAW76064.1"/>
    <property type="molecule type" value="Genomic_DNA"/>
</dbReference>
<dbReference type="EMBL" id="CH471077">
    <property type="protein sequence ID" value="EAW76066.1"/>
    <property type="molecule type" value="Genomic_DNA"/>
</dbReference>
<dbReference type="EMBL" id="CH471077">
    <property type="protein sequence ID" value="EAW76067.1"/>
    <property type="molecule type" value="Genomic_DNA"/>
</dbReference>
<dbReference type="EMBL" id="BC011566">
    <property type="protein sequence ID" value="AAH11566.1"/>
    <property type="molecule type" value="mRNA"/>
</dbReference>
<dbReference type="EMBL" id="BC051270">
    <property type="protein sequence ID" value="AAH51270.2"/>
    <property type="molecule type" value="mRNA"/>
</dbReference>
<dbReference type="EMBL" id="K03218">
    <property type="protein sequence ID" value="AAA60584.1"/>
    <property type="molecule type" value="Genomic_DNA"/>
</dbReference>
<dbReference type="EMBL" id="M16237">
    <property type="protein sequence ID" value="AAA60584.1"/>
    <property type="status" value="JOINED"/>
    <property type="molecule type" value="Genomic_DNA"/>
</dbReference>
<dbReference type="EMBL" id="M16243">
    <property type="protein sequence ID" value="AAA60584.1"/>
    <property type="status" value="JOINED"/>
    <property type="molecule type" value="Genomic_DNA"/>
</dbReference>
<dbReference type="EMBL" id="M16244">
    <property type="protein sequence ID" value="AAA60584.1"/>
    <property type="status" value="JOINED"/>
    <property type="molecule type" value="Genomic_DNA"/>
</dbReference>
<dbReference type="EMBL" id="M16245">
    <property type="protein sequence ID" value="AAA60584.1"/>
    <property type="status" value="JOINED"/>
    <property type="molecule type" value="Genomic_DNA"/>
</dbReference>
<dbReference type="EMBL" id="K03212">
    <property type="protein sequence ID" value="AAA60584.1"/>
    <property type="status" value="JOINED"/>
    <property type="molecule type" value="Genomic_DNA"/>
</dbReference>
<dbReference type="EMBL" id="K03213">
    <property type="protein sequence ID" value="AAA60584.1"/>
    <property type="status" value="JOINED"/>
    <property type="molecule type" value="Genomic_DNA"/>
</dbReference>
<dbReference type="EMBL" id="K03214">
    <property type="protein sequence ID" value="AAA60584.1"/>
    <property type="status" value="JOINED"/>
    <property type="molecule type" value="Genomic_DNA"/>
</dbReference>
<dbReference type="EMBL" id="K03215">
    <property type="protein sequence ID" value="AAA60584.1"/>
    <property type="status" value="JOINED"/>
    <property type="molecule type" value="Genomic_DNA"/>
</dbReference>
<dbReference type="EMBL" id="K03216">
    <property type="protein sequence ID" value="AAA60584.1"/>
    <property type="status" value="JOINED"/>
    <property type="molecule type" value="Genomic_DNA"/>
</dbReference>
<dbReference type="EMBL" id="K03217">
    <property type="protein sequence ID" value="AAA60584.1"/>
    <property type="status" value="JOINED"/>
    <property type="molecule type" value="Genomic_DNA"/>
</dbReference>
<dbReference type="EMBL" id="X02647">
    <property type="protein sequence ID" value="CAA26485.1"/>
    <property type="molecule type" value="Genomic_DNA"/>
</dbReference>
<dbReference type="EMBL" id="X03995">
    <property type="protein sequence ID" value="CAA26485.1"/>
    <property type="status" value="JOINED"/>
    <property type="molecule type" value="Genomic_DNA"/>
</dbReference>
<dbReference type="EMBL" id="X03996">
    <property type="protein sequence ID" value="CAA26485.1"/>
    <property type="status" value="JOINED"/>
    <property type="molecule type" value="Genomic_DNA"/>
</dbReference>
<dbReference type="EMBL" id="X03997">
    <property type="protein sequence ID" value="CAA26485.1"/>
    <property type="status" value="JOINED"/>
    <property type="molecule type" value="Genomic_DNA"/>
</dbReference>
<dbReference type="EMBL" id="X03998">
    <property type="protein sequence ID" value="CAA26485.1"/>
    <property type="status" value="JOINED"/>
    <property type="molecule type" value="Genomic_DNA"/>
</dbReference>
<dbReference type="EMBL" id="X03999">
    <property type="protein sequence ID" value="CAA26485.1"/>
    <property type="status" value="JOINED"/>
    <property type="molecule type" value="Genomic_DNA"/>
</dbReference>
<dbReference type="EMBL" id="X04000">
    <property type="protein sequence ID" value="CAA26485.1"/>
    <property type="status" value="JOINED"/>
    <property type="molecule type" value="Genomic_DNA"/>
</dbReference>
<dbReference type="CCDS" id="CCDS13294.1">
    <molecule id="P12931-1"/>
</dbReference>
<dbReference type="PIR" id="A26891">
    <property type="entry name" value="TVHUSC"/>
</dbReference>
<dbReference type="RefSeq" id="NP_005408.1">
    <molecule id="P12931-1"/>
    <property type="nucleotide sequence ID" value="NM_005417.5"/>
</dbReference>
<dbReference type="RefSeq" id="NP_938033.1">
    <molecule id="P12931-1"/>
    <property type="nucleotide sequence ID" value="NM_198291.3"/>
</dbReference>
<dbReference type="RefSeq" id="XP_011527315.1">
    <property type="nucleotide sequence ID" value="XM_011529013.2"/>
</dbReference>
<dbReference type="RefSeq" id="XP_016883513.1">
    <property type="nucleotide sequence ID" value="XM_017028024.1"/>
</dbReference>
<dbReference type="RefSeq" id="XP_016883514.1">
    <property type="nucleotide sequence ID" value="XM_017028025.1"/>
</dbReference>
<dbReference type="RefSeq" id="XP_016883515.1">
    <molecule id="P12931-2"/>
    <property type="nucleotide sequence ID" value="XM_017028026.2"/>
</dbReference>
<dbReference type="RefSeq" id="XP_016883516.1">
    <property type="nucleotide sequence ID" value="XM_017028027.1"/>
</dbReference>
<dbReference type="RefSeq" id="XP_047296352.1">
    <molecule id="P12931-2"/>
    <property type="nucleotide sequence ID" value="XM_047440396.1"/>
</dbReference>
<dbReference type="RefSeq" id="XP_047296353.1">
    <molecule id="P12931-2"/>
    <property type="nucleotide sequence ID" value="XM_047440397.1"/>
</dbReference>
<dbReference type="RefSeq" id="XP_047296354.1">
    <molecule id="P12931-2"/>
    <property type="nucleotide sequence ID" value="XM_047440398.1"/>
</dbReference>
<dbReference type="RefSeq" id="XP_047296355.1">
    <molecule id="P12931-2"/>
    <property type="nucleotide sequence ID" value="XM_047440399.1"/>
</dbReference>
<dbReference type="RefSeq" id="XP_047296356.1">
    <molecule id="P12931-2"/>
    <property type="nucleotide sequence ID" value="XM_047440400.1"/>
</dbReference>
<dbReference type="RefSeq" id="XP_047296357.1">
    <molecule id="P12931-1"/>
    <property type="nucleotide sequence ID" value="XM_047440401.1"/>
</dbReference>
<dbReference type="RefSeq" id="XP_047296358.1">
    <molecule id="P12931-1"/>
    <property type="nucleotide sequence ID" value="XM_047440402.1"/>
</dbReference>
<dbReference type="RefSeq" id="XP_047296359.1">
    <molecule id="P12931-1"/>
    <property type="nucleotide sequence ID" value="XM_047440403.1"/>
</dbReference>
<dbReference type="RefSeq" id="XP_047296360.1">
    <molecule id="P12931-1"/>
    <property type="nucleotide sequence ID" value="XM_047440404.1"/>
</dbReference>
<dbReference type="RefSeq" id="XP_047296361.1">
    <molecule id="P12931-1"/>
    <property type="nucleotide sequence ID" value="XM_047440405.1"/>
</dbReference>
<dbReference type="RefSeq" id="XP_047296362.1">
    <molecule id="P12931-1"/>
    <property type="nucleotide sequence ID" value="XM_047440406.1"/>
</dbReference>
<dbReference type="RefSeq" id="XP_047296366.1">
    <molecule id="P12931-1"/>
    <property type="nucleotide sequence ID" value="XM_047440410.1"/>
</dbReference>
<dbReference type="RefSeq" id="XP_047296367.1">
    <molecule id="P12931-1"/>
    <property type="nucleotide sequence ID" value="XM_047440411.1"/>
</dbReference>
<dbReference type="RefSeq" id="XP_047296368.1">
    <molecule id="P12931-1"/>
    <property type="nucleotide sequence ID" value="XM_047440412.1"/>
</dbReference>
<dbReference type="RefSeq" id="XP_047296369.1">
    <molecule id="P12931-1"/>
    <property type="nucleotide sequence ID" value="XM_047440413.1"/>
</dbReference>
<dbReference type="RefSeq" id="XP_054179874.1">
    <molecule id="P12931-2"/>
    <property type="nucleotide sequence ID" value="XM_054323899.1"/>
</dbReference>
<dbReference type="RefSeq" id="XP_054179875.1">
    <molecule id="P12931-2"/>
    <property type="nucleotide sequence ID" value="XM_054323900.1"/>
</dbReference>
<dbReference type="RefSeq" id="XP_054179876.1">
    <molecule id="P12931-2"/>
    <property type="nucleotide sequence ID" value="XM_054323901.1"/>
</dbReference>
<dbReference type="RefSeq" id="XP_054179877.1">
    <molecule id="P12931-2"/>
    <property type="nucleotide sequence ID" value="XM_054323902.1"/>
</dbReference>
<dbReference type="RefSeq" id="XP_054179878.1">
    <molecule id="P12931-2"/>
    <property type="nucleotide sequence ID" value="XM_054323903.1"/>
</dbReference>
<dbReference type="RefSeq" id="XP_054179879.1">
    <molecule id="P12931-2"/>
    <property type="nucleotide sequence ID" value="XM_054323904.1"/>
</dbReference>
<dbReference type="RefSeq" id="XP_054179880.1">
    <molecule id="P12931-1"/>
    <property type="nucleotide sequence ID" value="XM_054323905.1"/>
</dbReference>
<dbReference type="RefSeq" id="XP_054179881.1">
    <molecule id="P12931-1"/>
    <property type="nucleotide sequence ID" value="XM_054323906.1"/>
</dbReference>
<dbReference type="RefSeq" id="XP_054179882.1">
    <molecule id="P12931-1"/>
    <property type="nucleotide sequence ID" value="XM_054323907.1"/>
</dbReference>
<dbReference type="RefSeq" id="XP_054179883.1">
    <molecule id="P12931-1"/>
    <property type="nucleotide sequence ID" value="XM_054323908.1"/>
</dbReference>
<dbReference type="RefSeq" id="XP_054179884.1">
    <molecule id="P12931-1"/>
    <property type="nucleotide sequence ID" value="XM_054323909.1"/>
</dbReference>
<dbReference type="RefSeq" id="XP_054179885.1">
    <molecule id="P12931-1"/>
    <property type="nucleotide sequence ID" value="XM_054323910.1"/>
</dbReference>
<dbReference type="RefSeq" id="XP_054179889.1">
    <molecule id="P12931-1"/>
    <property type="nucleotide sequence ID" value="XM_054323914.1"/>
</dbReference>
<dbReference type="RefSeq" id="XP_054179890.1">
    <molecule id="P12931-1"/>
    <property type="nucleotide sequence ID" value="XM_054323915.1"/>
</dbReference>
<dbReference type="RefSeq" id="XP_054179891.1">
    <molecule id="P12931-1"/>
    <property type="nucleotide sequence ID" value="XM_054323916.1"/>
</dbReference>
<dbReference type="RefSeq" id="XP_054179892.1">
    <molecule id="P12931-1"/>
    <property type="nucleotide sequence ID" value="XM_054323917.1"/>
</dbReference>
<dbReference type="RefSeq" id="XP_054189256.1">
    <molecule id="P12931-2"/>
    <property type="nucleotide sequence ID" value="XM_054333281.1"/>
</dbReference>
<dbReference type="RefSeq" id="XP_054189257.1">
    <molecule id="P12931-2"/>
    <property type="nucleotide sequence ID" value="XM_054333282.1"/>
</dbReference>
<dbReference type="RefSeq" id="XP_054189258.1">
    <molecule id="P12931-2"/>
    <property type="nucleotide sequence ID" value="XM_054333283.1"/>
</dbReference>
<dbReference type="RefSeq" id="XP_054189259.1">
    <molecule id="P12931-2"/>
    <property type="nucleotide sequence ID" value="XM_054333284.1"/>
</dbReference>
<dbReference type="RefSeq" id="XP_054189260.1">
    <molecule id="P12931-2"/>
    <property type="nucleotide sequence ID" value="XM_054333285.1"/>
</dbReference>
<dbReference type="RefSeq" id="XP_054189261.1">
    <molecule id="P12931-2"/>
    <property type="nucleotide sequence ID" value="XM_054333286.1"/>
</dbReference>
<dbReference type="RefSeq" id="XP_054189262.1">
    <molecule id="P12931-1"/>
    <property type="nucleotide sequence ID" value="XM_054333287.1"/>
</dbReference>
<dbReference type="RefSeq" id="XP_054189263.1">
    <molecule id="P12931-1"/>
    <property type="nucleotide sequence ID" value="XM_054333288.1"/>
</dbReference>
<dbReference type="RefSeq" id="XP_054189264.1">
    <molecule id="P12931-1"/>
    <property type="nucleotide sequence ID" value="XM_054333289.1"/>
</dbReference>
<dbReference type="RefSeq" id="XP_054189265.1">
    <molecule id="P12931-1"/>
    <property type="nucleotide sequence ID" value="XM_054333290.1"/>
</dbReference>
<dbReference type="RefSeq" id="XP_054189266.1">
    <molecule id="P12931-1"/>
    <property type="nucleotide sequence ID" value="XM_054333291.1"/>
</dbReference>
<dbReference type="RefSeq" id="XP_054189267.1">
    <molecule id="P12931-1"/>
    <property type="nucleotide sequence ID" value="XM_054333292.1"/>
</dbReference>
<dbReference type="RefSeq" id="XP_054189271.1">
    <molecule id="P12931-1"/>
    <property type="nucleotide sequence ID" value="XM_054333296.1"/>
</dbReference>
<dbReference type="RefSeq" id="XP_054189272.1">
    <molecule id="P12931-1"/>
    <property type="nucleotide sequence ID" value="XM_054333297.1"/>
</dbReference>
<dbReference type="RefSeq" id="XP_054189273.1">
    <molecule id="P12931-1"/>
    <property type="nucleotide sequence ID" value="XM_054333298.1"/>
</dbReference>
<dbReference type="RefSeq" id="XP_054189274.1">
    <molecule id="P12931-1"/>
    <property type="nucleotide sequence ID" value="XM_054333299.1"/>
</dbReference>
<dbReference type="PDB" id="1A07">
    <property type="method" value="X-ray"/>
    <property type="resolution" value="2.20 A"/>
    <property type="chains" value="A/B=144-249"/>
</dbReference>
<dbReference type="PDB" id="1A08">
    <property type="method" value="X-ray"/>
    <property type="resolution" value="2.20 A"/>
    <property type="chains" value="A/B=144-249"/>
</dbReference>
<dbReference type="PDB" id="1A09">
    <property type="method" value="X-ray"/>
    <property type="resolution" value="2.00 A"/>
    <property type="chains" value="A/B=144-249"/>
</dbReference>
<dbReference type="PDB" id="1A1A">
    <property type="method" value="X-ray"/>
    <property type="resolution" value="2.00 A"/>
    <property type="chains" value="A/B=144-249"/>
</dbReference>
<dbReference type="PDB" id="1A1B">
    <property type="method" value="X-ray"/>
    <property type="resolution" value="2.20 A"/>
    <property type="chains" value="A/B=144-249"/>
</dbReference>
<dbReference type="PDB" id="1A1C">
    <property type="method" value="X-ray"/>
    <property type="resolution" value="2.40 A"/>
    <property type="chains" value="A/B=144-249"/>
</dbReference>
<dbReference type="PDB" id="1A1E">
    <property type="method" value="X-ray"/>
    <property type="resolution" value="2.20 A"/>
    <property type="chains" value="A/B=144-249"/>
</dbReference>
<dbReference type="PDB" id="1FMK">
    <property type="method" value="X-ray"/>
    <property type="resolution" value="1.50 A"/>
    <property type="chains" value="A=86-536"/>
</dbReference>
<dbReference type="PDB" id="1HCS">
    <property type="method" value="NMR"/>
    <property type="chains" value="B=144-249"/>
</dbReference>
<dbReference type="PDB" id="1HCT">
    <property type="method" value="NMR"/>
    <property type="chains" value="B=144-249"/>
</dbReference>
<dbReference type="PDB" id="1KSW">
    <property type="method" value="X-ray"/>
    <property type="resolution" value="2.80 A"/>
    <property type="chains" value="A=86-536"/>
</dbReference>
<dbReference type="PDB" id="1O41">
    <property type="method" value="X-ray"/>
    <property type="resolution" value="1.70 A"/>
    <property type="chains" value="A=145-252"/>
</dbReference>
<dbReference type="PDB" id="1O42">
    <property type="method" value="X-ray"/>
    <property type="resolution" value="1.70 A"/>
    <property type="chains" value="A=145-252"/>
</dbReference>
<dbReference type="PDB" id="1O43">
    <property type="method" value="X-ray"/>
    <property type="resolution" value="1.50 A"/>
    <property type="chains" value="A=145-252"/>
</dbReference>
<dbReference type="PDB" id="1O44">
    <property type="method" value="X-ray"/>
    <property type="resolution" value="1.70 A"/>
    <property type="chains" value="A=145-252"/>
</dbReference>
<dbReference type="PDB" id="1O45">
    <property type="method" value="X-ray"/>
    <property type="resolution" value="1.80 A"/>
    <property type="chains" value="A=145-252"/>
</dbReference>
<dbReference type="PDB" id="1O46">
    <property type="method" value="X-ray"/>
    <property type="resolution" value="2.00 A"/>
    <property type="chains" value="A=145-252"/>
</dbReference>
<dbReference type="PDB" id="1O47">
    <property type="method" value="X-ray"/>
    <property type="resolution" value="1.80 A"/>
    <property type="chains" value="A=145-252"/>
</dbReference>
<dbReference type="PDB" id="1O48">
    <property type="method" value="X-ray"/>
    <property type="resolution" value="1.55 A"/>
    <property type="chains" value="A=145-252"/>
</dbReference>
<dbReference type="PDB" id="1O49">
    <property type="method" value="X-ray"/>
    <property type="resolution" value="1.70 A"/>
    <property type="chains" value="A=145-252"/>
</dbReference>
<dbReference type="PDB" id="1O4A">
    <property type="method" value="X-ray"/>
    <property type="resolution" value="1.50 A"/>
    <property type="chains" value="A=145-252"/>
</dbReference>
<dbReference type="PDB" id="1O4B">
    <property type="method" value="X-ray"/>
    <property type="resolution" value="1.85 A"/>
    <property type="chains" value="A=145-252"/>
</dbReference>
<dbReference type="PDB" id="1O4C">
    <property type="method" value="X-ray"/>
    <property type="resolution" value="1.80 A"/>
    <property type="chains" value="A=145-252"/>
</dbReference>
<dbReference type="PDB" id="1O4D">
    <property type="method" value="X-ray"/>
    <property type="resolution" value="1.85 A"/>
    <property type="chains" value="A=145-252"/>
</dbReference>
<dbReference type="PDB" id="1O4E">
    <property type="method" value="X-ray"/>
    <property type="resolution" value="2.00 A"/>
    <property type="chains" value="A=145-252"/>
</dbReference>
<dbReference type="PDB" id="1O4F">
    <property type="method" value="X-ray"/>
    <property type="resolution" value="2.00 A"/>
    <property type="chains" value="A=145-252"/>
</dbReference>
<dbReference type="PDB" id="1O4G">
    <property type="method" value="X-ray"/>
    <property type="resolution" value="1.55 A"/>
    <property type="chains" value="A=145-252"/>
</dbReference>
<dbReference type="PDB" id="1O4H">
    <property type="method" value="X-ray"/>
    <property type="resolution" value="2.25 A"/>
    <property type="chains" value="A=145-252"/>
</dbReference>
<dbReference type="PDB" id="1O4I">
    <property type="method" value="X-ray"/>
    <property type="resolution" value="1.75 A"/>
    <property type="chains" value="A=145-252"/>
</dbReference>
<dbReference type="PDB" id="1O4J">
    <property type="method" value="X-ray"/>
    <property type="resolution" value="1.70 A"/>
    <property type="chains" value="A=145-252"/>
</dbReference>
<dbReference type="PDB" id="1O4K">
    <property type="method" value="X-ray"/>
    <property type="resolution" value="1.57 A"/>
    <property type="chains" value="A=145-252"/>
</dbReference>
<dbReference type="PDB" id="1O4L">
    <property type="method" value="X-ray"/>
    <property type="resolution" value="1.65 A"/>
    <property type="chains" value="A=145-252"/>
</dbReference>
<dbReference type="PDB" id="1O4M">
    <property type="method" value="X-ray"/>
    <property type="resolution" value="1.60 A"/>
    <property type="chains" value="A=145-252"/>
</dbReference>
<dbReference type="PDB" id="1O4N">
    <property type="method" value="X-ray"/>
    <property type="resolution" value="1.60 A"/>
    <property type="chains" value="A=145-252"/>
</dbReference>
<dbReference type="PDB" id="1O4O">
    <property type="method" value="X-ray"/>
    <property type="resolution" value="1.70 A"/>
    <property type="chains" value="A=145-252"/>
</dbReference>
<dbReference type="PDB" id="1O4P">
    <property type="method" value="X-ray"/>
    <property type="resolution" value="1.90 A"/>
    <property type="chains" value="A=145-252"/>
</dbReference>
<dbReference type="PDB" id="1O4Q">
    <property type="method" value="X-ray"/>
    <property type="resolution" value="1.70 A"/>
    <property type="chains" value="A=145-252"/>
</dbReference>
<dbReference type="PDB" id="1O4R">
    <property type="method" value="X-ray"/>
    <property type="resolution" value="1.50 A"/>
    <property type="chains" value="A=145-252"/>
</dbReference>
<dbReference type="PDB" id="1SHD">
    <property type="method" value="X-ray"/>
    <property type="resolution" value="2.00 A"/>
    <property type="chains" value="A=144-249"/>
</dbReference>
<dbReference type="PDB" id="1Y57">
    <property type="method" value="X-ray"/>
    <property type="resolution" value="1.91 A"/>
    <property type="chains" value="A=86-536"/>
</dbReference>
<dbReference type="PDB" id="1YI6">
    <property type="method" value="X-ray"/>
    <property type="resolution" value="2.00 A"/>
    <property type="chains" value="A/B=261-536"/>
</dbReference>
<dbReference type="PDB" id="1YOJ">
    <property type="method" value="X-ray"/>
    <property type="resolution" value="1.95 A"/>
    <property type="chains" value="A/B=254-536"/>
</dbReference>
<dbReference type="PDB" id="1YOL">
    <property type="method" value="X-ray"/>
    <property type="resolution" value="2.30 A"/>
    <property type="chains" value="A/B=254-536"/>
</dbReference>
<dbReference type="PDB" id="1YOM">
    <property type="method" value="X-ray"/>
    <property type="resolution" value="2.90 A"/>
    <property type="chains" value="A/B=254-536"/>
</dbReference>
<dbReference type="PDB" id="2BDF">
    <property type="method" value="X-ray"/>
    <property type="resolution" value="2.10 A"/>
    <property type="chains" value="A/B=258-536"/>
</dbReference>
<dbReference type="PDB" id="2BDJ">
    <property type="method" value="X-ray"/>
    <property type="resolution" value="2.50 A"/>
    <property type="chains" value="A=258-536"/>
</dbReference>
<dbReference type="PDB" id="2H8H">
    <property type="method" value="X-ray"/>
    <property type="resolution" value="2.20 A"/>
    <property type="chains" value="A=2-536"/>
</dbReference>
<dbReference type="PDB" id="2SRC">
    <property type="method" value="X-ray"/>
    <property type="resolution" value="1.50 A"/>
    <property type="chains" value="A=86-536"/>
</dbReference>
<dbReference type="PDB" id="3VRO">
    <property type="method" value="X-ray"/>
    <property type="resolution" value="1.80 A"/>
    <property type="chains" value="B=412-424"/>
</dbReference>
<dbReference type="PDB" id="3ZMP">
    <property type="method" value="X-ray"/>
    <property type="resolution" value="2.62 A"/>
    <property type="chains" value="C/D=527-536"/>
</dbReference>
<dbReference type="PDB" id="3ZMQ">
    <property type="method" value="X-ray"/>
    <property type="resolution" value="3.30 A"/>
    <property type="chains" value="C=527-536"/>
</dbReference>
<dbReference type="PDB" id="4F59">
    <property type="method" value="X-ray"/>
    <property type="resolution" value="1.71 A"/>
    <property type="chains" value="A=144-252"/>
</dbReference>
<dbReference type="PDB" id="4F5A">
    <property type="method" value="X-ray"/>
    <property type="resolution" value="1.80 A"/>
    <property type="chains" value="A=144-252"/>
</dbReference>
<dbReference type="PDB" id="4F5B">
    <property type="method" value="X-ray"/>
    <property type="resolution" value="1.57 A"/>
    <property type="chains" value="A=144-252"/>
</dbReference>
<dbReference type="PDB" id="4HXJ">
    <property type="method" value="X-ray"/>
    <property type="resolution" value="2.00 A"/>
    <property type="chains" value="A/B=87-144"/>
</dbReference>
<dbReference type="PDB" id="4K11">
    <property type="method" value="X-ray"/>
    <property type="resolution" value="2.30 A"/>
    <property type="chains" value="A=87-534"/>
</dbReference>
<dbReference type="PDB" id="4MXO">
    <property type="method" value="X-ray"/>
    <property type="resolution" value="2.10 A"/>
    <property type="chains" value="A/B=254-536"/>
</dbReference>
<dbReference type="PDB" id="4MXX">
    <property type="method" value="X-ray"/>
    <property type="resolution" value="2.60 A"/>
    <property type="chains" value="A/B=254-536"/>
</dbReference>
<dbReference type="PDB" id="4MXY">
    <property type="method" value="X-ray"/>
    <property type="resolution" value="2.58 A"/>
    <property type="chains" value="A/B=254-536"/>
</dbReference>
<dbReference type="PDB" id="4MXZ">
    <property type="method" value="X-ray"/>
    <property type="resolution" value="2.58 A"/>
    <property type="chains" value="A/B=254-536"/>
</dbReference>
<dbReference type="PDB" id="6ATE">
    <property type="method" value="X-ray"/>
    <property type="resolution" value="2.40 A"/>
    <property type="chains" value="A=254-536"/>
</dbReference>
<dbReference type="PDB" id="6C4S">
    <property type="method" value="X-ray"/>
    <property type="resolution" value="1.50 A"/>
    <property type="chains" value="A/B=87-144"/>
</dbReference>
<dbReference type="PDB" id="6E6E">
    <property type="method" value="X-ray"/>
    <property type="resolution" value="2.15 A"/>
    <property type="chains" value="A/B/C/D/E/F/G/H=261-536"/>
</dbReference>
<dbReference type="PDB" id="6EHJ">
    <property type="method" value="X-ray"/>
    <property type="resolution" value="2.10 A"/>
    <property type="chains" value="D/F=2-9"/>
</dbReference>
<dbReference type="PDB" id="7NG7">
    <property type="method" value="X-ray"/>
    <property type="resolution" value="1.50 A"/>
    <property type="chains" value="A=254-536"/>
</dbReference>
<dbReference type="PDB" id="7OTE">
    <property type="method" value="X-ray"/>
    <property type="resolution" value="2.49 A"/>
    <property type="chains" value="A/B=254-536"/>
</dbReference>
<dbReference type="PDB" id="7T1U">
    <property type="method" value="X-ray"/>
    <property type="resolution" value="2.65 A"/>
    <property type="chains" value="A/B=147-251"/>
</dbReference>
<dbReference type="PDB" id="7YQE">
    <property type="method" value="X-ray"/>
    <property type="resolution" value="3.50 A"/>
    <property type="chains" value="A/B=85-247"/>
</dbReference>
<dbReference type="PDB" id="8GWH">
    <property type="method" value="X-ray"/>
    <property type="resolution" value="2.00 A"/>
    <property type="chains" value="E=527-531"/>
</dbReference>
<dbReference type="PDB" id="8HAQ">
    <property type="method" value="X-ray"/>
    <property type="resolution" value="2.27 A"/>
    <property type="chains" value="A/B=260-536"/>
</dbReference>
<dbReference type="PDB" id="8JF3">
    <property type="method" value="X-ray"/>
    <property type="resolution" value="2.85 A"/>
    <property type="chains" value="A/B=254-536"/>
</dbReference>
<dbReference type="PDB" id="8JN8">
    <property type="method" value="X-ray"/>
    <property type="resolution" value="1.90 A"/>
    <property type="chains" value="A=1-536"/>
</dbReference>
<dbReference type="PDB" id="8JN9">
    <property type="method" value="X-ray"/>
    <property type="resolution" value="2.72 A"/>
    <property type="chains" value="A=1-536"/>
</dbReference>
<dbReference type="PDB" id="8VCF">
    <property type="method" value="X-ray"/>
    <property type="resolution" value="1.50 A"/>
    <property type="chains" value="A=144-251"/>
</dbReference>
<dbReference type="PDB" id="8VCG">
    <property type="method" value="X-ray"/>
    <property type="resolution" value="1.61 A"/>
    <property type="chains" value="A=144-250"/>
</dbReference>
<dbReference type="PDBsum" id="1A07"/>
<dbReference type="PDBsum" id="1A08"/>
<dbReference type="PDBsum" id="1A09"/>
<dbReference type="PDBsum" id="1A1A"/>
<dbReference type="PDBsum" id="1A1B"/>
<dbReference type="PDBsum" id="1A1C"/>
<dbReference type="PDBsum" id="1A1E"/>
<dbReference type="PDBsum" id="1FMK"/>
<dbReference type="PDBsum" id="1HCS"/>
<dbReference type="PDBsum" id="1HCT"/>
<dbReference type="PDBsum" id="1KSW"/>
<dbReference type="PDBsum" id="1O41"/>
<dbReference type="PDBsum" id="1O42"/>
<dbReference type="PDBsum" id="1O43"/>
<dbReference type="PDBsum" id="1O44"/>
<dbReference type="PDBsum" id="1O45"/>
<dbReference type="PDBsum" id="1O46"/>
<dbReference type="PDBsum" id="1O47"/>
<dbReference type="PDBsum" id="1O48"/>
<dbReference type="PDBsum" id="1O49"/>
<dbReference type="PDBsum" id="1O4A"/>
<dbReference type="PDBsum" id="1O4B"/>
<dbReference type="PDBsum" id="1O4C"/>
<dbReference type="PDBsum" id="1O4D"/>
<dbReference type="PDBsum" id="1O4E"/>
<dbReference type="PDBsum" id="1O4F"/>
<dbReference type="PDBsum" id="1O4G"/>
<dbReference type="PDBsum" id="1O4H"/>
<dbReference type="PDBsum" id="1O4I"/>
<dbReference type="PDBsum" id="1O4J"/>
<dbReference type="PDBsum" id="1O4K"/>
<dbReference type="PDBsum" id="1O4L"/>
<dbReference type="PDBsum" id="1O4M"/>
<dbReference type="PDBsum" id="1O4N"/>
<dbReference type="PDBsum" id="1O4O"/>
<dbReference type="PDBsum" id="1O4P"/>
<dbReference type="PDBsum" id="1O4Q"/>
<dbReference type="PDBsum" id="1O4R"/>
<dbReference type="PDBsum" id="1SHD"/>
<dbReference type="PDBsum" id="1Y57"/>
<dbReference type="PDBsum" id="1YI6"/>
<dbReference type="PDBsum" id="1YOJ"/>
<dbReference type="PDBsum" id="1YOL"/>
<dbReference type="PDBsum" id="1YOM"/>
<dbReference type="PDBsum" id="2BDF"/>
<dbReference type="PDBsum" id="2BDJ"/>
<dbReference type="PDBsum" id="2H8H"/>
<dbReference type="PDBsum" id="2SRC"/>
<dbReference type="PDBsum" id="3VRO"/>
<dbReference type="PDBsum" id="3ZMP"/>
<dbReference type="PDBsum" id="3ZMQ"/>
<dbReference type="PDBsum" id="4F59"/>
<dbReference type="PDBsum" id="4F5A"/>
<dbReference type="PDBsum" id="4F5B"/>
<dbReference type="PDBsum" id="4HXJ"/>
<dbReference type="PDBsum" id="4K11"/>
<dbReference type="PDBsum" id="4MXO"/>
<dbReference type="PDBsum" id="4MXX"/>
<dbReference type="PDBsum" id="4MXY"/>
<dbReference type="PDBsum" id="4MXZ"/>
<dbReference type="PDBsum" id="6ATE"/>
<dbReference type="PDBsum" id="6C4S"/>
<dbReference type="PDBsum" id="6E6E"/>
<dbReference type="PDBsum" id="6EHJ"/>
<dbReference type="PDBsum" id="7NG7"/>
<dbReference type="PDBsum" id="7OTE"/>
<dbReference type="PDBsum" id="7T1U"/>
<dbReference type="PDBsum" id="7YQE"/>
<dbReference type="PDBsum" id="8GWH"/>
<dbReference type="PDBsum" id="8HAQ"/>
<dbReference type="PDBsum" id="8JF3"/>
<dbReference type="PDBsum" id="8JN8"/>
<dbReference type="PDBsum" id="8JN9"/>
<dbReference type="PDBsum" id="8VCF"/>
<dbReference type="PDBsum" id="8VCG"/>
<dbReference type="BMRB" id="P12931"/>
<dbReference type="SASBDB" id="P12931"/>
<dbReference type="SMR" id="P12931"/>
<dbReference type="BioGRID" id="112592">
    <property type="interactions" value="591"/>
</dbReference>
<dbReference type="CORUM" id="P12931"/>
<dbReference type="DIP" id="DIP-1059N"/>
<dbReference type="ELM" id="P12931"/>
<dbReference type="FunCoup" id="P12931">
    <property type="interactions" value="2257"/>
</dbReference>
<dbReference type="IntAct" id="P12931">
    <property type="interactions" value="481"/>
</dbReference>
<dbReference type="MINT" id="P12931"/>
<dbReference type="STRING" id="9606.ENSP00000362680"/>
<dbReference type="BindingDB" id="P12931"/>
<dbReference type="ChEMBL" id="CHEMBL267"/>
<dbReference type="DrugBank" id="DB08564">
    <property type="generic name" value="(2E)-N-{4-[(3-bromophenyl)amino]quinazolin-6-yl}-4-(dimethylamino)but-2-enamide"/>
</dbReference>
<dbReference type="DrugBank" id="DB08039">
    <property type="generic name" value="(3Z)-N,N-DIMETHYL-2-OXO-3-(4,5,6,7-TETRAHYDRO-1H-INDOL-2-YLMETHYLIDENE)-2,3-DIHYDRO-1H-INDOLE-5-SULFONAMIDE"/>
</dbReference>
<dbReference type="DrugBank" id="DB08054">
    <property type="generic name" value="1-(1-methylethyl)-3-quinolin-6-yl-1H-pyrazolo[3,4-d]pyrimidin-4-amine"/>
</dbReference>
<dbReference type="DrugBank" id="DB06882">
    <property type="generic name" value="1-[1-(3-aminophenyl)-3-tert-butyl-1H-pyrazol-5-yl]-3-naphthalen-1-ylurea"/>
</dbReference>
<dbReference type="DrugBank" id="DB06883">
    <property type="generic name" value="1-[1-(3-aminophenyl)-3-tert-butyl-1H-pyrazol-5-yl]-3-phenylurea"/>
</dbReference>
<dbReference type="DrugBank" id="DB08053">
    <property type="generic name" value="1-cyclobutyl-3-(3,4-dimethoxyphenyl)-1H-pyrazolo[3,4-d]pyrimidin-4-amine"/>
</dbReference>
<dbReference type="DrugBank" id="DB03023">
    <property type="generic name" value="1-Tert-Butyl-3-(4-Chloro-Phenyl)-1h-Pyrazolo[3,4-D]Pyrimidin-4-Ylamine"/>
</dbReference>
<dbReference type="DrugBank" id="DB08192">
    <property type="generic name" value="2-(4-CARCOXY-5-ISOPROPYLTHIAZOLYL)BENZOPIPERIDINE"/>
</dbReference>
<dbReference type="DrugBank" id="DB03104">
    <property type="generic name" value="2-[4-[(Z)-2-Acetamido-3-oxo-3-[[(3S)-2-oxo-1-[(4-phenylphenyl)methyl]azepan-3-yl]amino]prop-1-enyl]-2-formylphenyl]acetic acid"/>
</dbReference>
<dbReference type="DrugBank" id="DB07335">
    <property type="generic name" value="3-[4-AMINO-1-(1-METHYLETHYL)-1H-PYRAZOLO[3,4-D]PYRIMIDIN-3-YL]PHENOL"/>
</dbReference>
<dbReference type="DrugBank" id="DB04739">
    <property type="generic name" value="4-[(4-METHYL-1-PIPERAZINYL)METHYL]-N-[3-[[4-(3-PYRIDINYL)-2-PYRIMIDINYL]AMINO]PHENYL]-BENZAMIDE"/>
</dbReference>
<dbReference type="DrugBank" id="DB07966">
    <property type="generic name" value="[4-({4-[(5-cyclopropyl-1H-pyrazol-3-yl)amino]quinazolin-2-yl}amino)phenyl]acetonitrile"/>
</dbReference>
<dbReference type="DrugBank" id="DB11885">
    <property type="generic name" value="Anlotinib"/>
</dbReference>
<dbReference type="DrugBank" id="DB01830">
    <property type="generic name" value="AP-22408"/>
</dbReference>
<dbReference type="DrugBank" id="DB06616">
    <property type="generic name" value="Bosutinib"/>
</dbReference>
<dbReference type="DrugBank" id="DB04272">
    <property type="generic name" value="Citric acid"/>
</dbReference>
<dbReference type="DrugBank" id="DB11832">
    <property type="generic name" value="Crenolanib"/>
</dbReference>
<dbReference type="DrugBank" id="DB01254">
    <property type="generic name" value="Dasatinib"/>
</dbReference>
<dbReference type="DrugBank" id="DB03217">
    <property type="generic name" value="DPI59"/>
</dbReference>
<dbReference type="DrugBank" id="DB12010">
    <property type="generic name" value="Fostamatinib"/>
</dbReference>
<dbReference type="DrugBank" id="DB03628">
    <property type="generic name" value="ISO24"/>
</dbReference>
<dbReference type="DrugBank" id="DB17180">
    <property type="generic name" value="KX-2361"/>
</dbReference>
<dbReference type="DrugBank" id="DB02175">
    <property type="generic name" value="Malonic acid"/>
</dbReference>
<dbReference type="DrugBank" id="DB11526">
    <property type="generic name" value="Masitinib"/>
</dbReference>
<dbReference type="DrugBank" id="DB08462">
    <property type="generic name" value="N-(4-PHENYLAMINO-QUINAZOLIN-6-YL)-ACRYLAMIDE"/>
</dbReference>
<dbReference type="DrugBank" id="DB08454">
    <property type="generic name" value="N-(5-METHYL-1H-PYRAZOL-3-YL)-2-PHENYLQUINAZOLIN-4-AMINE"/>
</dbReference>
<dbReference type="DrugBank" id="DB01893">
    <property type="generic name" value="N6-Benzyl Adenosine-5'-Diphosphate"/>
</dbReference>
<dbReference type="DrugBank" id="DB09079">
    <property type="generic name" value="Nintedanib"/>
</dbReference>
<dbReference type="DrugBank" id="DB03902">
    <property type="generic name" value="Oxalic Acid"/>
</dbReference>
<dbReference type="DrugBank" id="DB04495">
    <property type="generic name" value="Paratoulene phosphate"/>
</dbReference>
<dbReference type="DrugBank" id="DB03114">
    <property type="generic name" value="PAS219"/>
</dbReference>
<dbReference type="DrugBank" id="DB03078">
    <property type="generic name" value="PASBN"/>
</dbReference>
<dbReference type="DrugBank" id="DB08339">
    <property type="generic name" value="PD-166326"/>
</dbReference>
<dbReference type="DrugBank" id="DB07662">
    <property type="generic name" value="PD-168393"/>
</dbReference>
<dbReference type="DrugBank" id="DB17041">
    <property type="generic name" value="PD-173952"/>
</dbReference>
<dbReference type="DrugBank" id="DB02567">
    <property type="generic name" value="PD173955"/>
</dbReference>
<dbReference type="DrugBank" id="DB03298">
    <property type="generic name" value="Phenylphosphate"/>
</dbReference>
<dbReference type="DrugBank" id="DB01962">
    <property type="generic name" value="Phosphonotyrosine"/>
</dbReference>
<dbReference type="DrugBank" id="DB08901">
    <property type="generic name" value="Ponatinib"/>
</dbReference>
<dbReference type="DrugBank" id="DB08052">
    <property type="generic name" value="PP-121"/>
</dbReference>
<dbReference type="DrugBank" id="DB04751">
    <property type="generic name" value="Purvalanol A"/>
</dbReference>
<dbReference type="DrugBank" id="DB04080">
    <property type="generic name" value="RU78191"/>
</dbReference>
<dbReference type="DrugBank" id="DB01947">
    <property type="generic name" value="RU78262"/>
</dbReference>
<dbReference type="DrugBank" id="DB03828">
    <property type="generic name" value="RU78299"/>
</dbReference>
<dbReference type="DrugBank" id="DB03306">
    <property type="generic name" value="RU78300"/>
</dbReference>
<dbReference type="DrugBank" id="DB02908">
    <property type="generic name" value="RU78783"/>
</dbReference>
<dbReference type="DrugBank" id="DB02762">
    <property type="generic name" value="RU79072"/>
</dbReference>
<dbReference type="DrugBank" id="DB03525">
    <property type="generic name" value="RU79073"/>
</dbReference>
<dbReference type="DrugBank" id="DB01866">
    <property type="generic name" value="RU79256"/>
</dbReference>
<dbReference type="DrugBank" id="DB03268">
    <property type="generic name" value="RU82197"/>
</dbReference>
<dbReference type="DrugBank" id="DB03591">
    <property type="generic name" value="RU82209"/>
</dbReference>
<dbReference type="DrugBank" id="DB02336">
    <property type="generic name" value="RU83876"/>
</dbReference>
<dbReference type="DrugBank" id="DB01678">
    <property type="generic name" value="RU84687"/>
</dbReference>
<dbReference type="DrugBank" id="DB03712">
    <property type="generic name" value="RU85053"/>
</dbReference>
<dbReference type="DrugBank" id="DB01908">
    <property type="generic name" value="RU85493"/>
</dbReference>
<dbReference type="DrugBank" id="DB02432">
    <property type="generic name" value="RU90395"/>
</dbReference>
<dbReference type="DrugBank" id="DB01915">
    <property type="generic name" value="S-Hydroxycysteine"/>
</dbReference>
<dbReference type="DrugBank" id="DB11805">
    <property type="generic name" value="Saracatinib"/>
</dbReference>
<dbReference type="DrugBank" id="DB06137">
    <property type="generic name" value="Tirbanibulin"/>
</dbReference>
<dbReference type="DrugBank" id="DB05184">
    <property type="generic name" value="XL228"/>
</dbReference>
<dbReference type="DrugCentral" id="P12931"/>
<dbReference type="GuidetoPHARMACOLOGY" id="2206"/>
<dbReference type="MoonDB" id="P12931">
    <property type="type" value="Predicted"/>
</dbReference>
<dbReference type="TCDB" id="8.A.23.1.12">
    <property type="family name" value="the basigin (basigin) family"/>
</dbReference>
<dbReference type="GlyGen" id="P12931">
    <property type="glycosylation" value="3 sites, 8 N-linked glycans (1 site), 1 O-linked glycan (1 site)"/>
</dbReference>
<dbReference type="iPTMnet" id="P12931"/>
<dbReference type="PhosphoSitePlus" id="P12931"/>
<dbReference type="SwissPalm" id="P12931"/>
<dbReference type="BioMuta" id="SRC"/>
<dbReference type="DMDM" id="125711"/>
<dbReference type="OGP" id="P12931"/>
<dbReference type="CPTAC" id="CPTAC-3071"/>
<dbReference type="CPTAC" id="CPTAC-3072"/>
<dbReference type="CPTAC" id="CPTAC-905"/>
<dbReference type="jPOST" id="P12931"/>
<dbReference type="MassIVE" id="P12931"/>
<dbReference type="PaxDb" id="9606-ENSP00000362680"/>
<dbReference type="PeptideAtlas" id="P12931"/>
<dbReference type="ProteomicsDB" id="52884">
    <molecule id="P12931-1"/>
</dbReference>
<dbReference type="ProteomicsDB" id="52885">
    <molecule id="P12931-2"/>
</dbReference>
<dbReference type="Pumba" id="P12931"/>
<dbReference type="ABCD" id="P12931">
    <property type="antibodies" value="17 sequenced antibodies"/>
</dbReference>
<dbReference type="Antibodypedia" id="3409">
    <property type="antibodies" value="2019 antibodies from 46 providers"/>
</dbReference>
<dbReference type="DNASU" id="6714"/>
<dbReference type="Ensembl" id="ENST00000358208.9">
    <molecule id="P12931-3"/>
    <property type="protein sequence ID" value="ENSP00000350941.5"/>
    <property type="gene ID" value="ENSG00000197122.13"/>
</dbReference>
<dbReference type="Ensembl" id="ENST00000373558.2">
    <molecule id="P12931-2"/>
    <property type="protein sequence ID" value="ENSP00000362659.2"/>
    <property type="gene ID" value="ENSG00000197122.13"/>
</dbReference>
<dbReference type="Ensembl" id="ENST00000373567.6">
    <molecule id="P12931-1"/>
    <property type="protein sequence ID" value="ENSP00000362668.2"/>
    <property type="gene ID" value="ENSG00000197122.13"/>
</dbReference>
<dbReference type="Ensembl" id="ENST00000373578.7">
    <molecule id="P12931-1"/>
    <property type="protein sequence ID" value="ENSP00000362680.2"/>
    <property type="gene ID" value="ENSG00000197122.13"/>
</dbReference>
<dbReference type="Ensembl" id="ENST00000692112.1">
    <molecule id="P12931-1"/>
    <property type="protein sequence ID" value="ENSP00000508666.1"/>
    <property type="gene ID" value="ENSG00000197122.13"/>
</dbReference>
<dbReference type="Ensembl" id="ENST00000692423.1">
    <molecule id="P12931-1"/>
    <property type="protein sequence ID" value="ENSP00000509325.1"/>
    <property type="gene ID" value="ENSG00000197122.13"/>
</dbReference>
<dbReference type="Ensembl" id="ENST00000709392.1">
    <molecule id="P12931-1"/>
    <property type="protein sequence ID" value="ENSP00000517666.1"/>
    <property type="gene ID" value="ENSG00000291971.1"/>
</dbReference>
<dbReference type="Ensembl" id="ENST00000709394.1">
    <molecule id="P12931-1"/>
    <property type="protein sequence ID" value="ENSP00000517668.1"/>
    <property type="gene ID" value="ENSG00000291971.1"/>
</dbReference>
<dbReference type="Ensembl" id="ENST00000709395.1">
    <molecule id="P12931-1"/>
    <property type="protein sequence ID" value="ENSP00000517669.1"/>
    <property type="gene ID" value="ENSG00000291971.1"/>
</dbReference>
<dbReference type="Ensembl" id="ENST00000709396.1">
    <molecule id="P12931-1"/>
    <property type="protein sequence ID" value="ENSP00000517670.1"/>
    <property type="gene ID" value="ENSG00000291971.1"/>
</dbReference>
<dbReference type="Ensembl" id="ENST00000709397.1">
    <molecule id="P12931-2"/>
    <property type="protein sequence ID" value="ENSP00000517671.1"/>
    <property type="gene ID" value="ENSG00000291971.1"/>
</dbReference>
<dbReference type="Ensembl" id="ENST00000709398.1">
    <molecule id="P12931-3"/>
    <property type="protein sequence ID" value="ENSP00000517672.1"/>
    <property type="gene ID" value="ENSG00000291971.1"/>
</dbReference>
<dbReference type="GeneID" id="6714"/>
<dbReference type="KEGG" id="hsa:6714"/>
<dbReference type="MANE-Select" id="ENST00000373578.7">
    <property type="protein sequence ID" value="ENSP00000362680.2"/>
    <property type="RefSeq nucleotide sequence ID" value="NM_198291.3"/>
    <property type="RefSeq protein sequence ID" value="NP_938033.1"/>
</dbReference>
<dbReference type="UCSC" id="uc002xgy.5">
    <molecule id="P12931-1"/>
    <property type="organism name" value="human"/>
</dbReference>
<dbReference type="AGR" id="HGNC:11283"/>
<dbReference type="CTD" id="6714"/>
<dbReference type="DisGeNET" id="6714"/>
<dbReference type="GeneCards" id="SRC"/>
<dbReference type="HGNC" id="HGNC:11283">
    <property type="gene designation" value="SRC"/>
</dbReference>
<dbReference type="HPA" id="ENSG00000197122">
    <property type="expression patterns" value="Low tissue specificity"/>
</dbReference>
<dbReference type="MalaCards" id="SRC"/>
<dbReference type="MIM" id="190090">
    <property type="type" value="gene"/>
</dbReference>
<dbReference type="MIM" id="616937">
    <property type="type" value="phenotype"/>
</dbReference>
<dbReference type="neXtProt" id="NX_P12931"/>
<dbReference type="OpenTargets" id="ENSG00000197122"/>
<dbReference type="Orphanet" id="480851">
    <property type="disease" value="Hereditary thrombocytopenia with early-onset myelofibrosis"/>
</dbReference>
<dbReference type="PharmGKB" id="PA36111"/>
<dbReference type="VEuPathDB" id="HostDB:ENSG00000197122"/>
<dbReference type="eggNOG" id="KOG0197">
    <property type="taxonomic scope" value="Eukaryota"/>
</dbReference>
<dbReference type="GeneTree" id="ENSGT00940000158250"/>
<dbReference type="HOGENOM" id="CLU_000288_7_2_1"/>
<dbReference type="InParanoid" id="P12931"/>
<dbReference type="OMA" id="NYIAPVK"/>
<dbReference type="OrthoDB" id="4062651at2759"/>
<dbReference type="PAN-GO" id="P12931">
    <property type="GO annotations" value="12 GO annotations based on evolutionary models"/>
</dbReference>
<dbReference type="PhylomeDB" id="P12931"/>
<dbReference type="TreeFam" id="TF351634"/>
<dbReference type="BioCyc" id="MetaCyc:HS02256-MONOMER"/>
<dbReference type="BRENDA" id="2.7.10.2">
    <property type="organism ID" value="2681"/>
</dbReference>
<dbReference type="PathwayCommons" id="P12931"/>
<dbReference type="Reactome" id="R-HSA-1227986">
    <property type="pathway name" value="Signaling by ERBB2"/>
</dbReference>
<dbReference type="Reactome" id="R-HSA-1251985">
    <property type="pathway name" value="Nuclear signaling by ERBB4"/>
</dbReference>
<dbReference type="Reactome" id="R-HSA-1253288">
    <property type="pathway name" value="Downregulation of ERBB4 signaling"/>
</dbReference>
<dbReference type="Reactome" id="R-HSA-1257604">
    <property type="pathway name" value="PIP3 activates AKT signaling"/>
</dbReference>
<dbReference type="Reactome" id="R-HSA-1295596">
    <molecule id="P12931-1"/>
    <property type="pathway name" value="Spry regulation of FGF signaling"/>
</dbReference>
<dbReference type="Reactome" id="R-HSA-1433557">
    <molecule id="P12931-1"/>
    <property type="pathway name" value="Signaling by SCF-KIT"/>
</dbReference>
<dbReference type="Reactome" id="R-HSA-1433559">
    <molecule id="P12931-1"/>
    <property type="pathway name" value="Regulation of KIT signaling"/>
</dbReference>
<dbReference type="Reactome" id="R-HSA-171007">
    <molecule id="P12931-1"/>
    <property type="pathway name" value="p38MAPK events"/>
</dbReference>
<dbReference type="Reactome" id="R-HSA-177929">
    <molecule id="P12931-1"/>
    <property type="pathway name" value="Signaling by EGFR"/>
</dbReference>
<dbReference type="Reactome" id="R-HSA-180292">
    <property type="pathway name" value="GAB1 signalosome"/>
</dbReference>
<dbReference type="Reactome" id="R-HSA-186763">
    <property type="pathway name" value="Downstream signal transduction"/>
</dbReference>
<dbReference type="Reactome" id="R-HSA-191650">
    <molecule id="P12931-2"/>
    <property type="pathway name" value="Regulation of gap junction activity"/>
</dbReference>
<dbReference type="Reactome" id="R-HSA-201556">
    <molecule id="P12931-1"/>
    <property type="pathway name" value="Signaling by ALK"/>
</dbReference>
<dbReference type="Reactome" id="R-HSA-2029481">
    <molecule id="P12931-1"/>
    <property type="pathway name" value="FCGR activation"/>
</dbReference>
<dbReference type="Reactome" id="R-HSA-210990">
    <molecule id="P12931-1"/>
    <property type="pathway name" value="PECAM1 interactions"/>
</dbReference>
<dbReference type="Reactome" id="R-HSA-2219530">
    <property type="pathway name" value="Constitutive Signaling by Aberrant PI3K in Cancer"/>
</dbReference>
<dbReference type="Reactome" id="R-HSA-2682334">
    <molecule id="P12931-1"/>
    <property type="pathway name" value="EPH-Ephrin signaling"/>
</dbReference>
<dbReference type="Reactome" id="R-HSA-354192">
    <property type="pathway name" value="Integrin signaling"/>
</dbReference>
<dbReference type="Reactome" id="R-HSA-354194">
    <property type="pathway name" value="GRB2:SOS provides linkage to MAPK signaling for Integrins"/>
</dbReference>
<dbReference type="Reactome" id="R-HSA-372708">
    <property type="pathway name" value="p130Cas linkage to MAPK signaling for integrins"/>
</dbReference>
<dbReference type="Reactome" id="R-HSA-375165">
    <molecule id="P12931-1"/>
    <property type="pathway name" value="NCAM signaling for neurite out-growth"/>
</dbReference>
<dbReference type="Reactome" id="R-HSA-389356">
    <molecule id="P12931-1"/>
    <property type="pathway name" value="Co-stimulation by CD28"/>
</dbReference>
<dbReference type="Reactome" id="R-HSA-389513">
    <molecule id="P12931-1"/>
    <property type="pathway name" value="Co-inhibition by CTLA4"/>
</dbReference>
<dbReference type="Reactome" id="R-HSA-391160">
    <molecule id="P12931-1"/>
    <property type="pathway name" value="Signal regulatory protein family interactions"/>
</dbReference>
<dbReference type="Reactome" id="R-HSA-3928662">
    <molecule id="P12931-1"/>
    <property type="pathway name" value="EPHB-mediated forward signaling"/>
</dbReference>
<dbReference type="Reactome" id="R-HSA-3928663">
    <molecule id="P12931-1"/>
    <property type="pathway name" value="EPHA-mediated growth cone collapse"/>
</dbReference>
<dbReference type="Reactome" id="R-HSA-3928664">
    <molecule id="P12931-1"/>
    <property type="pathway name" value="Ephrin signaling"/>
</dbReference>
<dbReference type="Reactome" id="R-HSA-3928665">
    <molecule id="P12931-1"/>
    <property type="pathway name" value="EPH-ephrin mediated repulsion of cells"/>
</dbReference>
<dbReference type="Reactome" id="R-HSA-418555">
    <property type="pathway name" value="G alpha (s) signalling events"/>
</dbReference>
<dbReference type="Reactome" id="R-HSA-418592">
    <molecule id="P12931-1"/>
    <property type="pathway name" value="ADP signalling through P2Y purinoceptor 1"/>
</dbReference>
<dbReference type="Reactome" id="R-HSA-418594">
    <property type="pathway name" value="G alpha (i) signalling events"/>
</dbReference>
<dbReference type="Reactome" id="R-HSA-418885">
    <property type="pathway name" value="DCC mediated attractive signaling"/>
</dbReference>
<dbReference type="Reactome" id="R-HSA-418886">
    <property type="pathway name" value="Netrin mediated repulsion signals"/>
</dbReference>
<dbReference type="Reactome" id="R-HSA-428542">
    <property type="pathway name" value="Regulation of commissural axon pathfinding by SLIT and ROBO"/>
</dbReference>
<dbReference type="Reactome" id="R-HSA-430116">
    <molecule id="P12931-1"/>
    <property type="pathway name" value="GP1b-IX-V activation signalling"/>
</dbReference>
<dbReference type="Reactome" id="R-HSA-437239">
    <molecule id="P12931-1"/>
    <property type="pathway name" value="Recycling pathway of L1"/>
</dbReference>
<dbReference type="Reactome" id="R-HSA-4420097">
    <molecule id="P12931-1"/>
    <property type="pathway name" value="VEGFA-VEGFR2 Pathway"/>
</dbReference>
<dbReference type="Reactome" id="R-HSA-456926">
    <molecule id="P12931-1"/>
    <property type="pathway name" value="Thrombin signalling through proteinase activated receptors (PARs)"/>
</dbReference>
<dbReference type="Reactome" id="R-HSA-5218921">
    <molecule id="P12931-1"/>
    <property type="pathway name" value="VEGFR2 mediated cell proliferation"/>
</dbReference>
<dbReference type="Reactome" id="R-HSA-5607764">
    <molecule id="P12931-1"/>
    <property type="pathway name" value="CLEC7A (Dectin-1) signaling"/>
</dbReference>
<dbReference type="Reactome" id="R-HSA-5663220">
    <molecule id="P12931-1"/>
    <property type="pathway name" value="RHO GTPases Activate Formins"/>
</dbReference>
<dbReference type="Reactome" id="R-HSA-5673000">
    <property type="pathway name" value="RAF activation"/>
</dbReference>
<dbReference type="Reactome" id="R-HSA-5674135">
    <property type="pathway name" value="MAP2K and MAPK activation"/>
</dbReference>
<dbReference type="Reactome" id="R-HSA-6802946">
    <property type="pathway name" value="Signaling by moderate kinase activity BRAF mutants"/>
</dbReference>
<dbReference type="Reactome" id="R-HSA-6802948">
    <property type="pathway name" value="Signaling by high-kinase activity BRAF mutants"/>
</dbReference>
<dbReference type="Reactome" id="R-HSA-6802952">
    <property type="pathway name" value="Signaling by BRAF and RAF1 fusions"/>
</dbReference>
<dbReference type="Reactome" id="R-HSA-6802955">
    <property type="pathway name" value="Paradoxical activation of RAF signaling by kinase inactive BRAF"/>
</dbReference>
<dbReference type="Reactome" id="R-HSA-6811558">
    <property type="pathway name" value="PI5P, PP2A and IER3 Regulate PI3K/AKT Signaling"/>
</dbReference>
<dbReference type="Reactome" id="R-HSA-69231">
    <molecule id="P12931-1"/>
    <property type="pathway name" value="Cyclin D associated events in G1"/>
</dbReference>
<dbReference type="Reactome" id="R-HSA-8853659">
    <molecule id="P12931-1"/>
    <property type="pathway name" value="RET signaling"/>
</dbReference>
<dbReference type="Reactome" id="R-HSA-8874081">
    <property type="pathway name" value="MET activates PTK2 signaling"/>
</dbReference>
<dbReference type="Reactome" id="R-HSA-8876493">
    <property type="pathway name" value="InlA-mediated entry of Listeria monocytogenes into host cells"/>
</dbReference>
<dbReference type="Reactome" id="R-HSA-8934593">
    <property type="pathway name" value="Regulation of RUNX1 Expression and Activity"/>
</dbReference>
<dbReference type="Reactome" id="R-HSA-8934903">
    <molecule id="P12931-1"/>
    <property type="pathway name" value="Receptor Mediated Mitophagy"/>
</dbReference>
<dbReference type="Reactome" id="R-HSA-8940973">
    <property type="pathway name" value="RUNX2 regulates osteoblast differentiation"/>
</dbReference>
<dbReference type="Reactome" id="R-HSA-8941858">
    <property type="pathway name" value="Regulation of RUNX3 expression and activity"/>
</dbReference>
<dbReference type="Reactome" id="R-HSA-9009391">
    <property type="pathway name" value="Extra-nuclear estrogen signaling"/>
</dbReference>
<dbReference type="Reactome" id="R-HSA-9013420">
    <property type="pathway name" value="RHOU GTPase cycle"/>
</dbReference>
<dbReference type="Reactome" id="R-HSA-9032500">
    <property type="pathway name" value="Activated NTRK2 signals through FYN"/>
</dbReference>
<dbReference type="Reactome" id="R-HSA-9603381">
    <property type="pathway name" value="Activated NTRK3 signals through PI3K"/>
</dbReference>
<dbReference type="Reactome" id="R-HSA-9620244">
    <property type="pathway name" value="Long-term potentiation"/>
</dbReference>
<dbReference type="Reactome" id="R-HSA-9634597">
    <property type="pathway name" value="GPER1 signaling"/>
</dbReference>
<dbReference type="Reactome" id="R-HSA-9649948">
    <property type="pathway name" value="Signaling downstream of RAS mutants"/>
</dbReference>
<dbReference type="Reactome" id="R-HSA-9656223">
    <property type="pathway name" value="Signaling by RAF1 mutants"/>
</dbReference>
<dbReference type="Reactome" id="R-HSA-9664323">
    <molecule id="P12931-1"/>
    <property type="pathway name" value="FCGR3A-mediated IL10 synthesis"/>
</dbReference>
<dbReference type="Reactome" id="R-HSA-9664422">
    <molecule id="P12931-1"/>
    <property type="pathway name" value="FCGR3A-mediated phagocytosis"/>
</dbReference>
<dbReference type="Reactome" id="R-HSA-9670439">
    <molecule id="P12931-1"/>
    <property type="pathway name" value="Signaling by phosphorylated juxtamembrane, extracellular and kinase domain KIT mutants"/>
</dbReference>
<dbReference type="Reactome" id="R-HSA-9680350">
    <property type="pathway name" value="Signaling by CSF1 (M-CSF) in myeloid cells"/>
</dbReference>
<dbReference type="SignaLink" id="P12931"/>
<dbReference type="SIGNOR" id="P12931"/>
<dbReference type="BioGRID-ORCS" id="6714">
    <property type="hits" value="33 hits in 1206 CRISPR screens"/>
</dbReference>
<dbReference type="CD-CODE" id="FB4E32DD">
    <property type="entry name" value="Presynaptic clusters and postsynaptic densities"/>
</dbReference>
<dbReference type="ChiTaRS" id="SRC">
    <property type="organism name" value="human"/>
</dbReference>
<dbReference type="EvolutionaryTrace" id="P12931"/>
<dbReference type="GeneWiki" id="Src_(gene)"/>
<dbReference type="GenomeRNAi" id="6714"/>
<dbReference type="Pharos" id="P12931">
    <property type="development level" value="Tclin"/>
</dbReference>
<dbReference type="PRO" id="PR:P12931"/>
<dbReference type="Proteomes" id="UP000005640">
    <property type="component" value="Chromosome 20"/>
</dbReference>
<dbReference type="RNAct" id="P12931">
    <property type="molecule type" value="protein"/>
</dbReference>
<dbReference type="Bgee" id="ENSG00000197122">
    <property type="expression patterns" value="Expressed in body of stomach and 163 other cell types or tissues"/>
</dbReference>
<dbReference type="GO" id="GO:0005884">
    <property type="term" value="C:actin filament"/>
    <property type="evidence" value="ECO:0007669"/>
    <property type="project" value="Ensembl"/>
</dbReference>
<dbReference type="GO" id="GO:0005901">
    <property type="term" value="C:caveola"/>
    <property type="evidence" value="ECO:0000314"/>
    <property type="project" value="BHF-UCL"/>
</dbReference>
<dbReference type="GO" id="GO:0030054">
    <property type="term" value="C:cell junction"/>
    <property type="evidence" value="ECO:0000314"/>
    <property type="project" value="HPA"/>
</dbReference>
<dbReference type="GO" id="GO:0005911">
    <property type="term" value="C:cell-cell junction"/>
    <property type="evidence" value="ECO:0000314"/>
    <property type="project" value="UniProtKB"/>
</dbReference>
<dbReference type="GO" id="GO:0005737">
    <property type="term" value="C:cytoplasm"/>
    <property type="evidence" value="ECO:0000314"/>
    <property type="project" value="UniProtKB"/>
</dbReference>
<dbReference type="GO" id="GO:0005829">
    <property type="term" value="C:cytosol"/>
    <property type="evidence" value="ECO:0000314"/>
    <property type="project" value="UniProtKB"/>
</dbReference>
<dbReference type="GO" id="GO:0070062">
    <property type="term" value="C:extracellular exosome"/>
    <property type="evidence" value="ECO:0007005"/>
    <property type="project" value="UniProtKB"/>
</dbReference>
<dbReference type="GO" id="GO:0005925">
    <property type="term" value="C:focal adhesion"/>
    <property type="evidence" value="ECO:0000250"/>
    <property type="project" value="UniProtKB"/>
</dbReference>
<dbReference type="GO" id="GO:0043231">
    <property type="term" value="C:intracellular membrane-bounded organelle"/>
    <property type="evidence" value="ECO:0000314"/>
    <property type="project" value="HPA"/>
</dbReference>
<dbReference type="GO" id="GO:0005770">
    <property type="term" value="C:late endosome"/>
    <property type="evidence" value="ECO:0000314"/>
    <property type="project" value="UniProtKB"/>
</dbReference>
<dbReference type="GO" id="GO:0005764">
    <property type="term" value="C:lysosome"/>
    <property type="evidence" value="ECO:0000314"/>
    <property type="project" value="UniProtKB"/>
</dbReference>
<dbReference type="GO" id="GO:0045121">
    <property type="term" value="C:membrane raft"/>
    <property type="evidence" value="ECO:0000250"/>
    <property type="project" value="ARUK-UCL"/>
</dbReference>
<dbReference type="GO" id="GO:0005743">
    <property type="term" value="C:mitochondrial inner membrane"/>
    <property type="evidence" value="ECO:0000314"/>
    <property type="project" value="UniProtKB"/>
</dbReference>
<dbReference type="GO" id="GO:0005739">
    <property type="term" value="C:mitochondrion"/>
    <property type="evidence" value="ECO:0000314"/>
    <property type="project" value="UniProtKB"/>
</dbReference>
<dbReference type="GO" id="GO:0005634">
    <property type="term" value="C:nucleus"/>
    <property type="evidence" value="ECO:0007669"/>
    <property type="project" value="UniProtKB-SubCell"/>
</dbReference>
<dbReference type="GO" id="GO:0048471">
    <property type="term" value="C:perinuclear region of cytoplasm"/>
    <property type="evidence" value="ECO:0000314"/>
    <property type="project" value="UniProtKB"/>
</dbReference>
<dbReference type="GO" id="GO:0005886">
    <property type="term" value="C:plasma membrane"/>
    <property type="evidence" value="ECO:0000314"/>
    <property type="project" value="HPA"/>
</dbReference>
<dbReference type="GO" id="GO:0002102">
    <property type="term" value="C:podosome"/>
    <property type="evidence" value="ECO:0007669"/>
    <property type="project" value="Ensembl"/>
</dbReference>
<dbReference type="GO" id="GO:0032587">
    <property type="term" value="C:ruffle membrane"/>
    <property type="evidence" value="ECO:0007669"/>
    <property type="project" value="Ensembl"/>
</dbReference>
<dbReference type="GO" id="GO:0005524">
    <property type="term" value="F:ATP binding"/>
    <property type="evidence" value="ECO:0007669"/>
    <property type="project" value="UniProtKB-KW"/>
</dbReference>
<dbReference type="GO" id="GO:0051117">
    <property type="term" value="F:ATPase binding"/>
    <property type="evidence" value="ECO:0000250"/>
    <property type="project" value="ARUK-UCL"/>
</dbReference>
<dbReference type="GO" id="GO:0070700">
    <property type="term" value="F:BMP receptor binding"/>
    <property type="evidence" value="ECO:0000353"/>
    <property type="project" value="ARUK-UCL"/>
</dbReference>
<dbReference type="GO" id="GO:0045296">
    <property type="term" value="F:cadherin binding"/>
    <property type="evidence" value="ECO:0007005"/>
    <property type="project" value="BHF-UCL"/>
</dbReference>
<dbReference type="GO" id="GO:0071253">
    <property type="term" value="F:connexin binding"/>
    <property type="evidence" value="ECO:0007669"/>
    <property type="project" value="Ensembl"/>
</dbReference>
<dbReference type="GO" id="GO:0019899">
    <property type="term" value="F:enzyme binding"/>
    <property type="evidence" value="ECO:0000353"/>
    <property type="project" value="UniProtKB"/>
</dbReference>
<dbReference type="GO" id="GO:0046875">
    <property type="term" value="F:ephrin receptor binding"/>
    <property type="evidence" value="ECO:0000353"/>
    <property type="project" value="UniProtKB"/>
</dbReference>
<dbReference type="GO" id="GO:0020037">
    <property type="term" value="F:heme binding"/>
    <property type="evidence" value="ECO:0000314"/>
    <property type="project" value="UniProtKB"/>
</dbReference>
<dbReference type="GO" id="GO:0005178">
    <property type="term" value="F:integrin binding"/>
    <property type="evidence" value="ECO:0000353"/>
    <property type="project" value="UniProtKB"/>
</dbReference>
<dbReference type="GO" id="GO:0035255">
    <property type="term" value="F:ionotropic glutamate receptor binding"/>
    <property type="evidence" value="ECO:0000250"/>
    <property type="project" value="ARUK-UCL"/>
</dbReference>
<dbReference type="GO" id="GO:0004715">
    <property type="term" value="F:non-membrane spanning protein tyrosine kinase activity"/>
    <property type="evidence" value="ECO:0000314"/>
    <property type="project" value="ARUK-UCL"/>
</dbReference>
<dbReference type="GO" id="GO:0016004">
    <property type="term" value="F:phospholipase activator activity"/>
    <property type="evidence" value="ECO:0000314"/>
    <property type="project" value="ARUK-UCL"/>
</dbReference>
<dbReference type="GO" id="GO:0043274">
    <property type="term" value="F:phospholipase binding"/>
    <property type="evidence" value="ECO:0000353"/>
    <property type="project" value="ARUK-UCL"/>
</dbReference>
<dbReference type="GO" id="GO:0051219">
    <property type="term" value="F:phosphoprotein binding"/>
    <property type="evidence" value="ECO:0000353"/>
    <property type="project" value="UniProtKB"/>
</dbReference>
<dbReference type="GO" id="GO:0004672">
    <property type="term" value="F:protein kinase activity"/>
    <property type="evidence" value="ECO:0000314"/>
    <property type="project" value="UniProtKB"/>
</dbReference>
<dbReference type="GO" id="GO:0030296">
    <property type="term" value="F:protein tyrosine kinase activator activity"/>
    <property type="evidence" value="ECO:0000303"/>
    <property type="project" value="ARUK-UCL"/>
</dbReference>
<dbReference type="GO" id="GO:0004713">
    <property type="term" value="F:protein tyrosine kinase activity"/>
    <property type="evidence" value="ECO:0000314"/>
    <property type="project" value="UniProtKB"/>
</dbReference>
<dbReference type="GO" id="GO:0097110">
    <property type="term" value="F:scaffold protein binding"/>
    <property type="evidence" value="ECO:0000353"/>
    <property type="project" value="BHF-UCL"/>
</dbReference>
<dbReference type="GO" id="GO:0042169">
    <property type="term" value="F:SH2 domain binding"/>
    <property type="evidence" value="ECO:0000353"/>
    <property type="project" value="UniProtKB"/>
</dbReference>
<dbReference type="GO" id="GO:0030546">
    <property type="term" value="F:signaling receptor activator activity"/>
    <property type="evidence" value="ECO:0000250"/>
    <property type="project" value="ARUK-UCL"/>
</dbReference>
<dbReference type="GO" id="GO:0005102">
    <property type="term" value="F:signaling receptor binding"/>
    <property type="evidence" value="ECO:0000353"/>
    <property type="project" value="UniProtKB"/>
</dbReference>
<dbReference type="GO" id="GO:0044325">
    <property type="term" value="F:transmembrane transporter binding"/>
    <property type="evidence" value="ECO:0000353"/>
    <property type="project" value="BHF-UCL"/>
</dbReference>
<dbReference type="GO" id="GO:0038166">
    <property type="term" value="P:angiotensin-activated signaling pathway"/>
    <property type="evidence" value="ECO:0000250"/>
    <property type="project" value="BHF-UCL"/>
</dbReference>
<dbReference type="GO" id="GO:0045453">
    <property type="term" value="P:bone resorption"/>
    <property type="evidence" value="ECO:0000250"/>
    <property type="project" value="UniProtKB"/>
</dbReference>
<dbReference type="GO" id="GO:0060444">
    <property type="term" value="P:branching involved in mammary gland duct morphogenesis"/>
    <property type="evidence" value="ECO:0007669"/>
    <property type="project" value="Ensembl"/>
</dbReference>
<dbReference type="GO" id="GO:0007155">
    <property type="term" value="P:cell adhesion"/>
    <property type="evidence" value="ECO:0000318"/>
    <property type="project" value="GO_Central"/>
</dbReference>
<dbReference type="GO" id="GO:0030154">
    <property type="term" value="P:cell differentiation"/>
    <property type="evidence" value="ECO:0000318"/>
    <property type="project" value="GO_Central"/>
</dbReference>
<dbReference type="GO" id="GO:0071498">
    <property type="term" value="P:cellular response to fluid shear stress"/>
    <property type="evidence" value="ECO:0007669"/>
    <property type="project" value="Ensembl"/>
</dbReference>
<dbReference type="GO" id="GO:0070301">
    <property type="term" value="P:cellular response to hydrogen peroxide"/>
    <property type="evidence" value="ECO:0007669"/>
    <property type="project" value="Ensembl"/>
</dbReference>
<dbReference type="GO" id="GO:0071375">
    <property type="term" value="P:cellular response to peptide hormone stimulus"/>
    <property type="evidence" value="ECO:0000250"/>
    <property type="project" value="BHF-UCL"/>
</dbReference>
<dbReference type="GO" id="GO:0036120">
    <property type="term" value="P:cellular response to platelet-derived growth factor stimulus"/>
    <property type="evidence" value="ECO:0007669"/>
    <property type="project" value="Ensembl"/>
</dbReference>
<dbReference type="GO" id="GO:0071393">
    <property type="term" value="P:cellular response to progesterone stimulus"/>
    <property type="evidence" value="ECO:0000250"/>
    <property type="project" value="BHF-UCL"/>
</dbReference>
<dbReference type="GO" id="GO:0034614">
    <property type="term" value="P:cellular response to reactive oxygen species"/>
    <property type="evidence" value="ECO:0000315"/>
    <property type="project" value="UniProtKB"/>
</dbReference>
<dbReference type="GO" id="GO:0048013">
    <property type="term" value="P:ephrin receptor signaling pathway"/>
    <property type="evidence" value="ECO:0000304"/>
    <property type="project" value="Reactome"/>
</dbReference>
<dbReference type="GO" id="GO:0007173">
    <property type="term" value="P:epidermal growth factor receptor signaling pathway"/>
    <property type="evidence" value="ECO:0000318"/>
    <property type="project" value="GO_Central"/>
</dbReference>
<dbReference type="GO" id="GO:0038128">
    <property type="term" value="P:ERBB2 signaling pathway"/>
    <property type="evidence" value="ECO:0000304"/>
    <property type="project" value="Reactome"/>
</dbReference>
<dbReference type="GO" id="GO:0038096">
    <property type="term" value="P:Fc-gamma receptor signaling pathway involved in phagocytosis"/>
    <property type="evidence" value="ECO:0000304"/>
    <property type="project" value="Reactome"/>
</dbReference>
<dbReference type="GO" id="GO:0048041">
    <property type="term" value="P:focal adhesion assembly"/>
    <property type="evidence" value="ECO:0000315"/>
    <property type="project" value="UniProtKB"/>
</dbReference>
<dbReference type="GO" id="GO:0030900">
    <property type="term" value="P:forebrain development"/>
    <property type="evidence" value="ECO:0007669"/>
    <property type="project" value="Ensembl"/>
</dbReference>
<dbReference type="GO" id="GO:0007229">
    <property type="term" value="P:integrin-mediated signaling pathway"/>
    <property type="evidence" value="ECO:0000315"/>
    <property type="project" value="UniProtKB"/>
</dbReference>
<dbReference type="GO" id="GO:0070102">
    <property type="term" value="P:interleukin-6-mediated signaling pathway"/>
    <property type="evidence" value="ECO:0000314"/>
    <property type="project" value="UniProtKB"/>
</dbReference>
<dbReference type="GO" id="GO:0060576">
    <property type="term" value="P:intestinal epithelial cell development"/>
    <property type="evidence" value="ECO:0000314"/>
    <property type="project" value="UniProtKB"/>
</dbReference>
<dbReference type="GO" id="GO:0035556">
    <property type="term" value="P:intracellular signal transduction"/>
    <property type="evidence" value="ECO:0000314"/>
    <property type="project" value="BHF-UCL"/>
</dbReference>
<dbReference type="GO" id="GO:0050900">
    <property type="term" value="P:leukocyte migration"/>
    <property type="evidence" value="ECO:0000304"/>
    <property type="project" value="Reactome"/>
</dbReference>
<dbReference type="GO" id="GO:0016236">
    <property type="term" value="P:macroautophagy"/>
    <property type="evidence" value="ECO:0000304"/>
    <property type="project" value="Reactome"/>
</dbReference>
<dbReference type="GO" id="GO:2000811">
    <property type="term" value="P:negative regulation of anoikis"/>
    <property type="evidence" value="ECO:0000315"/>
    <property type="project" value="UniProtKB"/>
</dbReference>
<dbReference type="GO" id="GO:0043066">
    <property type="term" value="P:negative regulation of apoptotic process"/>
    <property type="evidence" value="ECO:0000315"/>
    <property type="project" value="UniProtKB"/>
</dbReference>
<dbReference type="GO" id="GO:2001237">
    <property type="term" value="P:negative regulation of extrinsic apoptotic signaling pathway"/>
    <property type="evidence" value="ECO:0000315"/>
    <property type="project" value="UniProtKB"/>
</dbReference>
<dbReference type="GO" id="GO:0051895">
    <property type="term" value="P:negative regulation of focal adhesion assembly"/>
    <property type="evidence" value="ECO:0000250"/>
    <property type="project" value="BHF-UCL"/>
</dbReference>
<dbReference type="GO" id="GO:0035331">
    <property type="term" value="P:negative regulation of hippo signaling"/>
    <property type="evidence" value="ECO:0000315"/>
    <property type="project" value="FlyBase"/>
</dbReference>
<dbReference type="GO" id="GO:0002862">
    <property type="term" value="P:negative regulation of inflammatory response to antigenic stimulus"/>
    <property type="evidence" value="ECO:0000304"/>
    <property type="project" value="Reactome"/>
</dbReference>
<dbReference type="GO" id="GO:2001243">
    <property type="term" value="P:negative regulation of intrinsic apoptotic signaling pathway"/>
    <property type="evidence" value="ECO:0000315"/>
    <property type="project" value="UniProtKB"/>
</dbReference>
<dbReference type="GO" id="GO:0051902">
    <property type="term" value="P:negative regulation of mitochondrial depolarization"/>
    <property type="evidence" value="ECO:0000315"/>
    <property type="project" value="UniProtKB"/>
</dbReference>
<dbReference type="GO" id="GO:1902564">
    <property type="term" value="P:negative regulation of neutrophil activation"/>
    <property type="evidence" value="ECO:0000314"/>
    <property type="project" value="UniProt"/>
</dbReference>
<dbReference type="GO" id="GO:0031333">
    <property type="term" value="P:negative regulation of protein-containing complex assembly"/>
    <property type="evidence" value="ECO:0000315"/>
    <property type="project" value="UniProtKB"/>
</dbReference>
<dbReference type="GO" id="GO:0032205">
    <property type="term" value="P:negative regulation of telomere maintenance"/>
    <property type="evidence" value="ECO:0000315"/>
    <property type="project" value="BHF-UCL"/>
</dbReference>
<dbReference type="GO" id="GO:0000122">
    <property type="term" value="P:negative regulation of transcription by RNA polymerase II"/>
    <property type="evidence" value="ECO:0000315"/>
    <property type="project" value="BHF-UCL"/>
</dbReference>
<dbReference type="GO" id="GO:0042476">
    <property type="term" value="P:odontogenesis"/>
    <property type="evidence" value="ECO:0007669"/>
    <property type="project" value="Ensembl"/>
</dbReference>
<dbReference type="GO" id="GO:0048477">
    <property type="term" value="P:oogenesis"/>
    <property type="evidence" value="ECO:0007669"/>
    <property type="project" value="Ensembl"/>
</dbReference>
<dbReference type="GO" id="GO:0036035">
    <property type="term" value="P:osteoclast development"/>
    <property type="evidence" value="ECO:0007669"/>
    <property type="project" value="Ensembl"/>
</dbReference>
<dbReference type="GO" id="GO:0018108">
    <property type="term" value="P:peptidyl-tyrosine phosphorylation"/>
    <property type="evidence" value="ECO:0000314"/>
    <property type="project" value="MGI"/>
</dbReference>
<dbReference type="GO" id="GO:0030168">
    <property type="term" value="P:platelet activation"/>
    <property type="evidence" value="ECO:0000304"/>
    <property type="project" value="Reactome"/>
</dbReference>
<dbReference type="GO" id="GO:0090263">
    <property type="term" value="P:positive regulation of canonical Wnt signaling pathway"/>
    <property type="evidence" value="ECO:0007669"/>
    <property type="project" value="Ensembl"/>
</dbReference>
<dbReference type="GO" id="GO:0035306">
    <property type="term" value="P:positive regulation of dephosphorylation"/>
    <property type="evidence" value="ECO:0000314"/>
    <property type="project" value="ARUK-UCL"/>
</dbReference>
<dbReference type="GO" id="GO:0010634">
    <property type="term" value="P:positive regulation of epithelial cell migration"/>
    <property type="evidence" value="ECO:0000315"/>
    <property type="project" value="UniProtKB"/>
</dbReference>
<dbReference type="GO" id="GO:0070374">
    <property type="term" value="P:positive regulation of ERK1 and ERK2 cascade"/>
    <property type="evidence" value="ECO:0007669"/>
    <property type="project" value="Ensembl"/>
</dbReference>
<dbReference type="GO" id="GO:0045821">
    <property type="term" value="P:positive regulation of glycolytic process"/>
    <property type="evidence" value="ECO:0007669"/>
    <property type="project" value="Ensembl"/>
</dbReference>
<dbReference type="GO" id="GO:0033625">
    <property type="term" value="P:positive regulation of integrin activation"/>
    <property type="evidence" value="ECO:0000304"/>
    <property type="project" value="BHF-UCL"/>
</dbReference>
<dbReference type="GO" id="GO:2000394">
    <property type="term" value="P:positive regulation of lamellipodium morphogenesis"/>
    <property type="evidence" value="ECO:0000315"/>
    <property type="project" value="UniProtKB"/>
</dbReference>
<dbReference type="GO" id="GO:0045747">
    <property type="term" value="P:positive regulation of Notch signaling pathway"/>
    <property type="evidence" value="ECO:0000314"/>
    <property type="project" value="UniProtKB"/>
</dbReference>
<dbReference type="GO" id="GO:0051897">
    <property type="term" value="P:positive regulation of phosphatidylinositol 3-kinase/protein kinase B signal transduction"/>
    <property type="evidence" value="ECO:0000315"/>
    <property type="project" value="UniProtKB"/>
</dbReference>
<dbReference type="GO" id="GO:2000588">
    <property type="term" value="P:positive regulation of platelet-derived growth factor receptor-beta signaling pathway"/>
    <property type="evidence" value="ECO:0007669"/>
    <property type="project" value="Ensembl"/>
</dbReference>
<dbReference type="GO" id="GO:0071803">
    <property type="term" value="P:positive regulation of podosome assembly"/>
    <property type="evidence" value="ECO:0007669"/>
    <property type="project" value="Ensembl"/>
</dbReference>
<dbReference type="GO" id="GO:1900182">
    <property type="term" value="P:positive regulation of protein localization to nucleus"/>
    <property type="evidence" value="ECO:0007669"/>
    <property type="project" value="Ensembl"/>
</dbReference>
<dbReference type="GO" id="GO:0010954">
    <property type="term" value="P:positive regulation of protein processing"/>
    <property type="evidence" value="ECO:0007669"/>
    <property type="project" value="Ensembl"/>
</dbReference>
<dbReference type="GO" id="GO:0071902">
    <property type="term" value="P:positive regulation of protein serine/threonine kinase activity"/>
    <property type="evidence" value="ECO:0000314"/>
    <property type="project" value="UniProtKB"/>
</dbReference>
<dbReference type="GO" id="GO:0051057">
    <property type="term" value="P:positive regulation of small GTPase mediated signal transduction"/>
    <property type="evidence" value="ECO:0000315"/>
    <property type="project" value="ParkinsonsUK-UCL"/>
</dbReference>
<dbReference type="GO" id="GO:1904263">
    <property type="term" value="P:positive regulation of TORC1 signaling"/>
    <property type="evidence" value="ECO:0000314"/>
    <property type="project" value="UniProt"/>
</dbReference>
<dbReference type="GO" id="GO:0050847">
    <property type="term" value="P:progesterone receptor signaling pathway"/>
    <property type="evidence" value="ECO:0000250"/>
    <property type="project" value="BHF-UCL"/>
</dbReference>
<dbReference type="GO" id="GO:0046777">
    <property type="term" value="P:protein autophosphorylation"/>
    <property type="evidence" value="ECO:0000314"/>
    <property type="project" value="UniProtKB"/>
</dbReference>
<dbReference type="GO" id="GO:0031648">
    <property type="term" value="P:protein destabilization"/>
    <property type="evidence" value="ECO:0007669"/>
    <property type="project" value="Ensembl"/>
</dbReference>
<dbReference type="GO" id="GO:0045124">
    <property type="term" value="P:regulation of bone resorption"/>
    <property type="evidence" value="ECO:0000304"/>
    <property type="project" value="BHF-UCL"/>
</dbReference>
<dbReference type="GO" id="GO:2001286">
    <property type="term" value="P:regulation of caveolin-mediated endocytosis"/>
    <property type="evidence" value="ECO:0000315"/>
    <property type="project" value="UniProtKB"/>
</dbReference>
<dbReference type="GO" id="GO:0060491">
    <property type="term" value="P:regulation of cell projection assembly"/>
    <property type="evidence" value="ECO:0007669"/>
    <property type="project" value="Ensembl"/>
</dbReference>
<dbReference type="GO" id="GO:0022407">
    <property type="term" value="P:regulation of cell-cell adhesion"/>
    <property type="evidence" value="ECO:0000315"/>
    <property type="project" value="UniProtKB"/>
</dbReference>
<dbReference type="GO" id="GO:2000641">
    <property type="term" value="P:regulation of early endosome to late endosome transport"/>
    <property type="evidence" value="ECO:0000315"/>
    <property type="project" value="UniProtKB"/>
</dbReference>
<dbReference type="GO" id="GO:0010632">
    <property type="term" value="P:regulation of epithelial cell migration"/>
    <property type="evidence" value="ECO:0000315"/>
    <property type="project" value="UniProtKB"/>
</dbReference>
<dbReference type="GO" id="GO:0086091">
    <property type="term" value="P:regulation of heart rate by cardiac conduction"/>
    <property type="evidence" value="ECO:0000250"/>
    <property type="project" value="BHF-UCL"/>
</dbReference>
<dbReference type="GO" id="GO:0033146">
    <property type="term" value="P:regulation of intracellular estrogen receptor signaling pathway"/>
    <property type="evidence" value="ECO:0007669"/>
    <property type="project" value="Ensembl"/>
</dbReference>
<dbReference type="GO" id="GO:0034139">
    <property type="term" value="P:regulation of toll-like receptor 3 signaling pathway"/>
    <property type="evidence" value="ECO:0000314"/>
    <property type="project" value="UniProt"/>
</dbReference>
<dbReference type="GO" id="GO:0043114">
    <property type="term" value="P:regulation of vascular permeability"/>
    <property type="evidence" value="ECO:0000304"/>
    <property type="project" value="BHF-UCL"/>
</dbReference>
<dbReference type="GO" id="GO:0070555">
    <property type="term" value="P:response to interleukin-1"/>
    <property type="evidence" value="ECO:0000315"/>
    <property type="project" value="BHF-UCL"/>
</dbReference>
<dbReference type="GO" id="GO:0007172">
    <property type="term" value="P:signal complex assembly"/>
    <property type="evidence" value="ECO:0000304"/>
    <property type="project" value="ProtInc"/>
</dbReference>
<dbReference type="GO" id="GO:0007165">
    <property type="term" value="P:signal transduction"/>
    <property type="evidence" value="ECO:0000304"/>
    <property type="project" value="ProtInc"/>
</dbReference>
<dbReference type="GO" id="GO:0002223">
    <property type="term" value="P:stimulatory C-type lectin receptor signaling pathway"/>
    <property type="evidence" value="ECO:0000304"/>
    <property type="project" value="Reactome"/>
</dbReference>
<dbReference type="GO" id="GO:0043149">
    <property type="term" value="P:stress fiber assembly"/>
    <property type="evidence" value="ECO:0000315"/>
    <property type="project" value="UniProtKB"/>
</dbReference>
<dbReference type="GO" id="GO:0034446">
    <property type="term" value="P:substrate adhesion-dependent cell spreading"/>
    <property type="evidence" value="ECO:0007669"/>
    <property type="project" value="Ensembl"/>
</dbReference>
<dbReference type="GO" id="GO:0046718">
    <property type="term" value="P:symbiont entry into host cell"/>
    <property type="evidence" value="ECO:0000304"/>
    <property type="project" value="Reactome"/>
</dbReference>
<dbReference type="GO" id="GO:0031295">
    <property type="term" value="P:T cell costimulation"/>
    <property type="evidence" value="ECO:0000304"/>
    <property type="project" value="Reactome"/>
</dbReference>
<dbReference type="GO" id="GO:0007179">
    <property type="term" value="P:transforming growth factor beta receptor signaling pathway"/>
    <property type="evidence" value="ECO:0000315"/>
    <property type="project" value="UniProtKB"/>
</dbReference>
<dbReference type="GO" id="GO:0060065">
    <property type="term" value="P:uterus development"/>
    <property type="evidence" value="ECO:0007669"/>
    <property type="project" value="Ensembl"/>
</dbReference>
<dbReference type="GO" id="GO:0048010">
    <property type="term" value="P:vascular endothelial growth factor receptor signaling pathway"/>
    <property type="evidence" value="ECO:0000304"/>
    <property type="project" value="Reactome"/>
</dbReference>
<dbReference type="GO" id="GO:0042311">
    <property type="term" value="P:vasodilation"/>
    <property type="evidence" value="ECO:0000315"/>
    <property type="project" value="ARUK-UCL"/>
</dbReference>
<dbReference type="CDD" id="cd05071">
    <property type="entry name" value="PTKc_Src"/>
    <property type="match status" value="1"/>
</dbReference>
<dbReference type="CDD" id="cd10365">
    <property type="entry name" value="SH2_Src_Src"/>
    <property type="match status" value="1"/>
</dbReference>
<dbReference type="CDD" id="cd12008">
    <property type="entry name" value="SH3_Src"/>
    <property type="match status" value="1"/>
</dbReference>
<dbReference type="DisProt" id="DP01570"/>
<dbReference type="FunFam" id="1.10.510.10:FF:000553">
    <property type="entry name" value="Tyrosine-protein kinase"/>
    <property type="match status" value="1"/>
</dbReference>
<dbReference type="FunFam" id="2.30.30.40:FF:000083">
    <property type="entry name" value="Tyrosine-protein kinase"/>
    <property type="match status" value="1"/>
</dbReference>
<dbReference type="FunFam" id="3.30.200.20:FF:000016">
    <property type="entry name" value="Tyrosine-protein kinase"/>
    <property type="match status" value="1"/>
</dbReference>
<dbReference type="FunFam" id="3.30.505.10:FF:000001">
    <property type="entry name" value="Tyrosine-protein kinase"/>
    <property type="match status" value="1"/>
</dbReference>
<dbReference type="Gene3D" id="3.30.200.20">
    <property type="entry name" value="Phosphorylase Kinase, domain 1"/>
    <property type="match status" value="1"/>
</dbReference>
<dbReference type="Gene3D" id="3.30.505.10">
    <property type="entry name" value="SH2 domain"/>
    <property type="match status" value="1"/>
</dbReference>
<dbReference type="Gene3D" id="2.30.30.40">
    <property type="entry name" value="SH3 Domains"/>
    <property type="match status" value="1"/>
</dbReference>
<dbReference type="Gene3D" id="1.10.510.10">
    <property type="entry name" value="Transferase(Phosphotransferase) domain 1"/>
    <property type="match status" value="1"/>
</dbReference>
<dbReference type="IDEAL" id="IID00708"/>
<dbReference type="InterPro" id="IPR011009">
    <property type="entry name" value="Kinase-like_dom_sf"/>
</dbReference>
<dbReference type="InterPro" id="IPR050198">
    <property type="entry name" value="Non-receptor_tyrosine_kinases"/>
</dbReference>
<dbReference type="InterPro" id="IPR000719">
    <property type="entry name" value="Prot_kinase_dom"/>
</dbReference>
<dbReference type="InterPro" id="IPR017441">
    <property type="entry name" value="Protein_kinase_ATP_BS"/>
</dbReference>
<dbReference type="InterPro" id="IPR001245">
    <property type="entry name" value="Ser-Thr/Tyr_kinase_cat_dom"/>
</dbReference>
<dbReference type="InterPro" id="IPR000980">
    <property type="entry name" value="SH2"/>
</dbReference>
<dbReference type="InterPro" id="IPR036860">
    <property type="entry name" value="SH2_dom_sf"/>
</dbReference>
<dbReference type="InterPro" id="IPR036028">
    <property type="entry name" value="SH3-like_dom_sf"/>
</dbReference>
<dbReference type="InterPro" id="IPR001452">
    <property type="entry name" value="SH3_domain"/>
</dbReference>
<dbReference type="InterPro" id="IPR008266">
    <property type="entry name" value="Tyr_kinase_AS"/>
</dbReference>
<dbReference type="InterPro" id="IPR020635">
    <property type="entry name" value="Tyr_kinase_cat_dom"/>
</dbReference>
<dbReference type="PANTHER" id="PTHR24418">
    <property type="entry name" value="TYROSINE-PROTEIN KINASE"/>
    <property type="match status" value="1"/>
</dbReference>
<dbReference type="Pfam" id="PF07714">
    <property type="entry name" value="PK_Tyr_Ser-Thr"/>
    <property type="match status" value="1"/>
</dbReference>
<dbReference type="Pfam" id="PF00017">
    <property type="entry name" value="SH2"/>
    <property type="match status" value="1"/>
</dbReference>
<dbReference type="Pfam" id="PF00018">
    <property type="entry name" value="SH3_1"/>
    <property type="match status" value="1"/>
</dbReference>
<dbReference type="PRINTS" id="PR00401">
    <property type="entry name" value="SH2DOMAIN"/>
</dbReference>
<dbReference type="PRINTS" id="PR00452">
    <property type="entry name" value="SH3DOMAIN"/>
</dbReference>
<dbReference type="PRINTS" id="PR00109">
    <property type="entry name" value="TYRKINASE"/>
</dbReference>
<dbReference type="SMART" id="SM00252">
    <property type="entry name" value="SH2"/>
    <property type="match status" value="1"/>
</dbReference>
<dbReference type="SMART" id="SM00326">
    <property type="entry name" value="SH3"/>
    <property type="match status" value="1"/>
</dbReference>
<dbReference type="SMART" id="SM00219">
    <property type="entry name" value="TyrKc"/>
    <property type="match status" value="1"/>
</dbReference>
<dbReference type="SUPFAM" id="SSF56112">
    <property type="entry name" value="Protein kinase-like (PK-like)"/>
    <property type="match status" value="1"/>
</dbReference>
<dbReference type="SUPFAM" id="SSF55550">
    <property type="entry name" value="SH2 domain"/>
    <property type="match status" value="1"/>
</dbReference>
<dbReference type="SUPFAM" id="SSF50044">
    <property type="entry name" value="SH3-domain"/>
    <property type="match status" value="1"/>
</dbReference>
<dbReference type="PROSITE" id="PS00107">
    <property type="entry name" value="PROTEIN_KINASE_ATP"/>
    <property type="match status" value="1"/>
</dbReference>
<dbReference type="PROSITE" id="PS50011">
    <property type="entry name" value="PROTEIN_KINASE_DOM"/>
    <property type="match status" value="1"/>
</dbReference>
<dbReference type="PROSITE" id="PS00109">
    <property type="entry name" value="PROTEIN_KINASE_TYR"/>
    <property type="match status" value="1"/>
</dbReference>
<dbReference type="PROSITE" id="PS50001">
    <property type="entry name" value="SH2"/>
    <property type="match status" value="1"/>
</dbReference>
<dbReference type="PROSITE" id="PS50002">
    <property type="entry name" value="SH3"/>
    <property type="match status" value="1"/>
</dbReference>
<reference key="1">
    <citation type="journal article" date="2001" name="Nature">
        <title>The DNA sequence and comparative analysis of human chromosome 20.</title>
        <authorList>
            <person name="Deloukas P."/>
            <person name="Matthews L.H."/>
            <person name="Ashurst J.L."/>
            <person name="Burton J."/>
            <person name="Gilbert J.G.R."/>
            <person name="Jones M."/>
            <person name="Stavrides G."/>
            <person name="Almeida J.P."/>
            <person name="Babbage A.K."/>
            <person name="Bagguley C.L."/>
            <person name="Bailey J."/>
            <person name="Barlow K.F."/>
            <person name="Bates K.N."/>
            <person name="Beard L.M."/>
            <person name="Beare D.M."/>
            <person name="Beasley O.P."/>
            <person name="Bird C.P."/>
            <person name="Blakey S.E."/>
            <person name="Bridgeman A.M."/>
            <person name="Brown A.J."/>
            <person name="Buck D."/>
            <person name="Burrill W.D."/>
            <person name="Butler A.P."/>
            <person name="Carder C."/>
            <person name="Carter N.P."/>
            <person name="Chapman J.C."/>
            <person name="Clamp M."/>
            <person name="Clark G."/>
            <person name="Clark L.N."/>
            <person name="Clark S.Y."/>
            <person name="Clee C.M."/>
            <person name="Clegg S."/>
            <person name="Cobley V.E."/>
            <person name="Collier R.E."/>
            <person name="Connor R.E."/>
            <person name="Corby N.R."/>
            <person name="Coulson A."/>
            <person name="Coville G.J."/>
            <person name="Deadman R."/>
            <person name="Dhami P.D."/>
            <person name="Dunn M."/>
            <person name="Ellington A.G."/>
            <person name="Frankland J.A."/>
            <person name="Fraser A."/>
            <person name="French L."/>
            <person name="Garner P."/>
            <person name="Grafham D.V."/>
            <person name="Griffiths C."/>
            <person name="Griffiths M.N.D."/>
            <person name="Gwilliam R."/>
            <person name="Hall R.E."/>
            <person name="Hammond S."/>
            <person name="Harley J.L."/>
            <person name="Heath P.D."/>
            <person name="Ho S."/>
            <person name="Holden J.L."/>
            <person name="Howden P.J."/>
            <person name="Huckle E."/>
            <person name="Hunt A.R."/>
            <person name="Hunt S.E."/>
            <person name="Jekosch K."/>
            <person name="Johnson C.M."/>
            <person name="Johnson D."/>
            <person name="Kay M.P."/>
            <person name="Kimberley A.M."/>
            <person name="King A."/>
            <person name="Knights A."/>
            <person name="Laird G.K."/>
            <person name="Lawlor S."/>
            <person name="Lehvaeslaiho M.H."/>
            <person name="Leversha M.A."/>
            <person name="Lloyd C."/>
            <person name="Lloyd D.M."/>
            <person name="Lovell J.D."/>
            <person name="Marsh V.L."/>
            <person name="Martin S.L."/>
            <person name="McConnachie L.J."/>
            <person name="McLay K."/>
            <person name="McMurray A.A."/>
            <person name="Milne S.A."/>
            <person name="Mistry D."/>
            <person name="Moore M.J.F."/>
            <person name="Mullikin J.C."/>
            <person name="Nickerson T."/>
            <person name="Oliver K."/>
            <person name="Parker A."/>
            <person name="Patel R."/>
            <person name="Pearce T.A.V."/>
            <person name="Peck A.I."/>
            <person name="Phillimore B.J.C.T."/>
            <person name="Prathalingam S.R."/>
            <person name="Plumb R.W."/>
            <person name="Ramsay H."/>
            <person name="Rice C.M."/>
            <person name="Ross M.T."/>
            <person name="Scott C.E."/>
            <person name="Sehra H.K."/>
            <person name="Shownkeen R."/>
            <person name="Sims S."/>
            <person name="Skuce C.D."/>
            <person name="Smith M.L."/>
            <person name="Soderlund C."/>
            <person name="Steward C.A."/>
            <person name="Sulston J.E."/>
            <person name="Swann R.M."/>
            <person name="Sycamore N."/>
            <person name="Taylor R."/>
            <person name="Tee L."/>
            <person name="Thomas D.W."/>
            <person name="Thorpe A."/>
            <person name="Tracey A."/>
            <person name="Tromans A.C."/>
            <person name="Vaudin M."/>
            <person name="Wall M."/>
            <person name="Wallis J.M."/>
            <person name="Whitehead S.L."/>
            <person name="Whittaker P."/>
            <person name="Willey D.L."/>
            <person name="Williams L."/>
            <person name="Williams S.A."/>
            <person name="Wilming L."/>
            <person name="Wray P.W."/>
            <person name="Hubbard T."/>
            <person name="Durbin R.M."/>
            <person name="Bentley D.R."/>
            <person name="Beck S."/>
            <person name="Rogers J."/>
        </authorList>
    </citation>
    <scope>NUCLEOTIDE SEQUENCE [LARGE SCALE GENOMIC DNA]</scope>
</reference>
<reference key="2">
    <citation type="submission" date="2005-09" db="EMBL/GenBank/DDBJ databases">
        <authorList>
            <person name="Mural R.J."/>
            <person name="Istrail S."/>
            <person name="Sutton G.G."/>
            <person name="Florea L."/>
            <person name="Halpern A.L."/>
            <person name="Mobarry C.M."/>
            <person name="Lippert R."/>
            <person name="Walenz B."/>
            <person name="Shatkay H."/>
            <person name="Dew I."/>
            <person name="Miller J.R."/>
            <person name="Flanigan M.J."/>
            <person name="Edwards N.J."/>
            <person name="Bolanos R."/>
            <person name="Fasulo D."/>
            <person name="Halldorsson B.V."/>
            <person name="Hannenhalli S."/>
            <person name="Turner R."/>
            <person name="Yooseph S."/>
            <person name="Lu F."/>
            <person name="Nusskern D.R."/>
            <person name="Shue B.C."/>
            <person name="Zheng X.H."/>
            <person name="Zhong F."/>
            <person name="Delcher A.L."/>
            <person name="Huson D.H."/>
            <person name="Kravitz S.A."/>
            <person name="Mouchard L."/>
            <person name="Reinert K."/>
            <person name="Remington K.A."/>
            <person name="Clark A.G."/>
            <person name="Waterman M.S."/>
            <person name="Eichler E.E."/>
            <person name="Adams M.D."/>
            <person name="Hunkapiller M.W."/>
            <person name="Myers E.W."/>
            <person name="Venter J.C."/>
        </authorList>
    </citation>
    <scope>NUCLEOTIDE SEQUENCE [LARGE SCALE GENOMIC DNA]</scope>
</reference>
<reference key="3">
    <citation type="journal article" date="2004" name="Genome Res.">
        <title>The status, quality, and expansion of the NIH full-length cDNA project: the Mammalian Gene Collection (MGC).</title>
        <authorList>
            <consortium name="The MGC Project Team"/>
        </authorList>
    </citation>
    <scope>NUCLEOTIDE SEQUENCE [LARGE SCALE MRNA] (ISOFORM 1)</scope>
    <source>
        <tissue>Lung</tissue>
        <tissue>Skin</tissue>
    </source>
</reference>
<reference key="4">
    <citation type="journal article" date="1987" name="Mol. Cell. Biol.">
        <title>DNA sequence encoding the amino-terminal region of the human c-src protein: implications of sequence divergence among src-type kinase oncogenes.</title>
        <authorList>
            <person name="Tanaka A."/>
            <person name="Gibbs C.P."/>
            <person name="Arthur R.R."/>
            <person name="Anderson S.K."/>
            <person name="Kung H.-J."/>
            <person name="Fujita D.J."/>
        </authorList>
    </citation>
    <scope>NUCLEOTIDE SEQUENCE [GENOMIC DNA] OF 1-185 (ISOFORM 1)</scope>
</reference>
<reference key="5">
    <citation type="journal article" date="1985" name="Mol. Cell. Biol.">
        <title>Human cellular src gene: nucleotide sequence and derived amino acid sequence of the region coding for the carboxy-terminal two-thirds of pp60c-src.</title>
        <authorList>
            <person name="Anderson S.K."/>
            <person name="Gibbs C.P."/>
            <person name="Tanaka A."/>
            <person name="Kung H.-J."/>
            <person name="Fujita D.J."/>
        </authorList>
    </citation>
    <scope>NUCLEOTIDE SEQUENCE [GENOMIC DNA] OF 186-536 (ISOFORM 1)</scope>
</reference>
<reference key="6">
    <citation type="journal article" date="1989" name="J. Neurosci. Res.">
        <title>Neuron-specific splicing of C-SRC RNA in human brain.</title>
        <authorList>
            <person name="Pyper J.M."/>
            <person name="Bolen J.B."/>
        </authorList>
    </citation>
    <scope>NUCLEOTIDE SEQUENCE [MRNA] OF 98-139 (ISOFORM 2)</scope>
</reference>
<reference key="7">
    <citation type="journal article" date="1985" name="Mol. Cell. Biol.">
        <title>Isolation of duplicated human c-src genes located on chromosomes 1 and 20.</title>
        <authorList>
            <person name="Parker R.C."/>
            <person name="Mardon G."/>
            <person name="Lebo R.V."/>
            <person name="Varmus H.E."/>
            <person name="Bishop J.M."/>
        </authorList>
    </citation>
    <scope>NUCLEOTIDE SEQUENCE [GENOMIC DNA] OF 376-536 (ISOFORM 1)</scope>
</reference>
<reference key="8">
    <citation type="journal article" date="1981" name="Proc. Natl. Acad. Sci. U.S.A.">
        <title>Characterization of sites for tyrosine phosphorylation in the transforming protein of Rous sarcoma virus (pp60v-src) and its normal cellular homologue (pp60c-src).</title>
        <authorList>
            <person name="Smart J.E."/>
            <person name="Oppermann H."/>
            <person name="Czernilofsky A.P."/>
            <person name="Purchio A.F."/>
            <person name="Erikson R.L."/>
            <person name="Bishop J.M."/>
        </authorList>
    </citation>
    <scope>PHOSPHORYLATION AT TYR-419</scope>
</reference>
<reference key="9">
    <citation type="journal article" date="1986" name="J. Biol. Chem.">
        <title>Analysis of pp60c-src protein kinase activity in human tumor cell lines and tissues.</title>
        <authorList>
            <person name="Rosen N."/>
            <person name="Bolen J.B."/>
            <person name="Schwartz A.M."/>
            <person name="Cohen P."/>
            <person name="DeSeau V."/>
            <person name="Israel M.A."/>
        </authorList>
    </citation>
    <scope>ROLE IN TUMOR TISSUES</scope>
</reference>
<reference key="10">
    <citation type="journal article" date="1989" name="J. Clin. Invest.">
        <title>pp60c-src activation in human colon carcinoma.</title>
        <authorList>
            <person name="Cartwright C.A."/>
            <person name="Kamps M.P."/>
            <person name="Meisler A.I."/>
            <person name="Pipas J.M."/>
            <person name="Eckhart W."/>
        </authorList>
    </citation>
    <scope>ROLE IN COLON CARCINOMA</scope>
</reference>
<reference key="11">
    <citation type="journal article" date="1990" name="Mol. Cell. Biol.">
        <title>Identification of a novel neuronal C-SRC exon expressed in human brain.</title>
        <authorList>
            <person name="Pyper J.M."/>
            <person name="Bolen J.B."/>
        </authorList>
    </citation>
    <scope>ALTERNATIVE SPLICING</scope>
    <scope>DEVELOPMENTAL STAGE (ISOFORMS 1; 2 AND 3)</scope>
</reference>
<reference key="12">
    <citation type="journal article" date="1993" name="Cancer Res.">
        <title>Expression of alternatively spliced src messenger RNAs related to neuronal differentiation in human neuroblastomas.</title>
        <authorList>
            <person name="Matsunaga T."/>
            <person name="Shirasawa H."/>
            <person name="Tanabe M."/>
            <person name="Ohnuma N."/>
            <person name="Takahashi H."/>
            <person name="Simizu B."/>
        </authorList>
    </citation>
    <scope>TISSUE SPECIFICITY (ISOFORMS 1; 2 AND 3)</scope>
</reference>
<reference key="13">
    <citation type="journal article" date="1994" name="EMBO J.">
        <title>Association of the amino-terminal half of c-Src with focal adhesions alters their properties and is regulated by phosphorylation of tyrosine 527.</title>
        <authorList>
            <person name="Kaplan K.B."/>
            <person name="Bibbins K.B."/>
            <person name="Swedlow J.R."/>
            <person name="Arnaud M."/>
            <person name="Morgan D.O."/>
            <person name="Varmus H.E."/>
        </authorList>
    </citation>
    <scope>SUBCELLULAR LOCATION</scope>
    <scope>PHOSPHORYLATION AT TYR-530</scope>
    <scope>MYRISTOYLATION AT GLY-2</scope>
</reference>
<reference key="14">
    <citation type="journal article" date="1994" name="J. Biol. Chem.">
        <title>Cdc2-mediated modulation of pp60c-src activity.</title>
        <authorList>
            <person name="Stover D.R."/>
            <person name="Liebetanz J."/>
            <person name="Lydon N.B."/>
        </authorList>
    </citation>
    <scope>CATALYTIC ACTIVITY</scope>
    <scope>ACTIVITY REGULATION</scope>
    <scope>PHOSPHORYLATION AT TYR-530</scope>
</reference>
<reference key="15">
    <citation type="journal article" date="1995" name="J. Virol.">
        <title>Highly specific antibody to Rous sarcoma virus src gene product recognizes nuclear and nucleolar antigens in human cells.</title>
        <authorList>
            <person name="David-Pfeuty T."/>
            <person name="Nouvian-Dooghe Y."/>
        </authorList>
    </citation>
    <scope>FUNCTION</scope>
    <scope>SUBCELLULAR LOCATION</scope>
</reference>
<reference key="16">
    <citation type="journal article" date="1995" name="Oncogene">
        <title>Association of pp60c-src with biliary glycoprotein (CD66a), an adhesion molecule of the carcinoembryonic antigen family downregulated in colorectal carcinomas.</title>
        <authorList>
            <person name="Bruemmer J."/>
            <person name="Neumaier M."/>
            <person name="Goepfert C."/>
            <person name="Wagener C."/>
        </authorList>
    </citation>
    <scope>INTERACTION WITH CEACAM1</scope>
</reference>
<reference key="17">
    <citation type="journal article" date="1996" name="J. Immunol.">
        <title>Physical and functional association of Fc mu receptor on human natural killer cells with the zeta- and Fc epsilon RI gamma-chains and with src family protein tyrosine kinases.</title>
        <authorList>
            <person name="Rabinowich H."/>
            <person name="Manciulea M."/>
            <person name="Metes D."/>
            <person name="Sulica A."/>
            <person name="Herberman R.B."/>
            <person name="Corey S.J."/>
            <person name="Whiteside T.L."/>
        </authorList>
    </citation>
    <scope>FUNCTION</scope>
    <scope>CATALYTIC ACTIVITY</scope>
    <scope>ACTIVITY REGULATION</scope>
    <scope>INTERACTION WITH FCAMR</scope>
</reference>
<reference key="18">
    <citation type="journal article" date="1996" name="Proc. Natl. Acad. Sci. U.S.A.">
        <title>Hepatocyte growth factor is a coupling factor for osteoclasts and osteoblasts in vitro.</title>
        <authorList>
            <person name="Grano M."/>
            <person name="Galimi F."/>
            <person name="Zambonin G."/>
            <person name="Colucci S."/>
            <person name="Cottone E."/>
            <person name="Zallone A.Z."/>
            <person name="Comoglio P.M."/>
        </authorList>
    </citation>
    <scope>FUNCTION IN HGF SIGNALING PATHWAY</scope>
</reference>
<reference key="19">
    <citation type="journal article" date="1998" name="Biochem. Biophys. Res. Commun.">
        <title>Butein, a specific protein tyrosine kinase inhibitor.</title>
        <authorList>
            <person name="Yang E.B."/>
            <person name="Zhang K."/>
            <person name="Cheng L.Y."/>
            <person name="Mack P."/>
        </authorList>
    </citation>
    <scope>CATALYTIC ACTIVITY</scope>
    <scope>ACTIVITY REGULATION</scope>
</reference>
<reference key="20">
    <citation type="journal article" date="1998" name="Mol. Cell. Biol.">
        <title>RACK1, a receptor for activated C kinase and a homolog of the beta subunit of G proteins, inhibits activity of src tyrosine kinases and growth of NIH 3T3 cells.</title>
        <authorList>
            <person name="Chang B.Y."/>
            <person name="Conroy K.B."/>
            <person name="Machleder E.M."/>
            <person name="Cartwright C.A."/>
        </authorList>
    </citation>
    <scope>INTERACTION WITH RACK1</scope>
</reference>
<reference key="21">
    <citation type="journal article" date="1999" name="Science">
        <title>Beta-arrestin-dependent formation of beta2 adrenergic receptor-Src protein kinase complexes.</title>
        <authorList>
            <person name="Luttrell L.M."/>
            <person name="Ferguson S.S.G."/>
            <person name="Daaka Y."/>
            <person name="Miller W.E."/>
            <person name="Maudsley S."/>
            <person name="Della Rocca G.J."/>
            <person name="Lin F.-T."/>
            <person name="Kawakatsu H."/>
            <person name="Owada K."/>
            <person name="Luttrell D.K."/>
            <person name="Caron M.G."/>
            <person name="Lefkowitz R.J."/>
        </authorList>
    </citation>
    <scope>INTERACTION WITH ADRB2 AND ARRB1</scope>
</reference>
<reference key="22">
    <citation type="journal article" date="2000" name="J. Biol. Chem.">
        <title>beta-arrestin1 interacts with the catalytic domain of the tyrosine kinase c-SRC. Role of beta-arrestin1-dependent targeting of c-SRC in receptor endocytosis.</title>
        <authorList>
            <person name="Miller W.E."/>
            <person name="Maudsley S."/>
            <person name="Ahn S."/>
            <person name="Khan K.D."/>
            <person name="Luttrell L.M."/>
            <person name="Lefkowitz R.J."/>
        </authorList>
    </citation>
    <scope>INTERACTION WITH ARRB1 AND ARRB2</scope>
</reference>
<reference key="23">
    <citation type="journal article" date="2000" name="J. Biol. Chem.">
        <title>Identification and characterization of a new family of guanine nucleotide exchange factors for the ras-related GTPase Ral.</title>
        <authorList>
            <person name="Rebhun J.F."/>
            <person name="Chen H."/>
            <person name="Quilliam L.A."/>
        </authorList>
    </citation>
    <scope>INTERACTION WITH RALGPS1</scope>
</reference>
<reference key="24">
    <citation type="journal article" date="2001" name="Eur. J. Biochem.">
        <title>Differential actions of p60c-Src and Lck kinases on the Ras regulators p120-GAP and GDP/GTP exchange factor CDC25Mm.</title>
        <authorList>
            <person name="Giglione C."/>
            <person name="Gonfloni S."/>
            <person name="Parmeggiani A."/>
        </authorList>
    </citation>
    <scope>FUNCTION IN PHOSPHORYLATION OF RASA1 AND RASGRF1</scope>
</reference>
<reference key="25">
    <citation type="journal article" date="2001" name="J. Biol. Chem.">
        <title>The c-Src tyrosine kinase regulates signaling of the human DF3/MUC1 carcinoma-associated antigen with GSK3 beta and beta-catenin.</title>
        <authorList>
            <person name="Li Y."/>
            <person name="Kuwahara H."/>
            <person name="Ren J."/>
            <person name="Wen G."/>
            <person name="Kufe D."/>
        </authorList>
    </citation>
    <scope>INTERACTION WITH MUC1</scope>
</reference>
<reference key="26">
    <citation type="journal article" date="2001" name="J. Biol. Chem.">
        <title>The interaction of Src and RACK1 is enhanced by activation of protein kinase C and tyrosine phosphorylation of RACK1.</title>
        <authorList>
            <person name="Chang B.Y."/>
            <person name="Chiang M."/>
            <person name="Cartwright C.A."/>
        </authorList>
    </citation>
    <scope>INTERACTION WITH RACK1</scope>
</reference>
<reference key="27">
    <citation type="journal article" date="2001" name="J. Biol. Chem.">
        <title>The ORF3 protein of hepatitis E virus binds to Src homology 3 domains and activates MAPK.</title>
        <authorList>
            <person name="Korkaya H."/>
            <person name="Jameel S."/>
            <person name="Gupta D."/>
            <person name="Tyagi S."/>
            <person name="Kumar R."/>
            <person name="Zafrullah M."/>
            <person name="Mazumdar M."/>
            <person name="Lal S.K."/>
            <person name="Xiaofang L."/>
            <person name="Sehgal D."/>
            <person name="Das S.R."/>
            <person name="Sahal D."/>
        </authorList>
    </citation>
    <scope>INTERACTION WITH HEV ORF3 PROTEIN (MICROBIAL INFECTION)</scope>
</reference>
<reference key="28">
    <citation type="journal article" date="2002" name="J. Biol. Chem.">
        <title>Src-induced phosphorylation of caveolin-2 on tyrosine 19. Phospho-caveolin-2 (Tyr(P)19) is localized near focal adhesions, remains associated with lipid rafts/caveolae, but no longer forms a high molecular mass hetero-oligomer with caveolin-1.</title>
        <authorList>
            <person name="Lee H."/>
            <person name="Park D.S."/>
            <person name="Wang X.B."/>
            <person name="Scherer P.E."/>
            <person name="Schwartz P.E."/>
            <person name="Lisanti M.P."/>
        </authorList>
    </citation>
    <scope>INTERACTION WITH CAV2</scope>
</reference>
<reference key="29">
    <citation type="journal article" date="2002" name="Proc. Natl. Acad. Sci. U.S.A.">
        <title>Estrogen receptor-interacting protein that modulates its nongenomic activity-crosstalk with Src/Erk phosphorylation cascade.</title>
        <authorList>
            <person name="Wong C.-W."/>
            <person name="McNally C."/>
            <person name="Nickbarg E."/>
            <person name="Komm B.S."/>
            <person name="Cheskis B.J."/>
        </authorList>
    </citation>
    <scope>RETRACTED PAPER</scope>
</reference>
<reference key="30">
    <citation type="journal article" date="2009" name="Proc. Natl. Acad. Sci. U.S.A.">
        <authorList>
            <person name="Wong C.W."/>
            <person name="McNally C."/>
            <person name="Nickbarg E."/>
            <person name="Komm B.S."/>
            <person name="Cheskis B.J."/>
        </authorList>
    </citation>
    <scope>RETRACTION NOTICE OF PUBMED:12415108</scope>
</reference>
<reference key="31">
    <citation type="journal article" date="2003" name="J. Cell Biol.">
        <title>Regulation of cytochrome c oxidase activity by c-Src in osteoclasts.</title>
        <authorList>
            <person name="Miyazaki T."/>
            <person name="Neff L."/>
            <person name="Tanaka S."/>
            <person name="Horne W.C."/>
            <person name="Baron R."/>
        </authorList>
    </citation>
    <scope>FUNCTION</scope>
    <scope>SUBCELLULAR LOCATION</scope>
</reference>
<reference key="32">
    <citation type="journal article" date="2003" name="J. Cell Biol.">
        <title>EphB1 recruits c-Src and p52Shc to activate MAPK/ERK and promote chemotaxis.</title>
        <authorList>
            <person name="Vindis C."/>
            <person name="Cerretti D.P."/>
            <person name="Daniel T.O."/>
            <person name="Huynh-Do U."/>
        </authorList>
    </citation>
    <scope>INTERACTION WITH EPHB1</scope>
</reference>
<reference key="33">
    <citation type="journal article" date="2003" name="J. Pept. Res.">
        <title>Development and characterization of potent and specific peptide inhibitors of p60c-src protein tyrosine kinase using pseudosubstrate-based inhibitor design approach.</title>
        <authorList>
            <person name="Kamath J.R."/>
            <person name="Liu R."/>
            <person name="Enstrom A.M."/>
            <person name="Lou Q."/>
            <person name="Lam K.S."/>
        </authorList>
    </citation>
    <scope>CATALYTIC ACTIVITY</scope>
    <scope>ACTIVITY REGULATION</scope>
</reference>
<reference key="34">
    <citation type="journal article" date="2003" name="Mol. Cell. Biol.">
        <title>Pyk2- and Src-dependent tyrosine phosphorylation of PDK1 regulates focal adhesions.</title>
        <authorList>
            <person name="Taniyama Y."/>
            <person name="Weber D.S."/>
            <person name="Rocic P."/>
            <person name="Hilenski L."/>
            <person name="Akers M.L."/>
            <person name="Park J."/>
            <person name="Hemmings B.A."/>
            <person name="Alexander R.W."/>
            <person name="Griendling K.K."/>
        </authorList>
    </citation>
    <scope>FUNCTION IN PHOSPHORYLATION OF PDPK1</scope>
    <scope>INTERACTION WITH PTK2B/PYK2</scope>
</reference>
<reference key="35">
    <citation type="journal article" date="2004" name="Biochemistry">
        <title>Tyrosine phosphorylation of caveolin-2 at residue 27: differences in the spatial and temporal behavior of phospho-Cav-2 (pY19 and pY27).</title>
        <authorList>
            <person name="Wang X.B."/>
            <person name="Lee H."/>
            <person name="Capozza F."/>
            <person name="Marmon S."/>
            <person name="Sotgia F."/>
            <person name="Brooks J.W."/>
            <person name="Campos-Gonzalez R."/>
            <person name="Lisanti M.P."/>
        </authorList>
    </citation>
    <scope>INTERACTION WITH CAV2</scope>
</reference>
<reference key="36">
    <citation type="journal article" date="2004" name="Mol. Endocrinol.">
        <title>Characterization of the interactions of estrogen receptor and MNAR in the activation of cSrc.</title>
        <authorList>
            <person name="Barletta F."/>
            <person name="Wong C.-W."/>
            <person name="McNally C."/>
            <person name="Komm B.S."/>
            <person name="Katzenellenbogen B."/>
            <person name="Cheskis B.J."/>
        </authorList>
    </citation>
    <scope>INTERACTION WITH PELP1</scope>
</reference>
<reference key="37">
    <citation type="journal article" date="2004" name="Oncogene">
        <title>Cbl-c suppresses v-Src-induced transformation through ubiquitin-dependent protein degradation.</title>
        <authorList>
            <person name="Kim M."/>
            <person name="Tezuka T."/>
            <person name="Tanaka K."/>
            <person name="Yamamoto T."/>
        </authorList>
    </citation>
    <scope>INTERACTION WITH CBCLC</scope>
    <scope>PHOSPHORYLATION AT TYR-419</scope>
    <scope>MUTAGENESIS OF LYS-298</scope>
</reference>
<reference key="38">
    <citation type="journal article" date="2005" name="Cell">
        <title>The C2 domain of PKCdelta is a phosphotyrosine binding domain.</title>
        <authorList>
            <person name="Benes C.H."/>
            <person name="Wu N."/>
            <person name="Elia A.E.H."/>
            <person name="Dharia T."/>
            <person name="Cantley L.C."/>
            <person name="Soltoff S.P."/>
        </authorList>
    </citation>
    <scope>INTERACTION WITH CDCP1</scope>
</reference>
<reference key="39">
    <citation type="journal article" date="2005" name="J. Biol. Chem.">
        <title>Tyrosine 740 phosphorylation of discoidin domain receptor 2 by Src stimulates intramolecular autophosphorylation and Shc signaling complex formation.</title>
        <authorList>
            <person name="Yang K."/>
            <person name="Kim J.H."/>
            <person name="Kim H.J."/>
            <person name="Park I.S."/>
            <person name="Kim I.Y."/>
            <person name="Yang B.S."/>
        </authorList>
    </citation>
    <scope>FUNCTION IN PHOSPHORYLATION OF DDR2</scope>
</reference>
<reference key="40">
    <citation type="journal article" date="2006" name="EMBO J.">
        <title>Src kinase phosphorylates Caspase-8 on Tyr380: a novel mechanism of apoptosis suppression.</title>
        <authorList>
            <person name="Cursi S."/>
            <person name="Rufini A."/>
            <person name="Stagni V."/>
            <person name="Condo I."/>
            <person name="Matafora V."/>
            <person name="Bachi A."/>
            <person name="Bonifazi A.P."/>
            <person name="Coppola L."/>
            <person name="Superti-Furga G."/>
            <person name="Testi R."/>
            <person name="Barila D."/>
        </authorList>
    </citation>
    <scope>FUNCTION</scope>
</reference>
<reference key="41">
    <citation type="journal article" date="2006" name="Mol. Cell. Biol.">
        <title>The adaptor protein Tom1L1 is a negative regulator of Src mitogenic signaling induced by growth factors.</title>
        <authorList>
            <person name="Franco M."/>
            <person name="Furstoss O."/>
            <person name="Simon V."/>
            <person name="Benistant C."/>
            <person name="Hong W.J."/>
            <person name="Roche S."/>
        </authorList>
    </citation>
    <scope>INTERACTION WITH TOM1L2</scope>
</reference>
<reference key="42">
    <citation type="journal article" date="2006" name="Neuroendocrinology">
        <title>Gonadotropin-releasing hormone functionally antagonizes testosterone activation of the human androgen receptor in prostate cells through focal adhesion complexes involving Hic-5.</title>
        <authorList>
            <person name="Maudsley S."/>
            <person name="Davidson L."/>
            <person name="Pawson A.J."/>
            <person name="Freestone S.H."/>
            <person name="Lopez de Maturana R."/>
            <person name="Thomson A.A."/>
            <person name="Millar R.P."/>
        </authorList>
    </citation>
    <scope>INTERACTION WITH TGFB1I1</scope>
</reference>
<reference key="43">
    <citation type="journal article" date="2007" name="Development">
        <title>Amotl2 is essential for cell movements in zebrafish embryo and regulates c-Src translocation.</title>
        <authorList>
            <person name="Huang H."/>
            <person name="Lu F.I."/>
            <person name="Jia S."/>
            <person name="Meng S."/>
            <person name="Cao Y."/>
            <person name="Wang Y."/>
            <person name="Ma W."/>
            <person name="Yin K."/>
            <person name="Wen Z."/>
            <person name="Peng J."/>
            <person name="Thisse C."/>
            <person name="Thisse B."/>
            <person name="Meng A."/>
        </authorList>
    </citation>
    <scope>INTERACTION WITH AMOTL2</scope>
</reference>
<reference key="44">
    <citation type="journal article" date="2007" name="EMBO J.">
        <title>p140Cap protein suppresses tumour cell properties, regulating Csk and Src kinase activity.</title>
        <authorList>
            <person name="Di Stefano P."/>
            <person name="Damiano L."/>
            <person name="Cabodi S."/>
            <person name="Aramu S."/>
            <person name="Tordella L."/>
            <person name="Praduroux A."/>
            <person name="Piva R."/>
            <person name="Cavallo F."/>
            <person name="Forni G."/>
            <person name="Silengo L."/>
            <person name="Tarone G."/>
            <person name="Turco E."/>
            <person name="Defilippi P."/>
        </authorList>
    </citation>
    <scope>INTERACTION WITH SRCIN1</scope>
</reference>
<reference key="45">
    <citation type="journal article" date="2008" name="Am. J. Physiol.">
        <title>EGF mediates calcium-activated chloride channel activation in the human bronchial epithelial cell line 16HBE14o-: involvement of tyrosine kinase p60c-src.</title>
        <authorList>
            <person name="Jeulin C."/>
            <person name="Seltzer V."/>
            <person name="Bailbe D."/>
            <person name="Andreau K."/>
            <person name="Marano F."/>
        </authorList>
    </citation>
    <scope>FUNCTION</scope>
</reference>
<reference key="46">
    <citation type="journal article" date="2008" name="J. Biol. Chem.">
        <title>Regulation of 3-phosphoinositide-dependent protein kinase-1 (PDK1) by Src involves tyrosine phosphorylation of PDK1 and Src homology 2 domain binding.</title>
        <authorList>
            <person name="Yang K.J."/>
            <person name="Shin S."/>
            <person name="Piao L."/>
            <person name="Shin E."/>
            <person name="Li Y."/>
            <person name="Park K.A."/>
            <person name="Byun H.S."/>
            <person name="Won M."/>
            <person name="Hong J."/>
            <person name="Kweon G.R."/>
            <person name="Hur G.M."/>
            <person name="Seok J.H."/>
            <person name="Chun T."/>
            <person name="Brazil D.P."/>
            <person name="Hemmings B.A."/>
            <person name="Park J."/>
        </authorList>
    </citation>
    <scope>INTERACTION WITH PDPK1</scope>
</reference>
<reference key="47">
    <citation type="journal article" date="2008" name="J. Proteome Res.">
        <title>Phosphoproteome of resting human platelets.</title>
        <authorList>
            <person name="Zahedi R.P."/>
            <person name="Lewandrowski U."/>
            <person name="Wiesner J."/>
            <person name="Wortelkamp S."/>
            <person name="Moebius J."/>
            <person name="Schuetz C."/>
            <person name="Walter U."/>
            <person name="Gambaryan S."/>
            <person name="Sickmann A."/>
        </authorList>
    </citation>
    <scope>PHOSPHORYLATION [LARGE SCALE ANALYSIS] AT SER-17</scope>
    <scope>IDENTIFICATION BY MASS SPECTROMETRY [LARGE SCALE ANALYSIS]</scope>
    <source>
        <tissue>Platelet</tissue>
    </source>
</reference>
<reference key="48">
    <citation type="journal article" date="2008" name="Mol. Cell">
        <title>Regulation of estrogen rapid signaling through arginine methylation by PRMT1.</title>
        <authorList>
            <person name="Le Romancer M."/>
            <person name="Treilleux I."/>
            <person name="Leconte N."/>
            <person name="Robin-Lespinasse Y."/>
            <person name="Sentis S."/>
            <person name="Bouchekioua-Bouzaghou K."/>
            <person name="Goddard S."/>
            <person name="Gobert-Gosse S."/>
            <person name="Corbo L."/>
        </authorList>
    </citation>
    <scope>INTERACTION WITH PTK2/FAK1; PI3KR1/2 AND ESR1</scope>
</reference>
<reference key="49">
    <citation type="journal article" date="2008" name="Mol. Cell">
        <title>Kinase-selective enrichment enables quantitative phosphoproteomics of the kinome across the cell cycle.</title>
        <authorList>
            <person name="Daub H."/>
            <person name="Olsen J.V."/>
            <person name="Bairlein M."/>
            <person name="Gnad F."/>
            <person name="Oppermann F.S."/>
            <person name="Korner R."/>
            <person name="Greff Z."/>
            <person name="Keri G."/>
            <person name="Stemmann O."/>
            <person name="Mann M."/>
        </authorList>
    </citation>
    <scope>IDENTIFICATION BY MASS SPECTROMETRY [LARGE SCALE ANALYSIS]</scope>
    <source>
        <tissue>Cervix carcinoma</tissue>
    </source>
</reference>
<reference key="50">
    <citation type="journal article" date="2009" name="BMC Immunol.">
        <title>Identification of SH3 domain interaction partners of human FasL (CD178) by phage display screening.</title>
        <authorList>
            <person name="Voss M."/>
            <person name="Lettau M."/>
            <person name="Janssen O."/>
        </authorList>
    </citation>
    <scope>INTERACTION WITH FASLG</scope>
</reference>
<reference key="51">
    <citation type="journal article" date="2009" name="Exp. Cell Res.">
        <title>The PDZ protein MPP2 interacts with c-Src in epithelial cells.</title>
        <authorList>
            <person name="Baumgartner M."/>
            <person name="Weiss A."/>
            <person name="Fritzius T."/>
            <person name="Heinrich J."/>
            <person name="Moelling K."/>
        </authorList>
    </citation>
    <scope>INTERACTION WITH MPP2</scope>
</reference>
<reference key="52">
    <citation type="journal article" date="2009" name="J. Biol. Chem.">
        <title>The tyrosine kinase c-Src enhances RIG-I (retinoic acid-inducible gene I)-elicited antiviral signaling.</title>
        <authorList>
            <person name="Johnsen I.B."/>
            <person name="Nguyen T.T."/>
            <person name="Bergstroem B."/>
            <person name="Fitzgerald K.A."/>
            <person name="Anthonsen M.W."/>
        </authorList>
    </citation>
    <scope>FUNCTION</scope>
    <scope>INTERACTION WITH TRAF3; MAVS; RIGI AND TBK1</scope>
</reference>
<reference key="53">
    <citation type="journal article" date="2009" name="J. Cell Biol.">
        <title>Reversion-induced LIM interaction with Src reveals a novel Src inactivation cycle.</title>
        <authorList>
            <person name="Zhang Y."/>
            <person name="Tu Y."/>
            <person name="Zhao J."/>
            <person name="Chen K."/>
            <person name="Wu C."/>
        </authorList>
    </citation>
    <scope>FUNCTION</scope>
    <scope>CATALYTIC ACTIVITY</scope>
    <scope>INTERACTION WITH PDLIM4</scope>
    <scope>SUBCELLULAR LOCATION</scope>
    <scope>PHOSPHORYLATION AT TYR-419 AND TYR-530</scope>
    <scope>MUTAGENESIS OF PRO-302; PRO-307 AND TYR-419</scope>
</reference>
<reference key="54">
    <citation type="journal article" date="2009" name="Mol. Cell. Biol.">
        <title>New role for the protein tyrosine phosphatase DEP-1 in Akt activation and endothelial cell survival.</title>
        <authorList>
            <person name="Chabot C."/>
            <person name="Spring K."/>
            <person name="Gratton J.P."/>
            <person name="Elchebly M."/>
            <person name="Royal I."/>
        </authorList>
    </citation>
    <scope>PHOSPHORYLATION AT TYR-419</scope>
    <scope>DEPHOSPHORYLATION AT TYR-419 BY PTPRJ</scope>
</reference>
<reference key="55">
    <citation type="journal article" date="2009" name="Mol. Cell. Proteomics">
        <title>Large-scale proteomics analysis of the human kinome.</title>
        <authorList>
            <person name="Oppermann F.S."/>
            <person name="Gnad F."/>
            <person name="Olsen J.V."/>
            <person name="Hornberger R."/>
            <person name="Greff Z."/>
            <person name="Keri G."/>
            <person name="Mann M."/>
            <person name="Daub H."/>
        </authorList>
    </citation>
    <scope>PHOSPHORYLATION [LARGE SCALE ANALYSIS] AT SER-17 AND TYR-530</scope>
    <scope>IDENTIFICATION BY MASS SPECTROMETRY [LARGE SCALE ANALYSIS]</scope>
</reference>
<reference key="56">
    <citation type="journal article" date="2009" name="Sci. Signal.">
        <title>Quantitative phosphoproteomic analysis of T cell receptor signaling reveals system-wide modulation of protein-protein interactions.</title>
        <authorList>
            <person name="Mayya V."/>
            <person name="Lundgren D.H."/>
            <person name="Hwang S.-I."/>
            <person name="Rezaul K."/>
            <person name="Wu L."/>
            <person name="Eng J.K."/>
            <person name="Rodionov V."/>
            <person name="Han D.K."/>
        </authorList>
    </citation>
    <scope>IDENTIFICATION BY MASS SPECTROMETRY [LARGE SCALE ANALYSIS]</scope>
    <source>
        <tissue>Leukemic T-cell</tissue>
    </source>
</reference>
<reference key="57">
    <citation type="journal article" date="2010" name="Biochem. Biophys. Res. Commun.">
        <title>Heme controls the regulation of protein tyrosine kinases Jak2 and Src.</title>
        <authorList>
            <person name="Yao X."/>
            <person name="Balamurugan P."/>
            <person name="Arvey A."/>
            <person name="Leslie C."/>
            <person name="Zhang L."/>
        </authorList>
    </citation>
    <scope>CATALYTIC ACTIVITY</scope>
    <scope>ACTIVITY REGULATION</scope>
</reference>
<reference key="58">
    <citation type="journal article" date="2010" name="J. Biol. Chem.">
        <title>Src kinase phosphorylates RUNX3 at tyrosine residues and localizes the protein in the cytoplasm.</title>
        <authorList>
            <person name="Goh Y.M."/>
            <person name="Cinghu S."/>
            <person name="Hong E.T."/>
            <person name="Lee Y.S."/>
            <person name="Kim J.H."/>
            <person name="Jang J.W."/>
            <person name="Li Y.H."/>
            <person name="Chi X.Z."/>
            <person name="Lee K.S."/>
            <person name="Wee H."/>
            <person name="Ito Y."/>
            <person name="Oh B.C."/>
            <person name="Bae S.C."/>
        </authorList>
    </citation>
    <scope>FUNCTION</scope>
    <scope>INTERACTION WITH RUNX3</scope>
</reference>
<reference key="59">
    <citation type="journal article" date="2010" name="J. Biol. Chem.">
        <title>The N terminus of Cbl-c regulates ubiquitin ligase activity by modulating affinity for the ubiquitin-conjugating enzyme.</title>
        <authorList>
            <person name="Ryan P.E."/>
            <person name="Sivadasan-Nair N."/>
            <person name="Nau M.M."/>
            <person name="Nicholas S."/>
            <person name="Lipkowitz S."/>
        </authorList>
    </citation>
    <scope>FUNCTION IN CBLC PHOSPHORYLATION</scope>
</reference>
<reference key="60">
    <citation type="journal article" date="2010" name="Proc. Natl. Acad. Sci. U.S.A.">
        <title>Regulation of PTEN/Akt and MAP kinase signaling pathways by the ubiquitin ligase activators Ndfip1 and Ndfip2.</title>
        <authorList>
            <person name="Mund T."/>
            <person name="Pelham H.R."/>
        </authorList>
    </citation>
    <scope>INTERACTION WITH NDFIP1 AND NDFIP2</scope>
</reference>
<reference key="61">
    <citation type="journal article" date="2011" name="Biochem. J.">
        <title>The Cdc42-associated kinase ACK1 is not auto-inhibited but requires Src for activation.</title>
        <authorList>
            <person name="Chan W."/>
            <person name="Sit S.T."/>
            <person name="Manser E."/>
        </authorList>
    </citation>
    <scope>FUNCTION</scope>
    <scope>INTERACTION WITH TNK2</scope>
</reference>
<reference key="62">
    <citation type="journal article" date="2011" name="Cell. Mol. Life Sci.">
        <title>Cdk5 targets active Src for ubiquitin-dependent degradation by phosphorylating Src(S75).</title>
        <authorList>
            <person name="Pan Q."/>
            <person name="Qiao F."/>
            <person name="Gao C."/>
            <person name="Norman B."/>
            <person name="Optican L."/>
            <person name="Zelenka P.S."/>
        </authorList>
    </citation>
    <scope>PHOSPHORYLATION AT SER-75</scope>
</reference>
<reference key="63">
    <citation type="journal article" date="2011" name="J. Biol. Chem.">
        <title>PRR7 is a transmembrane adaptor protein expressed in activated T cells involved in regulation of T cell receptor signaling and apoptosis.</title>
        <authorList>
            <person name="Hrdinka M."/>
            <person name="Draber P."/>
            <person name="Stepanek O."/>
            <person name="Ormsby T."/>
            <person name="Otahal P."/>
            <person name="Angelisova P."/>
            <person name="Brdicka T."/>
            <person name="Paces J."/>
            <person name="Horejsi V."/>
            <person name="Drbal K."/>
        </authorList>
    </citation>
    <scope>INTERACTION WITH PRR7</scope>
</reference>
<reference key="64">
    <citation type="journal article" date="2011" name="Mol. Biol. Cell">
        <title>A direct interaction between the large GTPase dynamin-2 and FAK regulates focal adhesion dynamics in response to active Src.</title>
        <authorList>
            <person name="Wang Y."/>
            <person name="Cao H."/>
            <person name="Chen J."/>
            <person name="McNiven M.A."/>
        </authorList>
    </citation>
    <scope>FUNCTION IN FOCAL ADHESION DYNAMICS</scope>
    <scope>INTERACTION WITH PTK2/FAK1 AND DNM2</scope>
</reference>
<reference key="65">
    <citation type="journal article" date="2012" name="J. Pathol.">
        <title>Non-junctional human desmoglein 3 acts as an upstream regulator of Src in E-cadherin adhesion, a pathway possibly involved in the pathogenesis of pemphigus vulgaris.</title>
        <authorList>
            <person name="Tsang S.M."/>
            <person name="Brown L."/>
            <person name="Lin K."/>
            <person name="Liu L."/>
            <person name="Piper K."/>
            <person name="O'Toole E.A."/>
            <person name="Grose R."/>
            <person name="Hart I.R."/>
            <person name="Garrod D.R."/>
            <person name="Fortune F."/>
            <person name="Wan H."/>
        </authorList>
    </citation>
    <scope>SUBCELLULAR LOCATION</scope>
    <scope>TISSUE SPECIFICITY</scope>
</reference>
<reference key="66">
    <citation type="journal article" date="2012" name="Mol. Cell. Biol.">
        <title>Protein tyrosine phosphatase alpha phosphotyrosyl-789 binds BCAR3 to position Cas for activation at integrin-mediated focal adhesions.</title>
        <authorList>
            <person name="Sun G."/>
            <person name="Cheng S.Y."/>
            <person name="Chen M."/>
            <person name="Lim C.J."/>
            <person name="Pallen C.J."/>
        </authorList>
    </citation>
    <scope>IDENTIFICATION IN A COMPLEX WITH PTPRA; BCAR1 AND BCAR3</scope>
    <scope>SUBCELLULAR LOCATION</scope>
</reference>
<reference key="67">
    <citation type="journal article" date="2013" name="J. Proteome Res.">
        <title>Toward a comprehensive characterization of a human cancer cell phosphoproteome.</title>
        <authorList>
            <person name="Zhou H."/>
            <person name="Di Palma S."/>
            <person name="Preisinger C."/>
            <person name="Peng M."/>
            <person name="Polat A.N."/>
            <person name="Heck A.J."/>
            <person name="Mohammed S."/>
        </authorList>
    </citation>
    <scope>PHOSPHORYLATION [LARGE SCALE ANALYSIS] AT SER-17 AND SER-75</scope>
    <scope>IDENTIFICATION BY MASS SPECTROMETRY [LARGE SCALE ANALYSIS]</scope>
    <source>
        <tissue>Erythroleukemia</tissue>
    </source>
</reference>
<reference key="68">
    <citation type="journal article" date="2013" name="Oncogene">
        <title>Identification and functional characterization of p130Cas as a substrate of protein tyrosine phosphatase nonreceptor 14.</title>
        <authorList>
            <person name="Zhang P."/>
            <person name="Guo A."/>
            <person name="Possemato A."/>
            <person name="Wang C."/>
            <person name="Beard L."/>
            <person name="Carlin C."/>
            <person name="Markowitz S.D."/>
            <person name="Polakiewicz R.D."/>
            <person name="Wang Z."/>
        </authorList>
    </citation>
    <scope>FUNCTION IN PHOSPHORYLATION OF BCAR1</scope>
</reference>
<reference key="69">
    <citation type="journal article" date="2013" name="Proc. Natl. Acad. Sci. U.S.A.">
        <title>Molecular chaperone TRAP1 regulates a metabolic switch between mitochondrial respiration and aerobic glycolysis.</title>
        <authorList>
            <person name="Yoshida S."/>
            <person name="Tsutsumi S."/>
            <person name="Muhlebach G."/>
            <person name="Sourbier C."/>
            <person name="Lee M.J."/>
            <person name="Lee S."/>
            <person name="Vartholomaiou E."/>
            <person name="Tatokoro M."/>
            <person name="Beebe K."/>
            <person name="Miyajima N."/>
            <person name="Mohney R.P."/>
            <person name="Chen Y."/>
            <person name="Hasumi H."/>
            <person name="Xu W."/>
            <person name="Fukushima H."/>
            <person name="Nakamura K."/>
            <person name="Koga F."/>
            <person name="Kihara K."/>
            <person name="Trepel J."/>
            <person name="Picard D."/>
            <person name="Neckers L."/>
        </authorList>
    </citation>
    <scope>INTERACTION WITH TRAP1</scope>
</reference>
<reference key="70">
    <citation type="journal article" date="2014" name="J. Proteomics">
        <title>An enzyme assisted RP-RPLC approach for in-depth analysis of human liver phosphoproteome.</title>
        <authorList>
            <person name="Bian Y."/>
            <person name="Song C."/>
            <person name="Cheng K."/>
            <person name="Dong M."/>
            <person name="Wang F."/>
            <person name="Huang J."/>
            <person name="Sun D."/>
            <person name="Wang L."/>
            <person name="Ye M."/>
            <person name="Zou H."/>
        </authorList>
    </citation>
    <scope>PHOSPHORYLATION [LARGE SCALE ANALYSIS] AT SER-17</scope>
    <scope>IDENTIFICATION BY MASS SPECTROMETRY [LARGE SCALE ANALYSIS]</scope>
    <source>
        <tissue>Liver</tissue>
    </source>
</reference>
<reference key="71">
    <citation type="journal article" date="2015" name="Cell Tissue Res.">
        <title>c-Src mediated tyrosine phosphorylation of plakophilin 3 as a new mechanism to control desmosome composition in cells exposed to oxidative stress.</title>
        <authorList>
            <person name="Neuber S."/>
            <person name="Jaeger S."/>
            <person name="Meyer M."/>
            <person name="Wischmann V."/>
            <person name="Koch P.J."/>
            <person name="Moll R."/>
            <person name="Schmidt A."/>
        </authorList>
    </citation>
    <scope>FUNCTION</scope>
    <scope>CATALYTIC ACTIVITY</scope>
</reference>
<reference key="72">
    <citation type="journal article" date="2015" name="Nature">
        <title>A gp130-Src-YAP module links inflammation to epithelial regeneration.</title>
        <authorList>
            <person name="Taniguchi K."/>
            <person name="Wu L.W."/>
            <person name="Grivennikov S.I."/>
            <person name="de Jong P.R."/>
            <person name="Lian I."/>
            <person name="Yu F.X."/>
            <person name="Wang K."/>
            <person name="Ho S.B."/>
            <person name="Boland B.S."/>
            <person name="Chang J.T."/>
            <person name="Sandborn W.J."/>
            <person name="Hardiman G."/>
            <person name="Raz E."/>
            <person name="Maehara Y."/>
            <person name="Yoshimura A."/>
            <person name="Zucman-Rossi J."/>
            <person name="Guan K.L."/>
            <person name="Karin M."/>
        </authorList>
    </citation>
    <scope>FUNCTION</scope>
    <scope>PHOSPHORYLATION AT TYR-419</scope>
    <scope>INTERACTION WITH IL6ST</scope>
</reference>
<reference key="73">
    <citation type="journal article" date="2016" name="Sci. Transl. Med.">
        <title>A dominant gain-of-function mutation in universal tyrosine kinase SRC causes thrombocytopenia, myelofibrosis, bleeding, and bone pathologies.</title>
        <authorList>
            <consortium name="BRIDGE-BPD Consortium"/>
            <person name="Turro E."/>
            <person name="Greene D."/>
            <person name="Wijgaerts A."/>
            <person name="Thys C."/>
            <person name="Lentaigne C."/>
            <person name="Bariana T.K."/>
            <person name="Westbury S.K."/>
            <person name="Kelly A.M."/>
            <person name="Selleslag D."/>
            <person name="Stephens J.C."/>
            <person name="Papadia S."/>
            <person name="Simeoni I."/>
            <person name="Penkett C.J."/>
            <person name="Ashford S."/>
            <person name="Attwood A."/>
            <person name="Austin S."/>
            <person name="Bakchoul T."/>
            <person name="Collins P."/>
            <person name="Deevi S.V."/>
            <person name="Favier R."/>
            <person name="Kostadima M."/>
            <person name="Lambert M.P."/>
            <person name="Mathias M."/>
            <person name="Millar C.M."/>
            <person name="Peerlinck K."/>
            <person name="Perry D.J."/>
            <person name="Schulman S."/>
            <person name="Whitehorn D."/>
            <person name="Wittevrongel C."/>
            <person name="De Maeyer M."/>
            <person name="Rendon A."/>
            <person name="Gomez K."/>
            <person name="Erber W.N."/>
            <person name="Mumford A.D."/>
            <person name="Nurden P."/>
            <person name="Stirrups K."/>
            <person name="Bradley J.R."/>
            <person name="Raymond F.L."/>
            <person name="Laffan M.A."/>
            <person name="Van Geet C."/>
            <person name="Richardson S."/>
            <person name="Freson K."/>
            <person name="Ouwehand W.H."/>
        </authorList>
    </citation>
    <scope>PHOSPHORYLATION AT TYR-419 AND TYR-530</scope>
    <scope>INVOLVEMENT IN THC6</scope>
    <scope>VARIANT THC6 LYS-527</scope>
    <scope>CHARACTERIZATION OF VARIANT THC6 LYS-527</scope>
</reference>
<reference key="74">
    <citation type="journal article" date="2021" name="Front. Immunol.">
        <title>The inhibitory receptor CLEC12A regulates PI3K-Akt signaling to inhibit neutrophil activation and cytokine release.</title>
        <authorList>
            <person name="Pare G."/>
            <person name="Vitry J."/>
            <person name="Merchant M.L."/>
            <person name="Vaillancourt M."/>
            <person name="Murru A."/>
            <person name="Shen Y."/>
            <person name="Elowe S."/>
            <person name="Lahoud M.H."/>
            <person name="Naccache P.H."/>
            <person name="McLeish K.R."/>
            <person name="Fernandes M.J."/>
        </authorList>
    </citation>
    <scope>FUNCTION</scope>
    <scope>CATALYTIC ACTIVITY</scope>
</reference>
<reference key="75">
    <citation type="journal article" date="2017" name="Oncotarget">
        <title>Cancer/testis antigen PIWIL2 suppresses circadian rhythms by regulating the stability and activity of BMAL1 and CLOCK.</title>
        <authorList>
            <person name="Lu Y."/>
            <person name="Zheng X."/>
            <person name="Hu W."/>
            <person name="Bian S."/>
            <person name="Zhang Z."/>
            <person name="Tao D."/>
            <person name="Liu Y."/>
            <person name="Ma Y."/>
        </authorList>
    </citation>
    <scope>INTERACTION WITH P85</scope>
</reference>
<reference key="76">
    <citation type="journal article" date="1996" name="Biochim. Biophys. Acta">
        <title>Regulation, substrates and functions of src.</title>
        <authorList>
            <person name="Brown M.T."/>
            <person name="Cooper J.A."/>
        </authorList>
    </citation>
    <scope>REVIEW ON FUNCTION</scope>
</reference>
<reference key="77">
    <citation type="journal article" date="1997" name="Annu. Rev. Cell Dev. Biol.">
        <title>Cellular functions regulated by Src family kinases.</title>
        <authorList>
            <person name="Thomas S.M."/>
            <person name="Brugge J.S."/>
        </authorList>
    </citation>
    <scope>REVIEW ON FUNCTION</scope>
</reference>
<reference key="78">
    <citation type="journal article" date="2002" name="Cell. Mol. Life Sci.">
        <title>Novel regulation and function of Src tyrosine kinase.</title>
        <authorList>
            <person name="Ma Y.C."/>
            <person name="Huang X.Y."/>
        </authorList>
    </citation>
    <scope>REVIEW ON FUNCTION</scope>
</reference>
<reference key="79">
    <citation type="journal article" date="2019" name="J. Biol. Chem.">
        <title>Phosphorylated tyrosine 93 of hepatitis C virus nonstructural protein 5A is essential for interaction with host c-Src and efficient viral replication.</title>
        <authorList>
            <person name="Klinker S."/>
            <person name="Stindt S."/>
            <person name="Gremer L."/>
            <person name="Bode J.G."/>
            <person name="Gertzen C.G.W."/>
            <person name="Gohlke H."/>
            <person name="Weiergraeber O.H."/>
            <person name="Hoffmann S."/>
            <person name="Willbold D."/>
        </authorList>
    </citation>
    <scope>INTERACTION WITH HCV NON-STRUCTURAL PROTEIN 5A (MICROBIAL INFECTION)</scope>
</reference>
<reference key="80">
    <citation type="journal article" date="2019" name="Science">
        <title>Nuclear hnRNPA2B1 initiates and amplifies the innate immune response to DNA viruses.</title>
        <authorList>
            <person name="Wang L."/>
            <person name="Wen M."/>
            <person name="Cao X."/>
        </authorList>
    </citation>
    <scope>INTERACTION WITH HNRNPA2B1</scope>
</reference>
<reference key="81">
    <citation type="journal article" date="2023" name="Cell Death Differ.">
        <title>Phosphorylation of OTUB1 at Tyr 26 stabilizes the mTORC1 component, Raptor.</title>
        <authorList>
            <person name="Seo S.U."/>
            <person name="Woo S.M."/>
            <person name="Kim M.W."/>
            <person name="Lee E.W."/>
            <person name="Min K.J."/>
            <person name="Kwon T.K."/>
        </authorList>
    </citation>
    <scope>FUNCTION</scope>
    <scope>CATALYTIC ACTIVITY</scope>
</reference>
<reference key="82">
    <citation type="journal article" date="1997" name="Nature">
        <title>Three-dimensional structure of the tyrosine kinase c-Src.</title>
        <authorList>
            <person name="Xu W."/>
            <person name="Harrison S.C."/>
            <person name="Eck M.J."/>
        </authorList>
    </citation>
    <scope>X-RAY CRYSTALLOGRAPHY (1.7 ANGSTROMS) OF 86-536</scope>
</reference>
<reference key="83">
    <citation type="journal article" date="1997" name="Biochemistry">
        <title>Peptide ligands of pp60(c-src) SH2 domains: a thermodynamic and structural study.</title>
        <authorList>
            <person name="Charifson P.S."/>
            <person name="Shewchuk L.M."/>
            <person name="Rocque W."/>
            <person name="Hummel C.W."/>
            <person name="Jordan S.R."/>
            <person name="Mohr C."/>
            <person name="Pacofsky G.J."/>
            <person name="Peel M.R."/>
            <person name="Rodriguez M."/>
            <person name="Sternbach D.D."/>
            <person name="Consler T.G."/>
        </authorList>
    </citation>
    <scope>X-RAY CRYSTALLOGRAPHY (2.2 ANGSTROMS) OF 145-249</scope>
</reference>
<reference key="84">
    <citation type="journal article" date="1995" name="Biochemistry">
        <title>Solution structure of the human pp60c-src SH2 domain complexed with a phosphorylated tyrosine pentapeptide.</title>
        <authorList>
            <person name="Xu R.X."/>
            <person name="Word J.M."/>
            <person name="Davis D.G."/>
            <person name="Rink M.J."/>
            <person name="Willard D.H. Jr."/>
            <person name="Gampe R.T. Jr."/>
        </authorList>
    </citation>
    <scope>STRUCTURE BY NMR OF 204-249</scope>
</reference>
<reference key="85">
    <citation type="journal article" date="2012" name="J. Biochem.">
        <title>Structural flexibility regulates phosphopeptide-binding activity of the tyrosine kinase binding domain of Cbl-c.</title>
        <authorList>
            <person name="Takeshita K."/>
            <person name="Tezuka T."/>
            <person name="Isozaki Y."/>
            <person name="Yamashita E."/>
            <person name="Suzuki M."/>
            <person name="Kim M."/>
            <person name="Yamanashi Y."/>
            <person name="Yamamoto T."/>
            <person name="Nakagawa A."/>
        </authorList>
    </citation>
    <scope>X-RAY CRYSTALLOGRAPHY (1.80 ANGSTROMS) OF 412-424 IN COMPLEX WITH CBLC</scope>
    <scope>UBIQUITINATION</scope>
    <scope>INTERACTION WITH CBLC</scope>
</reference>
<reference key="86">
    <citation type="journal article" date="2007" name="Nature">
        <title>Patterns of somatic mutation in human cancer genomes.</title>
        <authorList>
            <person name="Greenman C."/>
            <person name="Stephens P."/>
            <person name="Smith R."/>
            <person name="Dalgliesh G.L."/>
            <person name="Hunter C."/>
            <person name="Bignell G."/>
            <person name="Davies H."/>
            <person name="Teague J."/>
            <person name="Butler A."/>
            <person name="Stevens C."/>
            <person name="Edkins S."/>
            <person name="O'Meara S."/>
            <person name="Vastrik I."/>
            <person name="Schmidt E.E."/>
            <person name="Avis T."/>
            <person name="Barthorpe S."/>
            <person name="Bhamra G."/>
            <person name="Buck G."/>
            <person name="Choudhury B."/>
            <person name="Clements J."/>
            <person name="Cole J."/>
            <person name="Dicks E."/>
            <person name="Forbes S."/>
            <person name="Gray K."/>
            <person name="Halliday K."/>
            <person name="Harrison R."/>
            <person name="Hills K."/>
            <person name="Hinton J."/>
            <person name="Jenkinson A."/>
            <person name="Jones D."/>
            <person name="Menzies A."/>
            <person name="Mironenko T."/>
            <person name="Perry J."/>
            <person name="Raine K."/>
            <person name="Richardson D."/>
            <person name="Shepherd R."/>
            <person name="Small A."/>
            <person name="Tofts C."/>
            <person name="Varian J."/>
            <person name="Webb T."/>
            <person name="West S."/>
            <person name="Widaa S."/>
            <person name="Yates A."/>
            <person name="Cahill D.P."/>
            <person name="Louis D.N."/>
            <person name="Goldstraw P."/>
            <person name="Nicholson A.G."/>
            <person name="Brasseur F."/>
            <person name="Looijenga L."/>
            <person name="Weber B.L."/>
            <person name="Chiew Y.-E."/>
            <person name="DeFazio A."/>
            <person name="Greaves M.F."/>
            <person name="Green A.R."/>
            <person name="Campbell P."/>
            <person name="Birney E."/>
            <person name="Easton D.F."/>
            <person name="Chenevix-Trench G."/>
            <person name="Tan M.-H."/>
            <person name="Khoo S.K."/>
            <person name="Teh B.T."/>
            <person name="Yuen S.T."/>
            <person name="Leung S.Y."/>
            <person name="Wooster R."/>
            <person name="Futreal P.A."/>
            <person name="Stratton M.R."/>
        </authorList>
    </citation>
    <scope>VARIANT [LARGE SCALE ANALYSIS] THR-237</scope>
</reference>
<protein>
    <recommendedName>
        <fullName evidence="75">Proto-oncogene tyrosine-protein kinase Src</fullName>
        <ecNumber evidence="19 36 43 53 66 69 70">2.7.10.2</ecNumber>
    </recommendedName>
    <alternativeName>
        <fullName>Proto-oncogene c-Src</fullName>
    </alternativeName>
    <alternativeName>
        <fullName>pp60c-src</fullName>
        <shortName>p60-Src</shortName>
    </alternativeName>
</protein>
<gene>
    <name evidence="79" type="primary">SRC</name>
    <name type="synonym">SRC1</name>
</gene>
<proteinExistence type="evidence at protein level"/>
<evidence type="ECO:0000250" key="1"/>
<evidence type="ECO:0000250" key="2">
    <source>
        <dbReference type="UniProtKB" id="P05480"/>
    </source>
</evidence>
<evidence type="ECO:0000250" key="3">
    <source>
        <dbReference type="UniProtKB" id="Q9WUD9"/>
    </source>
</evidence>
<evidence type="ECO:0000255" key="4">
    <source>
        <dbReference type="PROSITE-ProRule" id="PRU00159"/>
    </source>
</evidence>
<evidence type="ECO:0000255" key="5">
    <source>
        <dbReference type="PROSITE-ProRule" id="PRU00191"/>
    </source>
</evidence>
<evidence type="ECO:0000255" key="6">
    <source>
        <dbReference type="PROSITE-ProRule" id="PRU00192"/>
    </source>
</evidence>
<evidence type="ECO:0000255" key="7">
    <source>
        <dbReference type="PROSITE-ProRule" id="PRU10028"/>
    </source>
</evidence>
<evidence type="ECO:0000256" key="8">
    <source>
        <dbReference type="SAM" id="MobiDB-lite"/>
    </source>
</evidence>
<evidence type="ECO:0000269" key="9">
    <source>
    </source>
</evidence>
<evidence type="ECO:0000269" key="10">
    <source>
    </source>
</evidence>
<evidence type="ECO:0000269" key="11">
    <source>
    </source>
</evidence>
<evidence type="ECO:0000269" key="12">
    <source>
    </source>
</evidence>
<evidence type="ECO:0000269" key="13">
    <source>
    </source>
</evidence>
<evidence type="ECO:0000269" key="14">
    <source>
    </source>
</evidence>
<evidence type="ECO:0000269" key="15">
    <source>
    </source>
</evidence>
<evidence type="ECO:0000269" key="16">
    <source>
    </source>
</evidence>
<evidence type="ECO:0000269" key="17">
    <source>
    </source>
</evidence>
<evidence type="ECO:0000269" key="18">
    <source>
    </source>
</evidence>
<evidence type="ECO:0000269" key="19">
    <source>
    </source>
</evidence>
<evidence type="ECO:0000269" key="20">
    <source>
    </source>
</evidence>
<evidence type="ECO:0000269" key="21">
    <source>
    </source>
</evidence>
<evidence type="ECO:0000269" key="22">
    <source>
    </source>
</evidence>
<evidence type="ECO:0000269" key="23">
    <source>
    </source>
</evidence>
<evidence type="ECO:0000269" key="24">
    <source>
    </source>
</evidence>
<evidence type="ECO:0000269" key="25">
    <source>
    </source>
</evidence>
<evidence type="ECO:0000269" key="26">
    <source>
    </source>
</evidence>
<evidence type="ECO:0000269" key="27">
    <source>
    </source>
</evidence>
<evidence type="ECO:0000269" key="28">
    <source>
    </source>
</evidence>
<evidence type="ECO:0000269" key="29">
    <source>
    </source>
</evidence>
<evidence type="ECO:0000269" key="30">
    <source>
    </source>
</evidence>
<evidence type="ECO:0000269" key="31">
    <source>
    </source>
</evidence>
<evidence type="ECO:0000269" key="32">
    <source>
    </source>
</evidence>
<evidence type="ECO:0000269" key="33">
    <source>
    </source>
</evidence>
<evidence type="ECO:0000269" key="34">
    <source>
    </source>
</evidence>
<evidence type="ECO:0000269" key="35">
    <source>
    </source>
</evidence>
<evidence type="ECO:0000269" key="36">
    <source>
    </source>
</evidence>
<evidence type="ECO:0000269" key="37">
    <source>
    </source>
</evidence>
<evidence type="ECO:0000269" key="38">
    <source>
    </source>
</evidence>
<evidence type="ECO:0000269" key="39">
    <source>
    </source>
</evidence>
<evidence type="ECO:0000269" key="40">
    <source>
    </source>
</evidence>
<evidence type="ECO:0000269" key="41">
    <source>
    </source>
</evidence>
<evidence type="ECO:0000269" key="42">
    <source>
    </source>
</evidence>
<evidence type="ECO:0000269" key="43">
    <source>
    </source>
</evidence>
<evidence type="ECO:0000269" key="44">
    <source>
    </source>
</evidence>
<evidence type="ECO:0000269" key="45">
    <source>
    </source>
</evidence>
<evidence type="ECO:0000269" key="46">
    <source>
    </source>
</evidence>
<evidence type="ECO:0000269" key="47">
    <source>
    </source>
</evidence>
<evidence type="ECO:0000269" key="48">
    <source>
    </source>
</evidence>
<evidence type="ECO:0000269" key="49">
    <source>
    </source>
</evidence>
<evidence type="ECO:0000269" key="50">
    <source>
    </source>
</evidence>
<evidence type="ECO:0000269" key="51">
    <source>
    </source>
</evidence>
<evidence type="ECO:0000269" key="52">
    <source>
    </source>
</evidence>
<evidence type="ECO:0000269" key="53">
    <source>
    </source>
</evidence>
<evidence type="ECO:0000269" key="54">
    <source>
    </source>
</evidence>
<evidence type="ECO:0000269" key="55">
    <source>
    </source>
</evidence>
<evidence type="ECO:0000269" key="56">
    <source>
    </source>
</evidence>
<evidence type="ECO:0000269" key="57">
    <source>
    </source>
</evidence>
<evidence type="ECO:0000269" key="58">
    <source>
    </source>
</evidence>
<evidence type="ECO:0000269" key="59">
    <source>
    </source>
</evidence>
<evidence type="ECO:0000269" key="60">
    <source>
    </source>
</evidence>
<evidence type="ECO:0000269" key="61">
    <source>
    </source>
</evidence>
<evidence type="ECO:0000269" key="62">
    <source>
    </source>
</evidence>
<evidence type="ECO:0000269" key="63">
    <source>
    </source>
</evidence>
<evidence type="ECO:0000269" key="64">
    <source>
    </source>
</evidence>
<evidence type="ECO:0000269" key="65">
    <source>
    </source>
</evidence>
<evidence type="ECO:0000269" key="66">
    <source>
    </source>
</evidence>
<evidence type="ECO:0000269" key="67">
    <source>
    </source>
</evidence>
<evidence type="ECO:0000269" key="68">
    <source>
    </source>
</evidence>
<evidence type="ECO:0000269" key="69">
    <source>
    </source>
</evidence>
<evidence type="ECO:0000269" key="70">
    <source>
    </source>
</evidence>
<evidence type="ECO:0000269" key="71">
    <source>
    </source>
</evidence>
<evidence type="ECO:0000269" key="72">
    <source>
    </source>
</evidence>
<evidence type="ECO:0000303" key="73">
    <source>
    </source>
</evidence>
<evidence type="ECO:0000303" key="74">
    <source>
    </source>
</evidence>
<evidence type="ECO:0000305" key="75"/>
<evidence type="ECO:0000305" key="76">
    <source>
    </source>
</evidence>
<evidence type="ECO:0000305" key="77">
    <source>
    </source>
</evidence>
<evidence type="ECO:0000305" key="78">
    <source>
    </source>
</evidence>
<evidence type="ECO:0000312" key="79">
    <source>
        <dbReference type="HGNC" id="HGNC:11283"/>
    </source>
</evidence>
<evidence type="ECO:0007744" key="80">
    <source>
    </source>
</evidence>
<evidence type="ECO:0007744" key="81">
    <source>
    </source>
</evidence>
<evidence type="ECO:0007744" key="82">
    <source>
    </source>
</evidence>
<evidence type="ECO:0007744" key="83">
    <source>
    </source>
</evidence>
<evidence type="ECO:0007829" key="84">
    <source>
        <dbReference type="PDB" id="1FMK"/>
    </source>
</evidence>
<evidence type="ECO:0007829" key="85">
    <source>
        <dbReference type="PDB" id="1SHD"/>
    </source>
</evidence>
<evidence type="ECO:0007829" key="86">
    <source>
        <dbReference type="PDB" id="1Y57"/>
    </source>
</evidence>
<evidence type="ECO:0007829" key="87">
    <source>
        <dbReference type="PDB" id="2BDF"/>
    </source>
</evidence>
<evidence type="ECO:0007829" key="88">
    <source>
        <dbReference type="PDB" id="2SRC"/>
    </source>
</evidence>
<evidence type="ECO:0007829" key="89">
    <source>
        <dbReference type="PDB" id="6ATE"/>
    </source>
</evidence>
<organism>
    <name type="scientific">Homo sapiens</name>
    <name type="common">Human</name>
    <dbReference type="NCBI Taxonomy" id="9606"/>
    <lineage>
        <taxon>Eukaryota</taxon>
        <taxon>Metazoa</taxon>
        <taxon>Chordata</taxon>
        <taxon>Craniata</taxon>
        <taxon>Vertebrata</taxon>
        <taxon>Euteleostomi</taxon>
        <taxon>Mammalia</taxon>
        <taxon>Eutheria</taxon>
        <taxon>Euarchontoglires</taxon>
        <taxon>Primates</taxon>
        <taxon>Haplorrhini</taxon>
        <taxon>Catarrhini</taxon>
        <taxon>Hominidae</taxon>
        <taxon>Homo</taxon>
    </lineage>
</organism>
<name>SRC_HUMAN</name>
<sequence>MGSNKSKPKDASQRRRSLEPAENVHGAGGGAFPASQTPSKPASADGHRGPSAAFAPAAAEPKLFGGFNSSDTVTSPQRAGPLAGGVTTFVALYDYESRTETDLSFKKGERLQIVNNTEGDWWLAHSLSTGQTGYIPSNYVAPSDSIQAEEWYFGKITRRESERLLLNAENPRGTFLVRESETTKGAYCLSVSDFDNAKGLNVKHYKIRKLDSGGFYITSRTQFNSLQQLVAYYSKHADGLCHRLTTVCPTSKPQTQGLAKDAWEIPRESLRLEVKLGQGCFGEVWMGTWNGTTRVAIKTLKPGTMSPEAFLQEAQVMKKLRHEKLVQLYAVVSEEPIYIVTEYMSKGSLLDFLKGETGKYLRLPQLVDMAAQIASGMAYVERMNYVHRDLRAANILVGENLVCKVADFGLARLIEDNEYTARQGAKFPIKWTAPEAALYGRFTIKSDVWSFGILLTELTTKGRVPYPGMVNREVLDQVERGYRMPCPPECPESLHDLMCQCWRKEPEERPTFEYLQAFLEDYFTSTEPQYQPGENL</sequence>